<comment type="function">
    <molecule>Gag-Pol polyprotein</molecule>
    <text evidence="1">Mediates, with Gag polyprotein, the essential events in virion assembly, including binding the plasma membrane, making the protein-protein interactions necessary to create spherical particles, recruiting the viral Env proteins, and packaging the genomic RNA via direct interactions with the RNA packaging sequence (Psi). Gag-Pol polyprotein may regulate its own translation, by the binding genomic RNA in the 5'-UTR. At low concentration, the polyprotein would promote translation, whereas at high concentration, the polyprotein would encapsidate genomic RNA and then shut off translation.</text>
</comment>
<comment type="function">
    <molecule>Matrix protein p17</molecule>
    <text evidence="1 17 23">Targets the polyprotein to the plasma membrane via a multipartite membrane-binding signal, that includes its myristoylated N-terminus (PubMed:16840558). Matrix protein is part of the pre-integration complex. Implicated in the release from host cell mediated by Vpu. Binds to RNA.</text>
</comment>
<comment type="function">
    <molecule>Capsid protein p24</molecule>
    <text evidence="5 26">Forms the conical core that encapsulates the genomic RNA-nucleocapsid complex in the virion. Most core are conical, with only 7% tubular. The core is constituted by capsid protein hexamer subunits. The core is disassembled soon after virion entry (By similarity). Host restriction factors such as TRIM5-alpha or TRIMCyp bind retroviral capsids and cause premature capsid disassembly, leading to blocks in reverse transcription. Capsid restriction by TRIM5 is one of the factors which restricts HIV-1 to the human species. Host PIN1 apparently facilitates the virion uncoating (PubMed:24509437). On the other hand, interactions with PDZD8 or CYPA stabilize the capsid.</text>
</comment>
<comment type="function">
    <molecule>Nucleocapsid protein p7</molecule>
    <text evidence="5">Encapsulates and protects viral dimeric unspliced genomic RNA (gRNA). Binds these RNAs through its zinc fingers. Acts as a nucleic acid chaperone which is involved in rearangement of nucleic acid secondary structure during gRNA retrotranscription. Also facilitates template switch leading to recombination. As part of the polyprotein, participates in gRNA dimerization, packaging, tRNA incorporation and virion assembly.</text>
</comment>
<comment type="function">
    <molecule>Protease</molecule>
    <text evidence="5 8">Aspartyl protease that mediates proteolytic cleavages of Gag and Gag-Pol polyproteins during or shortly after the release of the virion from the plasma membrane. Cleavages take place as an ordered, step-wise cascade to yield mature proteins. This process is called maturation. Displays maximal activity during the budding process just prior to particle release from the cell. Also cleaves Nef and Vif, probably concomitantly with viral structural proteins on maturation of virus particles. Hydrolyzes host EIF4GI and PABP1 in order to shut off the capped cellular mRNA translation. The resulting inhibition of cellular protein synthesis serves to ensure maximal viral gene expression and to evade host immune response. Also mediates cleavage of host YTHDF3. Mediates cleavage of host CARD8, thereby activating the CARD8 inflammasome, leading to the clearance of latent HIV-1 in patient CD4(+) T-cells after viral reactivation; in contrast, HIV-1 can evade CARD8-sensing when its protease remains inactive in infected cells prior to viral budding (By similarity).</text>
</comment>
<comment type="function">
    <molecule>Reverse transcriptase/ribonuclease H</molecule>
    <text evidence="5">Multifunctional enzyme that converts the viral RNA genome into dsDNA in the cytoplasm, shortly after virus entry into the cell. This enzyme displays a DNA polymerase activity that can copy either DNA or RNA templates, and a ribonuclease H (RNase H) activity that cleaves the RNA strand of RNA-DNA heteroduplexes in a partially processive 3' to 5' endonucleasic mode. Conversion of viral genomic RNA into dsDNA requires many steps. A tRNA(3)-Lys binds to the primer-binding site (PBS) situated at the 5'-end of the viral RNA. RT uses the 3' end of the tRNA primer to perform a short round of RNA-dependent minus-strand DNA synthesis. The reading proceeds through the U5 region and ends after the repeated (R) region which is present at both ends of viral RNA. The portion of the RNA-DNA heteroduplex is digested by the RNase H, resulting in a ssDNA product attached to the tRNA primer. This ssDNA/tRNA hybridizes with the identical R region situated at the 3' end of viral RNA. This template exchange, known as minus-strand DNA strong stop transfer, can be either intra- or intermolecular. RT uses the 3' end of this newly synthesized short ssDNA to perform the RNA-dependent minus-strand DNA synthesis of the whole template. RNase H digests the RNA template except for two polypurine tracts (PPTs) situated at the 5'-end and near the center of the genome. It is not clear if both polymerase and RNase H activities are simultaneous. RNase H probably can proceed both in a polymerase-dependent (RNA cut into small fragments by the same RT performing DNA synthesis) and a polymerase-independent mode (cleavage of remaining RNA fragments by free RTs). Secondly, RT performs DNA-directed plus-strand DNA synthesis using the PPTs that have not been removed by RNase H as primers. PPTs and tRNA primers are then removed by RNase H. The 3' and 5' ssDNA PBS regions hybridize to form a circular dsDNA intermediate. Strand displacement synthesis by RT to the PBS and PPT ends produces a blunt ended, linear dsDNA copy of the viral genome that includes long terminal repeats (LTRs) at both ends.</text>
</comment>
<comment type="function">
    <molecule>Integrase</molecule>
    <text evidence="5">Catalyzes viral DNA integration into the host chromosome, by performing a series of DNA cutting and joining reactions. This enzyme activity takes place after virion entry into a cell and reverse transcription of the RNA genome in dsDNA. The first step in the integration process is 3' processing. This step requires a complex comprising the viral genome, matrix protein, Vpr and integrase. This complex is called the pre-integration complex (PIC). The integrase protein removes 2 nucleotides from each 3' end of the viral DNA, leaving recessed CA OH's at the 3' ends. In the second step, the PIC enters cell nucleus. This process is mediated through integrase and Vpr proteins, and allows the virus to infect a non dividing cell. This ability to enter the nucleus is specific of lentiviruses, other retroviruses cannot and rely on cell division to access cell chromosomes. In the third step, termed strand transfer, the integrase protein joins the previously processed 3' ends to the 5' ends of strands of target cellular DNA at the site of integration. The 5'-ends are produced by integrase-catalyzed staggered cuts, 5 bp apart. A Y-shaped, gapped, recombination intermediate results, with the 5'-ends of the viral DNA strands and the 3' ends of target DNA strands remaining unjoined, flanking a gap of 5 bp. The last step is viral DNA integration into host chromosome. This involves host DNA repair synthesis in which the 5 bp gaps between the unjoined strands are filled in and then ligated. Since this process occurs at both cuts flanking the HIV genome, a 5 bp duplication of host DNA is produced at the ends of HIV-1 integration. Alternatively, Integrase may catalyze the excision of viral DNA just after strand transfer, this is termed disintegration.</text>
</comment>
<comment type="catalytic activity">
    <reaction evidence="8">
        <text>Specific for a P1 residue that is hydrophobic, and P1' variable, but often Pro.</text>
        <dbReference type="EC" id="3.4.23.16"/>
    </reaction>
</comment>
<comment type="catalytic activity">
    <reaction evidence="1">
        <text>Endohydrolysis of RNA in RNA/DNA hybrids. Three different cleavage modes: 1. sequence-specific internal cleavage of RNA. Human immunodeficiency virus type 1 and Moloney murine leukemia virus enzymes prefer to cleave the RNA strand one nucleotide away from the RNA-DNA junction. 2. RNA 5'-end directed cleavage 13-19 nucleotides from the RNA end. 3. DNA 3'-end directed cleavage 15-20 nucleotides away from the primer terminus.</text>
        <dbReference type="EC" id="3.1.26.13"/>
    </reaction>
</comment>
<comment type="catalytic activity">
    <reaction evidence="1">
        <text>3'-end directed exonucleolytic cleavage of viral RNA-DNA hybrid.</text>
        <dbReference type="EC" id="3.1.13.2"/>
    </reaction>
</comment>
<comment type="catalytic activity">
    <reaction evidence="9">
        <text>DNA(n) + a 2'-deoxyribonucleoside 5'-triphosphate = DNA(n+1) + diphosphate</text>
        <dbReference type="Rhea" id="RHEA:22508"/>
        <dbReference type="Rhea" id="RHEA-COMP:17339"/>
        <dbReference type="Rhea" id="RHEA-COMP:17340"/>
        <dbReference type="ChEBI" id="CHEBI:33019"/>
        <dbReference type="ChEBI" id="CHEBI:61560"/>
        <dbReference type="ChEBI" id="CHEBI:173112"/>
        <dbReference type="EC" id="2.7.7.49"/>
    </reaction>
</comment>
<comment type="catalytic activity">
    <reaction evidence="9">
        <text>DNA(n) + a 2'-deoxyribonucleoside 5'-triphosphate = DNA(n+1) + diphosphate</text>
        <dbReference type="Rhea" id="RHEA:22508"/>
        <dbReference type="Rhea" id="RHEA-COMP:17339"/>
        <dbReference type="Rhea" id="RHEA-COMP:17340"/>
        <dbReference type="ChEBI" id="CHEBI:33019"/>
        <dbReference type="ChEBI" id="CHEBI:61560"/>
        <dbReference type="ChEBI" id="CHEBI:173112"/>
        <dbReference type="EC" id="2.7.7.7"/>
    </reaction>
</comment>
<comment type="cofactor">
    <cofactor evidence="1">
        <name>Mg(2+)</name>
        <dbReference type="ChEBI" id="CHEBI:18420"/>
    </cofactor>
    <text evidence="1">Binds 2 magnesium ions for reverse transcriptase polymerase activity.</text>
</comment>
<comment type="cofactor">
    <cofactor evidence="1">
        <name>Mg(2+)</name>
        <dbReference type="ChEBI" id="CHEBI:18420"/>
    </cofactor>
    <text evidence="1">Binds 2 magnesium ions for ribonuclease H (RNase H) activity. Substrate-binding is a precondition for magnesium binding.</text>
</comment>
<comment type="cofactor">
    <cofactor evidence="1">
        <name>Mg(2+)</name>
        <dbReference type="ChEBI" id="CHEBI:18420"/>
    </cofactor>
    <text evidence="1">Magnesium ions are required for integrase activity. Binds at least 1, maybe 2 magnesium ions.</text>
</comment>
<comment type="activity regulation">
    <text evidence="1">Protease: The viral protease is inhibited by many synthetic protease inhibitors (PIs), such as amprenavir, atazanavir, indinavir, loprinavir, nelfinavir, ritonavir and saquinavir. Use of protease inhibitors in tritherapy regimens permit more ambitious therapeutic strategies. Reverse transcriptase/ribonuclease H: RT can be inhibited either by nucleoside RT inhibitors (NRTIs) or by non nucleoside RT inhibitors (NNRTIs). NRTIs act as chain terminators, whereas NNRTIs inhibit DNA polymerization by binding a small hydrophobic pocket near the RT active site and inducing an allosteric change in this region. Classical NRTIs are abacavir, adefovir (PMEA), didanosine (ddI), lamivudine (3TC), stavudine (d4T), tenofovir (PMPA), zalcitabine (ddC), and zidovudine (AZT). Classical NNRTIs are atevirdine (BHAP U-87201E), delavirdine, efavirenz (DMP-266), emivirine (I-EBU), and nevirapine (BI-RG-587). The tritherapies used as a basic effective treatment of AIDS associate two NRTIs and one NNRTI.</text>
</comment>
<comment type="subunit">
    <molecule>Matrix protein p17</molecule>
    <text evidence="5 16 21 27">Homotrimer; further assembles as hexamers of trimers (By similarity). Matrix protein p17: Interacts with gp41 (via C-terminus) (PubMed:8918455). Interacts with host CALM1; this interaction induces a conformational change in the Matrix protein, triggering exposure of the myristate group (PubMed:21799007). Interacts with host AP3D1; this interaction allows the polyprotein trafficking to multivesicular bodies during virus assembly (PubMed:15766529). Part of the pre-integration complex (PIC) which is composed of viral genome, matrix protein, Vpr and integrase (By similarity).</text>
</comment>
<comment type="subunit">
    <molecule>Capsid protein p24</molecule>
    <text evidence="5 24 25 28">Homodimer; the homodimer further multimerizes as homohexamers or homopentamers (PubMed:24066695). Interacts with human PPIA/CYPA; This interaction stabilizes the capsid (PubMed:8980234). Interacts with human NUP153 (PubMed:24130490). Interacts with host PDZD8; this interaction stabilizes the capsid (By similarity). Interacts with monkey TRIM5; this interaction destabilizes the capsid (By similarity).</text>
</comment>
<comment type="subunit">
    <molecule>Protease</molecule>
    <text evidence="5">Homodimer, whose active site consists of two apposed aspartic acid residues.</text>
</comment>
<comment type="subunit">
    <molecule>Reverse transcriptase/ribonuclease H</molecule>
    <text evidence="3">Heterodimer of p66 RT and p51 RT (RT p66/p51) (By similarity). Heterodimerization of RT is essential for DNA polymerase activity (By similarity). The overall folding of the subdomains is similar in p66 RT and p51 RT but the spatial arrangements of the subdomains are dramatically different (By similarity).</text>
</comment>
<comment type="subunit">
    <molecule>Integrase</molecule>
    <text evidence="4 5 20">Homotetramer; may further associate as a homohexadecamer (By similarity). Part of the pre-integration complex (PIC) which is composed of viral genome, matrix protein, Vpr and integrase (By similarity). Interacts with human SMARCB1/INI1 and human PSIP1/LEDGF isoform 1 (By similarity). Interacts with human KPNA3; this interaction might play a role in nuclear import of the pre-integration complex (By similarity). Interacts with human NUP153; this interaction might play a role in nuclear import of the pre-integration complex (PubMed:19369352).</text>
</comment>
<comment type="interaction">
    <interactant intactId="EBI-2369107">
        <id>PRO_0000042395</id>
    </interactant>
    <interactant intactId="EBI-2369107">
        <id>PRO_0000042395</id>
        <label>gag-pol</label>
        <dbReference type="UniProtKB" id="P12497"/>
    </interactant>
    <organismsDiffer>false</organismsDiffer>
    <experiments>3</experiments>
</comment>
<comment type="interaction">
    <interactant intactId="EBI-10131955">
        <id>PRO_0000042402</id>
    </interactant>
    <interactant intactId="EBI-5279836">
        <id>O75475-1</id>
        <label>PSIP1</label>
    </interactant>
    <organismsDiffer>true</organismsDiffer>
    <experiments>3</experiments>
</comment>
<comment type="subcellular location">
    <molecule>Gag-Pol polyprotein</molecule>
    <subcellularLocation>
        <location>Host cell membrane</location>
        <topology evidence="19">Lipid-anchor</topology>
    </subcellularLocation>
    <subcellularLocation>
        <location evidence="19">Host endosome</location>
        <location evidence="19">Host multivesicular body</location>
    </subcellularLocation>
    <text evidence="19">These locations are linked to virus assembly sites. The main location is the cell membrane, but under some circumstances, late endosomal compartments can serve as productive sites for virion assembly.</text>
</comment>
<comment type="subcellular location">
    <molecule>Matrix protein p17</molecule>
    <subcellularLocation>
        <location>Virion membrane</location>
        <topology evidence="30">Lipid-anchor</topology>
    </subcellularLocation>
    <subcellularLocation>
        <location evidence="1">Host nucleus</location>
    </subcellularLocation>
    <subcellularLocation>
        <location evidence="1">Host cytoplasm</location>
    </subcellularLocation>
</comment>
<comment type="subcellular location">
    <molecule>Capsid protein p24</molecule>
    <subcellularLocation>
        <location evidence="30">Virion</location>
    </subcellularLocation>
</comment>
<comment type="subcellular location">
    <molecule>Nucleocapsid protein p7</molecule>
    <subcellularLocation>
        <location evidence="30">Virion</location>
    </subcellularLocation>
</comment>
<comment type="subcellular location">
    <molecule>Reverse transcriptase/ribonuclease H</molecule>
    <subcellularLocation>
        <location evidence="30">Virion</location>
    </subcellularLocation>
</comment>
<comment type="subcellular location">
    <molecule>Integrase</molecule>
    <subcellularLocation>
        <location evidence="30">Virion</location>
    </subcellularLocation>
    <subcellularLocation>
        <location evidence="30">Host nucleus</location>
    </subcellularLocation>
    <subcellularLocation>
        <location evidence="30">Host cytoplasm</location>
    </subcellularLocation>
    <text evidence="30">Nuclear at initial phase, cytoplasmic at assembly.</text>
</comment>
<comment type="alternative products">
    <event type="ribosomal frameshifting"/>
    <isoform>
        <id>P12497-1</id>
        <name>Gag-Pol polyprotein</name>
        <sequence type="displayed"/>
    </isoform>
    <isoform>
        <id>P12493-1</id>
        <name>Gag polyprotein</name>
        <sequence type="external"/>
    </isoform>
    <text>Translation results in the formation of the Gag polyprotein most of the time. Ribosomal frameshifting at the gag-pol genes boundary occurs at low frequency and produces the Gag-Pol polyprotein. This strategy of translation probably allows the virus to modulate the quantity of each viral protein. Maintenance of a correct Gag to Gag-Pol ratio is essential for RNA dimerization and viral infectivity.</text>
</comment>
<comment type="domain">
    <molecule>Reverse transcriptase/ribonuclease H</molecule>
    <text evidence="1">RT is structured in five subdomains: finger, palm, thumb, connection and RNase H. Within the palm subdomain, the 'primer grip' region is thought to be involved in the positioning of the primer terminus for accommodating the incoming nucleotide. The RNase H domain stabilizes the association of RT with primer-template.</text>
</comment>
<comment type="domain">
    <molecule>Reverse transcriptase/ribonuclease H</molecule>
    <text evidence="1">The tryptophan repeat motif is involved in RT p66/p51 dimerization (By similarity).</text>
</comment>
<comment type="domain">
    <molecule>Integrase</molecule>
    <text evidence="1">The core domain contains the D-x(n)-D-x(35)-E motif, named for the phylogenetically conserved glutamic acid and aspartic acid residues and the invariant 35 amino acid spacing between the second and third acidic residues. Each acidic residue of the D,D(35)E motif is independently essential for the 3'-processing and strand transfer activities of purified integrase protein.</text>
</comment>
<comment type="PTM">
    <molecule>Gag-Pol polyprotein</molecule>
    <text evidence="9 22">Specific enzymatic cleavages by the viral protease yield mature proteins. The protease is released by autocatalytic cleavage. The polyprotein is cleaved during and after budding, this process is termed maturation. Proteolytic cleavage of p66 RT removes the RNase H domain to yield the p51 RT subunit. Nucleocapsid protein p7 might be further cleaved after virus entry.</text>
</comment>
<comment type="PTM">
    <molecule>Matrix protein p17</molecule>
    <text evidence="5">Tyrosine phosphorylated presumably in the virion by a host kinase. Phosphorylation is apparently not a major regulator of membrane association.</text>
</comment>
<comment type="PTM">
    <molecule>Capsid protein p24</molecule>
    <text evidence="26">Phosphorylated possibly by host MAPK1; this phosphorylation is necessary for Pin1-mediated virion uncoating.</text>
</comment>
<comment type="PTM">
    <molecule>Nucleocapsid protein p7</molecule>
    <text evidence="2">Methylated by host PRMT6, impairing its function by reducing RNA annealing and the initiation of reverse transcription.</text>
</comment>
<comment type="miscellaneous">
    <molecule>Reverse transcriptase/ribonuclease H</molecule>
    <text evidence="1">Error-prone enzyme that lacks a proof-reading function. High mutations rate is a direct consequence of this characteristic. RT also displays frequent template switching leading to high recombination rate. Recombination mostly occurs between homologous regions of the two copackaged RNA genomes. If these two RNA molecules derive from different viral strains, reverse transcription will give rise to highly recombinated proviral DNAs.</text>
</comment>
<comment type="miscellaneous">
    <text evidence="1">HIV-1 lineages are divided in three main groups, M (for Major), O (for Outlier), and N (for New, or Non-M, Non-O). The vast majority of strains found worldwide belong to the group M. Group O seems to be endemic to and largely confined to Cameroon and neighboring countries in West Central Africa, where these viruses represent a small minority of HIV-1 strains. The group N is represented by a limited number of isolates from Cameroonian persons. The group M is further subdivided in 9 clades or subtypes (A to D, F to H, J and K).</text>
</comment>
<comment type="miscellaneous">
    <text evidence="1">Resistance to inhibitors associated with mutations are observed both in viral protease and in reverse transcriptase. Most of the time, single mutations confer only a modest reduction in drug susceptibility. Combination of several mutations is usually required to develop a high-level drug resistance. These mutations are predominantly found in clade B viruses and not in other genotypes. They are listed in the clade B representative isolate HXB2 (AC P04585).</text>
</comment>
<comment type="miscellaneous">
    <molecule>Isoform Gag-Pol polyprotein</molecule>
    <text>Produced by -1 ribosomal frameshifting.</text>
</comment>
<comment type="online information" name="HIV drug resistance mutations">
    <link uri="https://www.iasusa.org/hiv-drug-resistance/hiv-drug-resistance-mutations/"/>
</comment>
<comment type="online information" name="hivdb">
    <link uri="https://hivdb.stanford.edu"/>
    <text>HIV drug resistance database</text>
</comment>
<keyword id="KW-0002">3D-structure</keyword>
<keyword id="KW-1073">Activation of host caspases by virus</keyword>
<keyword id="KW-0014">AIDS</keyword>
<keyword id="KW-0064">Aspartyl protease</keyword>
<keyword id="KW-0167">Capsid protein</keyword>
<keyword id="KW-0229">DNA integration</keyword>
<keyword id="KW-0233">DNA recombination</keyword>
<keyword id="KW-0238">DNA-binding</keyword>
<keyword id="KW-0239">DNA-directed DNA polymerase</keyword>
<keyword id="KW-0255">Endonuclease</keyword>
<keyword id="KW-1262">Eukaryotic host gene expression shutoff by virus</keyword>
<keyword id="KW-1193">Eukaryotic host translation shutoff by virus</keyword>
<keyword id="KW-1032">Host cell membrane</keyword>
<keyword id="KW-1035">Host cytoplasm</keyword>
<keyword id="KW-1039">Host endosome</keyword>
<keyword id="KW-1190">Host gene expression shutoff by virus</keyword>
<keyword id="KW-1043">Host membrane</keyword>
<keyword id="KW-1048">Host nucleus</keyword>
<keyword id="KW-0945">Host-virus interaction</keyword>
<keyword id="KW-0378">Hydrolase</keyword>
<keyword id="KW-0446">Lipid-binding</keyword>
<keyword id="KW-0449">Lipoprotein</keyword>
<keyword id="KW-0460">Magnesium</keyword>
<keyword id="KW-0472">Membrane</keyword>
<keyword id="KW-0479">Metal-binding</keyword>
<keyword id="KW-1119">Modulation of host cell apoptosis by virus</keyword>
<keyword id="KW-0511">Multifunctional enzyme</keyword>
<keyword id="KW-0519">Myristate</keyword>
<keyword id="KW-0540">Nuclease</keyword>
<keyword id="KW-0548">Nucleotidyltransferase</keyword>
<keyword id="KW-0597">Phosphoprotein</keyword>
<keyword id="KW-0645">Protease</keyword>
<keyword id="KW-0677">Repeat</keyword>
<keyword id="KW-0688">Ribosomal frameshifting</keyword>
<keyword id="KW-0694">RNA-binding</keyword>
<keyword id="KW-0695">RNA-directed DNA polymerase</keyword>
<keyword id="KW-0808">Transferase</keyword>
<keyword id="KW-1179">Viral genome integration</keyword>
<keyword id="KW-0543">Viral nucleoprotein</keyword>
<keyword id="KW-1163">Viral penetration into host nucleus</keyword>
<keyword id="KW-1188">Viral release from host cell</keyword>
<keyword id="KW-0946">Virion</keyword>
<keyword id="KW-0917">Virion maturation</keyword>
<keyword id="KW-1160">Virus entry into host cell</keyword>
<keyword id="KW-0862">Zinc</keyword>
<keyword id="KW-0863">Zinc-finger</keyword>
<accession>P12497</accession>
<name>POL_HV1N5</name>
<reference key="1">
    <citation type="submission" date="1988-06" db="EMBL/GenBank/DDBJ databases">
        <authorList>
            <person name="Buckler C.E."/>
            <person name="Buckler-White A.J."/>
            <person name="Willey R.L."/>
            <person name="McCoy J."/>
        </authorList>
    </citation>
    <scope>NUCLEOTIDE SEQUENCE [GENOMIC RNA]</scope>
    <source>
        <strain>Clone pNL4-3</strain>
    </source>
</reference>
<reference key="2">
    <citation type="submission" date="2010-05" db="EMBL/GenBank/DDBJ databases">
        <authorList>
            <person name="Strebel K.J."/>
            <person name="Martin M.A."/>
        </authorList>
    </citation>
    <scope>SEQUENCE REVISION TO 545</scope>
</reference>
<reference key="3">
    <citation type="journal article" date="1996" name="EMBO J.">
        <title>Direct interaction between the envelope and matrix proteins of HIV-1.</title>
        <authorList>
            <person name="Cosson P."/>
        </authorList>
    </citation>
    <scope>INTERACTION WITH HOST GP41 (MATRIX PROTEIN P17)</scope>
</reference>
<reference key="4">
    <citation type="journal article" date="2005" name="Cell">
        <title>AP-3 directs the intracellular trafficking of HIV-1 Gag and plays a key role in particle assembly.</title>
        <authorList>
            <person name="Dong X."/>
            <person name="Li H."/>
            <person name="Derdowski A."/>
            <person name="Ding L."/>
            <person name="Burnett A."/>
            <person name="Chen X."/>
            <person name="Peters T.R."/>
            <person name="Dermody T.S."/>
            <person name="Woodruff E."/>
            <person name="Wang J.J."/>
            <person name="Spearman P."/>
        </authorList>
    </citation>
    <scope>INTERACTION WITH HUMAN AP3D1 (MATRIX PROTEIN P17)</scope>
</reference>
<reference key="5">
    <citation type="journal article" date="2009" name="J. Virol.">
        <title>Integrase interacts with nucleoporin NUP153 to mediate the nuclear import of human immunodeficiency virus type 1.</title>
        <authorList>
            <person name="Woodward C.L."/>
            <person name="Prakobwanakit S."/>
            <person name="Mosessian S."/>
            <person name="Chow S.A."/>
        </authorList>
    </citation>
    <scope>INTERACTION WITH HUMAN NUP153 (INTEGRASE)</scope>
    <source>
        <strain>Clone pNL4-3</strain>
    </source>
</reference>
<reference key="6">
    <citation type="journal article" date="2009" name="Virology">
        <title>Mutation of critical serine residues in HIV-1 matrix result in an envelope incorporation defect which can be rescued by truncation of the gp41 cytoplasmic tail.</title>
        <authorList>
            <person name="Bhatia A.K."/>
            <person name="Kaushik R."/>
            <person name="Campbell N.A."/>
            <person name="Pontow S.E."/>
            <person name="Ratner L."/>
        </authorList>
    </citation>
    <scope>MUTAGENESIS OF SER-9; SER-67; SER-72 AND SER-77</scope>
</reference>
<reference key="7">
    <citation type="journal article" date="2009" name="J. Virol.">
        <title>Evidence that productive human immunodeficiency virus type 1 assembly can occur in an intracellular compartment.</title>
        <authorList>
            <person name="Joshi A."/>
            <person name="Ablan S.D."/>
            <person name="Soheilian F."/>
            <person name="Nagashima K."/>
            <person name="Freed E.O."/>
        </authorList>
    </citation>
    <scope>SUBCELLULAR LOCATION (GAG-POL POLYPROTEIN)</scope>
</reference>
<reference key="8">
    <citation type="journal article" date="2011" name="J. Biol. Chem.">
        <title>NMR, biophysical, and biochemical studies reveal the minimal Calmodulin binding domain of the HIV-1 matrix protein.</title>
        <authorList>
            <person name="Samal A.B."/>
            <person name="Ghanam R.H."/>
            <person name="Fernandez T.F."/>
            <person name="Monroe E.B."/>
            <person name="Saad J.S."/>
        </authorList>
    </citation>
    <scope>INTERACTION WITH RAT CALM1 (MATRIX PROTEIN P17)</scope>
</reference>
<reference key="9">
    <citation type="journal article" date="2012" name="J. Biol. Chem.">
        <title>Context surrounding processing sites is crucial in determining cleavage rate of a subset of processing sites in HIV-1 Gag and Gag-Pro-Pol polyprotein precursors by viral protease.</title>
        <authorList>
            <person name="Lee S.K."/>
            <person name="Potempa M."/>
            <person name="Kolli M."/>
            <person name="Ozen A."/>
            <person name="Schiffer C.A."/>
            <person name="Swanstrom R."/>
        </authorList>
    </citation>
    <scope>PROTEOLYTIC PROCESSING (GAG-POL POLYPROTEIN)</scope>
</reference>
<reference key="10">
    <citation type="journal article" date="2013" name="PLoS Pathog.">
        <title>Nucleoporin NUP153 phenylalanine-glycine motifs engage a common binding pocket within the HIV-1 capsid protein to mediate lentiviral infectivity.</title>
        <authorList>
            <person name="Matreyek K.A."/>
            <person name="Yucel S.S."/>
            <person name="Li X."/>
            <person name="Engelman A."/>
        </authorList>
    </citation>
    <scope>INTERACTION WITH HUMAN NUP153 (CAPSID PROTEIN P24)</scope>
    <source>
        <strain>Clone pNL4-3</strain>
    </source>
</reference>
<reference key="11">
    <citation type="journal article" date="2013" name="J. Am. Chem. Soc.">
        <title>Structure and dynamics of full-length HIV-1 capsid protein in solution.</title>
        <authorList>
            <person name="Deshmukh L."/>
            <person name="Schwieters C.D."/>
            <person name="Grishaev A."/>
            <person name="Ghirlando R."/>
            <person name="Baber J.L."/>
            <person name="Clore G.M."/>
        </authorList>
    </citation>
    <scope>SUBUNIT (CAPSID PROTEIN P24)</scope>
</reference>
<reference key="12">
    <citation type="journal article" date="2013" name="J. Virol.">
        <title>Evidence in support of RNA-mediated inhibition of phosphatidylserine-dependent HIV-1 Gag membrane binding in cells.</title>
        <authorList>
            <person name="Chukkapalli V."/>
            <person name="Inlora J."/>
            <person name="Todd G.C."/>
            <person name="Ono A."/>
        </authorList>
    </citation>
    <scope>RNA-BINDING (MATRIX PROTEIN P17)</scope>
</reference>
<reference key="13">
    <citation type="journal article" date="2014" name="J. Gen. Virol.">
        <title>Phosphorylation of human immunodeficiency virus type 1 capsid protein at serine 16, required for peptidyl-prolyl isomerase-dependent uncoating, is mediated by virion-incorporated extracellular signal-regulated kinase 2.</title>
        <authorList>
            <person name="Dochi T."/>
            <person name="Nakano T."/>
            <person name="Inoue M."/>
            <person name="Takamune N."/>
            <person name="Shoji S."/>
            <person name="Sano K."/>
            <person name="Misumi S."/>
        </authorList>
    </citation>
    <scope>PHOSPHORYLATION AT SER-148 (CAPSID PROTEIN P24)</scope>
</reference>
<reference key="14">
    <citation type="journal article" date="1996" name="Curr. Top. Microbiol. Immunol.">
        <title>Proteolytic processing and particle maturation.</title>
        <authorList>
            <person name="Vogt V.M."/>
        </authorList>
    </citation>
    <scope>REVIEW</scope>
</reference>
<reference key="15">
    <citation type="journal article" date="1999" name="J. Mol. Biol.">
        <title>Structural biology of HIV.</title>
        <authorList>
            <person name="Turner B.G."/>
            <person name="Summers M.F."/>
        </authorList>
    </citation>
    <scope>REVIEW</scope>
</reference>
<reference key="16">
    <citation type="journal article" date="2001" name="Annu. Rev. Genet.">
        <title>Mechanisms of retroviral recombination.</title>
        <authorList>
            <person name="Negroni M."/>
            <person name="Buc H."/>
        </authorList>
    </citation>
    <scope>REVIEW</scope>
</reference>
<reference key="17">
    <citation type="journal article" date="2002" name="Genome Biol.">
        <title>Retroviral proteases.</title>
        <authorList>
            <person name="Dunn B.M."/>
            <person name="Goodenow M.M."/>
            <person name="Gustchina A."/>
            <person name="Wlodawer A."/>
        </authorList>
    </citation>
    <scope>REVIEW</scope>
</reference>
<reference key="18">
    <citation type="journal article" date="2003" name="Biochim. Biophys. Acta">
        <title>Role of HIV-1 Gag domains in viral assembly.</title>
        <authorList>
            <person name="Scarlata S."/>
            <person name="Carter C."/>
        </authorList>
    </citation>
    <scope>REVIEW</scope>
</reference>
<reference key="19">
    <citation type="journal article" date="1989" name="Nature">
        <title>Three-dimensional structure of aspartyl protease from human immunodeficiency virus HIV-1.</title>
        <authorList>
            <person name="Navia M.A."/>
            <person name="Fitzgerald P.M.D."/>
            <person name="McKeever B.M."/>
            <person name="Leu C.-T."/>
            <person name="Heimbach J.C."/>
            <person name="Herber W.K."/>
            <person name="Sigal I.S."/>
            <person name="Darke P.L."/>
            <person name="Springer J.P."/>
        </authorList>
    </citation>
    <scope>X-RAY CRYSTALLOGRAPHY (3.0 ANGSTROMS) OF 489-587</scope>
</reference>
<reference key="20">
    <citation type="journal article" date="1989" name="Science">
        <title>Conserved folding in retroviral proteases: crystal structure of a synthetic HIV-1 protease.</title>
        <authorList>
            <person name="Wlodawer A."/>
            <person name="Miller M."/>
            <person name="Jaskolski M."/>
            <person name="Sathyanarayana B.K."/>
            <person name="Baldwin E."/>
            <person name="Weber I.T."/>
            <person name="Selk L.M."/>
            <person name="Clawson L."/>
            <person name="Schneider J."/>
            <person name="Kent S.B.H."/>
        </authorList>
    </citation>
    <scope>X-RAY CRYSTALLOGRAPHY (2.0 ANGSTROMS) OF 489-587</scope>
</reference>
<reference key="21">
    <citation type="journal article" date="1990" name="J. Biol. Chem.">
        <title>Crystallographic analysis of a complex between human immunodeficiency virus type 1 protease and acetyl-pepstatin at 2.0-A resolution.</title>
        <authorList>
            <person name="Fitzgerald P.M.D."/>
            <person name="McKeever B.M."/>
            <person name="van Middlesworth J.F."/>
            <person name="Springer J.P."/>
            <person name="Heimbach J.C."/>
            <person name="Leu C.-T."/>
            <person name="Herber W.K."/>
            <person name="Dixon R.A.F."/>
            <person name="Darke P.L."/>
        </authorList>
    </citation>
    <scope>X-RAY CRYSTALLOGRAPHY (2.0 ANGSTROMS) OF 489-587</scope>
</reference>
<reference key="22">
    <citation type="journal article" date="1990" name="Science">
        <title>Design, activity, and 2.8 A crystal structure of a C2 symmetric inhibitor complexed to HIV-1 protease.</title>
        <authorList>
            <person name="Erickson J."/>
            <person name="Neidhart D.J."/>
            <person name="Vandrie J."/>
            <person name="Kempf D.J."/>
            <person name="Wang X.C."/>
            <person name="Norbeck D.W."/>
            <person name="Plattner J.J."/>
            <person name="Rittenhouse J.W."/>
            <person name="Turon M."/>
            <person name="Wideburg N.E."/>
            <person name="Kohlbrenner W.E."/>
            <person name="Simmer R."/>
            <person name="Helfrich R."/>
            <person name="Paul D.A."/>
            <person name="Knigge M."/>
        </authorList>
    </citation>
    <scope>X-RAY CRYSTALLOGRAPHY (2.8 ANGSTROMS) OF 489-587</scope>
</reference>
<reference key="23">
    <citation type="journal article" date="1990" name="AIDS Res. Hum. Retroviruses">
        <title>Expression in Escherichia coli and purification of human immunodeficiency virus type 1 capsid protein (p24).</title>
        <authorList>
            <person name="Ehrlich L.S."/>
            <person name="Krausslich H.G."/>
            <person name="Wimmer E."/>
            <person name="Carter C.A."/>
        </authorList>
    </citation>
    <scope>X-RAY CRYSTALLOGRAPHY (3.7 ANGSTROMS) OF 133-283</scope>
</reference>
<reference key="24">
    <citation type="journal article" date="1994" name="J. Mol. Biol.">
        <title>Three-dimensional structure of the human immunodeficiency virus type 1 matrix protein.</title>
        <authorList>
            <person name="Massiah M.A."/>
            <person name="Starich M.R."/>
            <person name="Paschall C."/>
            <person name="Summers M.F."/>
            <person name="Christensen A.M."/>
            <person name="Sundquist W.I."/>
        </authorList>
    </citation>
    <scope>STRUCTURE BY NMR OF 1-132</scope>
</reference>
<reference key="25">
    <citation type="journal article" date="1994" name="J. Biol. Chem.">
        <title>Crystal structure at 1.9-A resolution of human immunodeficiency virus (HIV) II protease complexed with L-735,524, an orally bioavailable inhibitor of the HIV proteases.</title>
        <authorList>
            <person name="Chen Z."/>
            <person name="Li Y."/>
            <person name="Chen E."/>
            <person name="Hall D.L."/>
            <person name="Darke P.L."/>
            <person name="Culberson C."/>
            <person name="Shafer J.A."/>
            <person name="Kuo L.C."/>
        </authorList>
    </citation>
    <scope>X-RAY CRYSTALLOGRAPHY (1.9 ANGSTROMS) OF 501-599 IN COMPLEX WITH THE INHIBITOR L-736,524</scope>
</reference>
<reference key="26">
    <citation type="journal article" date="1994" name="Science">
        <title>Crystal structure of the catalytic domain of HIV-1 integrase: similarity to other polynucleotidyl transferases.</title>
        <authorList>
            <person name="Dyda F."/>
            <person name="Hickman A.B."/>
            <person name="Jenkins T.M."/>
            <person name="Engelman A."/>
            <person name="Craigie R."/>
            <person name="Davies D.R."/>
        </authorList>
    </citation>
    <scope>X-RAY CRYSTALLOGRAPHY (2.3 ANGSTROMS) OF 1197-1359</scope>
</reference>
<reference key="27">
    <citation type="journal article" date="1996" name="Proc. Natl. Acad. Sci. U.S.A.">
        <title>Crystal structures of the trimeric human immunodeficiency virus type 1 matrix protein: implications for membrane association and assembly.</title>
        <authorList>
            <person name="Hill C.P."/>
            <person name="Worthylake D.K."/>
            <person name="Bancroft D.P."/>
            <person name="Christensen A.M."/>
            <person name="Sundquist W.I."/>
        </authorList>
    </citation>
    <scope>X-RAY CRYSTALLOGRAPHY (2.3 ANGSTROMS) OF 1-132</scope>
</reference>
<reference key="28">
    <citation type="journal article" date="1996" name="Cell">
        <title>Crystal structure of human cyclophilin A bound to the amino-terminal domain of HIV-1 capsid.</title>
        <authorList>
            <person name="Gamble T.R."/>
            <person name="Vajdos F.F."/>
            <person name="Yoo S."/>
            <person name="Worthylake D.K."/>
            <person name="Houseweart M."/>
            <person name="Sundquist W.I."/>
            <person name="Hill C.P."/>
        </authorList>
    </citation>
    <scope>X-RAY CRYSTALLOGRAPHY (2.36 ANGSTROMS) OF 133-277</scope>
    <scope>INTERACTION WITH HUMAN PPIA/CYPA (CAPSID PROTEIN P24)</scope>
</reference>
<reference key="29">
    <citation type="journal article" date="1996" name="FEBS Lett.">
        <title>The catalytic domain of human immunodeficiency virus integrase: ordered active site in the F185H mutant.</title>
        <authorList>
            <person name="Bujacz G."/>
            <person name="Alexandratos J."/>
            <person name="Qing Z.L."/>
            <person name="Clement-Mella C."/>
            <person name="Wlodawer A."/>
        </authorList>
    </citation>
    <scope>X-RAY CRYSTALLOGRAPHY (2.6 ANGSTROMS) OF 1197-1359</scope>
    <scope>ACTIVE SITES (INTEGRASE)</scope>
</reference>
<reference key="30">
    <citation type="journal article" date="1997" name="Science">
        <title>Structure of the carboxyl-terminal dimerization domain of the HIV-1 capsid protein.</title>
        <authorList>
            <person name="Gamble T.R."/>
            <person name="Yoo S."/>
            <person name="Vajdos F.F."/>
            <person name="von Schwedler U.K."/>
            <person name="Worthylake D.K."/>
            <person name="Wang H."/>
            <person name="McCutcheon J.P."/>
            <person name="Sundquist W.I."/>
            <person name="Hill C.P."/>
        </authorList>
    </citation>
    <scope>X-RAY CRYSTALLOGRAPHY (2.6 ANGSTROMS) OF 278-377</scope>
</reference>
<reference key="31">
    <citation type="journal article" date="1997" name="Nat. Struct. Biol.">
        <title>Solution structure of the N-terminal zinc binding domain of HIV-1 integrase.</title>
        <authorList>
            <person name="Cai M."/>
            <person name="Zheng R."/>
            <person name="Caffrey M."/>
            <person name="Craigie R."/>
            <person name="Clore G.M."/>
            <person name="Gronenborn A.M."/>
        </authorList>
    </citation>
    <scope>STRUCTURE BY NMR OF 1148-1202</scope>
</reference>
<reference key="32">
    <citation type="journal article" date="1998" name="Proc. Natl. Acad. Sci. U.S.A.">
        <title>Three new structures of the core domain of HIV-1 integrase: an active site that binds magnesium.</title>
        <authorList>
            <person name="Goldgur Y."/>
            <person name="Dyda F."/>
            <person name="Hickman A.B."/>
            <person name="Jenkins T.M."/>
            <person name="Craigie R."/>
            <person name="Davies D.R."/>
        </authorList>
    </citation>
    <scope>X-RAY CRYSTALLOGRAPHY (1.95 ANGSTROMS) OF 1197-1356</scope>
</reference>
<reference key="33">
    <citation type="journal article" date="1999" name="Biochemistry">
        <title>The mobility of an HIV-1 integrase active site loop is correlated with catalytic activity.</title>
        <authorList>
            <person name="Greenwald J."/>
            <person name="Le V."/>
            <person name="Butler S.L."/>
            <person name="Bushman F.D."/>
            <person name="Choe S."/>
        </authorList>
    </citation>
    <scope>X-RAY CRYSTALLOGRAPHY (1.7 ANGSTROMS) OF 1197-1359</scope>
</reference>
<reference key="34">
    <citation type="journal article" date="2002" name="Nat. Struct. Biol.">
        <title>Structure of the N-terminal 283-residue fragment of the immature HIV-1 Gag polyprotein.</title>
        <authorList>
            <person name="Tang C."/>
            <person name="Ndassa Y."/>
            <person name="Summers M.F."/>
        </authorList>
    </citation>
    <scope>STRUCTURE BY NMR OF 133-283</scope>
</reference>
<reference key="35">
    <citation type="journal article" date="2004" name="Proc. Natl. Acad. Sci. U.S.A.">
        <title>Entropic switch regulates myristate exposure in the HIV-1 matrix protein.</title>
        <authorList>
            <person name="Tang C."/>
            <person name="Loeliger E."/>
            <person name="Luncsford P."/>
            <person name="Kinde I."/>
            <person name="Beckett D."/>
            <person name="Summers M.F."/>
        </authorList>
    </citation>
    <scope>STRUCTURE BY NMR OF 1-132</scope>
</reference>
<reference key="36">
    <citation type="journal article" date="2006" name="Proc. Natl. Acad. Sci. U.S.A.">
        <title>Structural basis for targeting HIV-1 Gag proteins to the plasma membrane for virus assembly.</title>
        <authorList>
            <person name="Saad J.S."/>
            <person name="Miller J."/>
            <person name="Tai J."/>
            <person name="Kim A."/>
            <person name="Ghanam R.H."/>
            <person name="Summers M.F."/>
        </authorList>
    </citation>
    <scope>STRUCTURE BY NMR OF 2-132</scope>
    <scope>INTERACTION WITH PHOSPHATIDYLINOSITOL 4,5-BISPHOSPHATE (MATRIX PROTEIN P17)</scope>
    <scope>FUNCTION (MATRIX PROTEIN P17)</scope>
</reference>
<feature type="initiator methionine" description="Removed; by host" evidence="1">
    <location>
        <position position="1"/>
    </location>
</feature>
<feature type="chain" id="PRO_0000261276" description="Gag-Pol polyprotein">
    <location>
        <begin position="2"/>
        <end position="1435"/>
    </location>
</feature>
<feature type="chain" id="PRO_0000042394" description="Matrix protein p17" evidence="1">
    <location>
        <begin position="2"/>
        <end position="132"/>
    </location>
</feature>
<feature type="chain" id="PRO_0000042395" description="Capsid protein p24" evidence="1">
    <location>
        <begin position="133"/>
        <end position="363"/>
    </location>
</feature>
<feature type="peptide" id="PRO_0000042396" description="Spacer peptide 1" evidence="1">
    <location>
        <begin position="364"/>
        <end position="377"/>
    </location>
</feature>
<feature type="chain" id="PRO_0000042397" description="Nucleocapsid protein p7" evidence="1">
    <location>
        <begin position="378"/>
        <end position="432"/>
    </location>
</feature>
<feature type="peptide" id="PRO_0000246725" description="Transframe peptide" evidence="6">
    <location>
        <begin position="433"/>
        <end position="440"/>
    </location>
</feature>
<feature type="chain" id="PRO_0000042398" description="p6-pol" evidence="6">
    <location>
        <begin position="441"/>
        <end position="488"/>
    </location>
</feature>
<feature type="chain" id="PRO_0000038660" description="Protease" evidence="1">
    <location>
        <begin position="489"/>
        <end position="587"/>
    </location>
</feature>
<feature type="chain" id="PRO_0000042399" description="Reverse transcriptase/ribonuclease H" evidence="1">
    <location>
        <begin position="588"/>
        <end position="1147"/>
    </location>
</feature>
<feature type="chain" id="PRO_0000042400" description="p51 RT" evidence="1">
    <location>
        <begin position="588"/>
        <end position="1027"/>
    </location>
</feature>
<feature type="chain" id="PRO_0000042401" description="p15" evidence="1">
    <location>
        <begin position="1028"/>
        <end position="1147"/>
    </location>
</feature>
<feature type="chain" id="PRO_0000042402" description="Integrase" evidence="1">
    <location>
        <begin position="1148"/>
        <end position="1435"/>
    </location>
</feature>
<feature type="domain" description="Peptidase A2" evidence="8">
    <location>
        <begin position="508"/>
        <end position="577"/>
    </location>
</feature>
<feature type="domain" description="Reverse transcriptase" evidence="9">
    <location>
        <begin position="631"/>
        <end position="821"/>
    </location>
</feature>
<feature type="domain" description="RNase H type-1" evidence="10">
    <location>
        <begin position="1021"/>
        <end position="1144"/>
    </location>
</feature>
<feature type="domain" description="Integrase catalytic" evidence="12">
    <location>
        <begin position="1201"/>
        <end position="1351"/>
    </location>
</feature>
<feature type="zinc finger region" description="CCHC-type 1" evidence="7">
    <location>
        <begin position="390"/>
        <end position="407"/>
    </location>
</feature>
<feature type="zinc finger region" description="CCHC-type 2" evidence="7">
    <location>
        <begin position="411"/>
        <end position="428"/>
    </location>
</feature>
<feature type="zinc finger region" description="Integrase-type" evidence="11">
    <location>
        <begin position="1150"/>
        <end position="1191"/>
    </location>
</feature>
<feature type="DNA-binding region" description="Integrase-type" evidence="13">
    <location>
        <begin position="1370"/>
        <end position="1417"/>
    </location>
</feature>
<feature type="region of interest" description="Interaction with Gp41" evidence="27">
    <location>
        <begin position="7"/>
        <end position="31"/>
    </location>
</feature>
<feature type="region of interest" description="Interaction with host CALM1" evidence="5">
    <location>
        <begin position="8"/>
        <end position="43"/>
    </location>
</feature>
<feature type="region of interest" description="Interaction with host AP3D1" evidence="16">
    <location>
        <begin position="12"/>
        <end position="19"/>
    </location>
</feature>
<feature type="region of interest" description="Interaction with membrane phosphatidylinositol 4,5-bisphosphate and RNA" evidence="17">
    <location>
        <begin position="14"/>
        <end position="33"/>
    </location>
</feature>
<feature type="region of interest" description="Interaction with membrane phosphatidylinositol 4,5-bisphosphate" evidence="17">
    <location>
        <begin position="73"/>
        <end position="77"/>
    </location>
</feature>
<feature type="region of interest" description="Disordered" evidence="15">
    <location>
        <begin position="106"/>
        <end position="128"/>
    </location>
</feature>
<feature type="region of interest" description="Interaction with human PPIA/CYPA and NUP153" evidence="20 25 28">
    <location>
        <begin position="189"/>
        <end position="227"/>
    </location>
</feature>
<feature type="region of interest" description="Dimerization/Multimerization of capsid protein p24" evidence="5">
    <location>
        <begin position="277"/>
        <end position="363"/>
    </location>
</feature>
<feature type="region of interest" description="Disordered" evidence="15">
    <location>
        <begin position="444"/>
        <end position="464"/>
    </location>
</feature>
<feature type="region of interest" description="Dimerization of protease" evidence="5">
    <location>
        <begin position="489"/>
        <end position="493"/>
    </location>
</feature>
<feature type="region of interest" description="Dimerization of protease" evidence="5">
    <location>
        <begin position="537"/>
        <end position="543"/>
    </location>
</feature>
<feature type="region of interest" description="Dimerization of protease" evidence="5">
    <location>
        <begin position="576"/>
        <end position="588"/>
    </location>
</feature>
<feature type="region of interest" description="RT 'primer grip'" evidence="1">
    <location>
        <begin position="814"/>
        <end position="822"/>
    </location>
</feature>
<feature type="short sequence motif" description="Nuclear export signal" evidence="1">
    <location>
        <begin position="16"/>
        <end position="22"/>
    </location>
</feature>
<feature type="short sequence motif" description="Nuclear localization signal" evidence="1">
    <location>
        <begin position="26"/>
        <end position="32"/>
    </location>
</feature>
<feature type="short sequence motif" description="Tryptophan repeat motif" evidence="1">
    <location>
        <begin position="985"/>
        <end position="1001"/>
    </location>
</feature>
<feature type="active site" description="For protease activity; shared with dimeric partner" evidence="14">
    <location>
        <position position="513"/>
    </location>
</feature>
<feature type="binding site" evidence="1">
    <location>
        <position position="697"/>
    </location>
    <ligand>
        <name>Mg(2+)</name>
        <dbReference type="ChEBI" id="CHEBI:18420"/>
        <label>1</label>
        <note>catalytic; for reverse transcriptase activity</note>
    </ligand>
</feature>
<feature type="binding site" evidence="1">
    <location>
        <position position="772"/>
    </location>
    <ligand>
        <name>Mg(2+)</name>
        <dbReference type="ChEBI" id="CHEBI:18420"/>
        <label>1</label>
        <note>catalytic; for reverse transcriptase activity</note>
    </ligand>
</feature>
<feature type="binding site" evidence="1">
    <location>
        <position position="773"/>
    </location>
    <ligand>
        <name>Mg(2+)</name>
        <dbReference type="ChEBI" id="CHEBI:18420"/>
        <label>1</label>
        <note>catalytic; for reverse transcriptase activity</note>
    </ligand>
</feature>
<feature type="binding site" evidence="1">
    <location>
        <position position="1030"/>
    </location>
    <ligand>
        <name>Mg(2+)</name>
        <dbReference type="ChEBI" id="CHEBI:18420"/>
        <label>2</label>
        <note>catalytic; for RNase H activity</note>
    </ligand>
</feature>
<feature type="binding site" evidence="1">
    <location>
        <position position="1065"/>
    </location>
    <ligand>
        <name>Mg(2+)</name>
        <dbReference type="ChEBI" id="CHEBI:18420"/>
        <label>2</label>
        <note>catalytic; for RNase H activity</note>
    </ligand>
</feature>
<feature type="binding site" evidence="1">
    <location>
        <position position="1085"/>
    </location>
    <ligand>
        <name>Mg(2+)</name>
        <dbReference type="ChEBI" id="CHEBI:18420"/>
        <label>2</label>
        <note>catalytic; for RNase H activity</note>
    </ligand>
</feature>
<feature type="binding site" evidence="1">
    <location>
        <position position="1136"/>
    </location>
    <ligand>
        <name>Mg(2+)</name>
        <dbReference type="ChEBI" id="CHEBI:18420"/>
        <label>2</label>
        <note>catalytic; for RNase H activity</note>
    </ligand>
</feature>
<feature type="binding site" evidence="11">
    <location>
        <position position="1159"/>
    </location>
    <ligand>
        <name>Zn(2+)</name>
        <dbReference type="ChEBI" id="CHEBI:29105"/>
    </ligand>
</feature>
<feature type="binding site" evidence="11">
    <location>
        <position position="1163"/>
    </location>
    <ligand>
        <name>Zn(2+)</name>
        <dbReference type="ChEBI" id="CHEBI:29105"/>
    </ligand>
</feature>
<feature type="binding site" evidence="11">
    <location>
        <position position="1187"/>
    </location>
    <ligand>
        <name>Zn(2+)</name>
        <dbReference type="ChEBI" id="CHEBI:29105"/>
    </ligand>
</feature>
<feature type="binding site" evidence="11">
    <location>
        <position position="1190"/>
    </location>
    <ligand>
        <name>Zn(2+)</name>
        <dbReference type="ChEBI" id="CHEBI:29105"/>
    </ligand>
</feature>
<feature type="binding site">
    <location>
        <position position="1211"/>
    </location>
    <ligand>
        <name>Mg(2+)</name>
        <dbReference type="ChEBI" id="CHEBI:18420"/>
        <label>3</label>
        <note>catalytic; for integrase activity</note>
    </ligand>
</feature>
<feature type="binding site">
    <location>
        <position position="1263"/>
    </location>
    <ligand>
        <name>Mg(2+)</name>
        <dbReference type="ChEBI" id="CHEBI:18420"/>
        <label>3</label>
        <note>catalytic; for integrase activity</note>
    </ligand>
</feature>
<feature type="binding site" evidence="5">
    <location>
        <position position="1299"/>
    </location>
    <ligand>
        <name>Mg(2+)</name>
        <dbReference type="ChEBI" id="CHEBI:18420"/>
        <label>3</label>
        <note>catalytic; for integrase activity</note>
    </ligand>
</feature>
<feature type="site" description="Cleavage; by viral protease" evidence="1">
    <location>
        <begin position="132"/>
        <end position="133"/>
    </location>
</feature>
<feature type="site" description="Cis/trans isomerization of proline peptide bond; by human PPIA/CYPA" evidence="1">
    <location>
        <begin position="221"/>
        <end position="222"/>
    </location>
</feature>
<feature type="site" description="Cleavage; by viral protease" evidence="1">
    <location>
        <begin position="363"/>
        <end position="364"/>
    </location>
</feature>
<feature type="site" description="Cleavage; by viral protease" evidence="1">
    <location>
        <begin position="377"/>
        <end position="378"/>
    </location>
</feature>
<feature type="site" description="Cleavage; by viral protease" evidence="6">
    <location>
        <begin position="432"/>
        <end position="433"/>
    </location>
</feature>
<feature type="site" description="Cleavage; by viral protease" evidence="1">
    <location>
        <begin position="440"/>
        <end position="441"/>
    </location>
</feature>
<feature type="site" description="Cleavage; by viral protease" evidence="1">
    <location>
        <begin position="488"/>
        <end position="489"/>
    </location>
</feature>
<feature type="site" description="Cleavage; by viral protease" evidence="1">
    <location>
        <begin position="587"/>
        <end position="588"/>
    </location>
</feature>
<feature type="site" description="Essential for RT p66/p51 heterodimerization" evidence="1">
    <location>
        <position position="988"/>
    </location>
</feature>
<feature type="site" description="Essential for RT p66/p51 heterodimerization" evidence="1">
    <location>
        <position position="1001"/>
    </location>
</feature>
<feature type="site" description="Cleavage; by viral protease; partial" evidence="1">
    <location>
        <begin position="1027"/>
        <end position="1028"/>
    </location>
</feature>
<feature type="site" description="Cleavage; by viral protease" evidence="1">
    <location>
        <begin position="1147"/>
        <end position="1148"/>
    </location>
</feature>
<feature type="modified residue" description="Phosphotyrosine; by host" evidence="1">
    <location>
        <position position="132"/>
    </location>
</feature>
<feature type="modified residue" description="Phosphoserine; by host MAPK1" evidence="26">
    <location>
        <position position="148"/>
    </location>
</feature>
<feature type="lipid moiety-binding region" description="N-myristoyl glycine; by host" evidence="1">
    <location>
        <position position="2"/>
    </location>
</feature>
<feature type="mutagenesis site" description="Loss of ability to fuse with target cell membranes and infect host cell." evidence="18">
    <original>S</original>
    <variation>A</variation>
    <location>
        <position position="9"/>
    </location>
</feature>
<feature type="mutagenesis site" description="Loss of ability to fuse with target cell membranes and infect host cell." evidence="18">
    <original>S</original>
    <variation>A</variation>
    <location>
        <position position="67"/>
    </location>
</feature>
<feature type="mutagenesis site" description="Loss of ability to fuse with target cell membranes and infect host cell." evidence="18">
    <original>S</original>
    <variation>A</variation>
    <location>
        <position position="72"/>
    </location>
</feature>
<feature type="mutagenesis site" description="Loss of ability to fuse with target cell membranes and infect host cell." evidence="18">
    <original>S</original>
    <variation>A</variation>
    <location>
        <position position="77"/>
    </location>
</feature>
<feature type="strand" evidence="32">
    <location>
        <begin position="6"/>
        <end position="8"/>
    </location>
</feature>
<feature type="helix" evidence="47">
    <location>
        <begin position="10"/>
        <end position="18"/>
    </location>
</feature>
<feature type="strand" evidence="47">
    <location>
        <begin position="20"/>
        <end position="22"/>
    </location>
</feature>
<feature type="strand" evidence="32">
    <location>
        <begin position="23"/>
        <end position="25"/>
    </location>
</feature>
<feature type="helix" evidence="47">
    <location>
        <begin position="31"/>
        <end position="43"/>
    </location>
</feature>
<feature type="helix" evidence="47">
    <location>
        <begin position="48"/>
        <end position="52"/>
    </location>
</feature>
<feature type="helix" evidence="47">
    <location>
        <begin position="54"/>
        <end position="64"/>
    </location>
</feature>
<feature type="helix" evidence="47">
    <location>
        <begin position="65"/>
        <end position="67"/>
    </location>
</feature>
<feature type="turn" evidence="47">
    <location>
        <begin position="68"/>
        <end position="70"/>
    </location>
</feature>
<feature type="helix" evidence="47">
    <location>
        <begin position="73"/>
        <end position="90"/>
    </location>
</feature>
<feature type="helix" evidence="47">
    <location>
        <begin position="97"/>
        <end position="108"/>
    </location>
</feature>
<feature type="helix" evidence="34">
    <location>
        <begin position="109"/>
        <end position="112"/>
    </location>
</feature>
<feature type="helix" evidence="33">
    <location>
        <begin position="113"/>
        <end position="115"/>
    </location>
</feature>
<feature type="turn" evidence="33">
    <location>
        <begin position="117"/>
        <end position="119"/>
    </location>
</feature>
<feature type="strand" evidence="36">
    <location>
        <begin position="134"/>
        <end position="136"/>
    </location>
</feature>
<feature type="strand" evidence="45">
    <location>
        <begin position="138"/>
        <end position="140"/>
    </location>
</feature>
<feature type="strand" evidence="36">
    <location>
        <begin position="142"/>
        <end position="144"/>
    </location>
</feature>
<feature type="helix" evidence="36">
    <location>
        <begin position="149"/>
        <end position="162"/>
    </location>
</feature>
<feature type="helix" evidence="36">
    <location>
        <begin position="168"/>
        <end position="175"/>
    </location>
</feature>
<feature type="turn" evidence="36">
    <location>
        <begin position="176"/>
        <end position="178"/>
    </location>
</feature>
<feature type="helix" evidence="36">
    <location>
        <begin position="181"/>
        <end position="189"/>
    </location>
</feature>
<feature type="turn" evidence="45">
    <location>
        <begin position="191"/>
        <end position="193"/>
    </location>
</feature>
<feature type="helix" evidence="36">
    <location>
        <begin position="195"/>
        <end position="215"/>
    </location>
</feature>
<feature type="strand" evidence="64">
    <location>
        <begin position="225"/>
        <end position="227"/>
    </location>
</feature>
<feature type="helix" evidence="36">
    <location>
        <begin position="233"/>
        <end position="236"/>
    </location>
</feature>
<feature type="strand" evidence="48">
    <location>
        <begin position="239"/>
        <end position="241"/>
    </location>
</feature>
<feature type="helix" evidence="36">
    <location>
        <begin position="243"/>
        <end position="251"/>
    </location>
</feature>
<feature type="strand" evidence="36">
    <location>
        <begin position="252"/>
        <end position="254"/>
    </location>
</feature>
<feature type="helix" evidence="36">
    <location>
        <begin position="258"/>
        <end position="277"/>
    </location>
</feature>
<feature type="helix" evidence="38">
    <location>
        <begin position="282"/>
        <end position="284"/>
    </location>
</feature>
<feature type="strand" evidence="39">
    <location>
        <begin position="289"/>
        <end position="291"/>
    </location>
</feature>
<feature type="helix" evidence="38">
    <location>
        <begin position="293"/>
        <end position="306"/>
    </location>
</feature>
<feature type="turn" evidence="49">
    <location>
        <begin position="308"/>
        <end position="310"/>
    </location>
</feature>
<feature type="helix" evidence="38">
    <location>
        <begin position="311"/>
        <end position="324"/>
    </location>
</feature>
<feature type="helix" evidence="38">
    <location>
        <begin position="328"/>
        <end position="337"/>
    </location>
</feature>
<feature type="helix" evidence="38">
    <location>
        <begin position="343"/>
        <end position="350"/>
    </location>
</feature>
<feature type="turn" evidence="37">
    <location>
        <begin position="351"/>
        <end position="354"/>
    </location>
</feature>
<feature type="helix" evidence="46">
    <location>
        <begin position="356"/>
        <end position="361"/>
    </location>
</feature>
<feature type="strand" evidence="35">
    <location>
        <begin position="380"/>
        <end position="383"/>
    </location>
</feature>
<feature type="strand" evidence="35">
    <location>
        <begin position="385"/>
        <end position="389"/>
    </location>
</feature>
<feature type="strand" evidence="35">
    <location>
        <begin position="393"/>
        <end position="395"/>
    </location>
</feature>
<feature type="turn" evidence="35">
    <location>
        <begin position="402"/>
        <end position="404"/>
    </location>
</feature>
<feature type="strand" evidence="35">
    <location>
        <begin position="414"/>
        <end position="416"/>
    </location>
</feature>
<feature type="strand" evidence="35">
    <location>
        <begin position="419"/>
        <end position="421"/>
    </location>
</feature>
<feature type="turn" evidence="35">
    <location>
        <begin position="423"/>
        <end position="425"/>
    </location>
</feature>
<feature type="strand" evidence="65">
    <location>
        <begin position="490"/>
        <end position="492"/>
    </location>
</feature>
<feature type="strand" evidence="56">
    <location>
        <begin position="493"/>
        <end position="495"/>
    </location>
</feature>
<feature type="strand" evidence="56">
    <location>
        <begin position="498"/>
        <end position="503"/>
    </location>
</feature>
<feature type="strand" evidence="56">
    <location>
        <begin position="506"/>
        <end position="512"/>
    </location>
</feature>
<feature type="strand" evidence="56">
    <location>
        <begin position="517"/>
        <end position="521"/>
    </location>
</feature>
<feature type="strand" evidence="56">
    <location>
        <begin position="531"/>
        <end position="537"/>
    </location>
</feature>
<feature type="strand" evidence="56">
    <location>
        <begin position="540"/>
        <end position="554"/>
    </location>
</feature>
<feature type="strand" evidence="56">
    <location>
        <begin position="557"/>
        <end position="566"/>
    </location>
</feature>
<feature type="strand" evidence="55">
    <location>
        <begin position="569"/>
        <end position="573"/>
    </location>
</feature>
<feature type="helix" evidence="56">
    <location>
        <begin position="575"/>
        <end position="578"/>
    </location>
</feature>
<feature type="turn" evidence="56">
    <location>
        <begin position="579"/>
        <end position="582"/>
    </location>
</feature>
<feature type="strand" evidence="60">
    <location>
        <begin position="584"/>
        <end position="586"/>
    </location>
</feature>
<feature type="helix" evidence="54">
    <location>
        <begin position="615"/>
        <end position="630"/>
    </location>
</feature>
<feature type="strand" evidence="54">
    <location>
        <begin position="633"/>
        <end position="636"/>
    </location>
</feature>
<feature type="strand" evidence="54">
    <location>
        <begin position="647"/>
        <end position="651"/>
    </location>
</feature>
<feature type="strand" evidence="53">
    <location>
        <begin position="653"/>
        <end position="656"/>
    </location>
</feature>
<feature type="strand" evidence="54">
    <location>
        <begin position="658"/>
        <end position="662"/>
    </location>
</feature>
<feature type="helix" evidence="54">
    <location>
        <begin position="665"/>
        <end position="670"/>
    </location>
</feature>
<feature type="turn" evidence="54">
    <location>
        <begin position="674"/>
        <end position="678"/>
    </location>
</feature>
<feature type="helix" evidence="54">
    <location>
        <begin position="684"/>
        <end position="686"/>
    </location>
</feature>
<feature type="helix" evidence="54">
    <location>
        <begin position="687"/>
        <end position="689"/>
    </location>
</feature>
<feature type="strand" evidence="54">
    <location>
        <begin position="691"/>
        <end position="697"/>
    </location>
</feature>
<feature type="turn" evidence="53">
    <location>
        <begin position="699"/>
        <end position="701"/>
    </location>
</feature>
<feature type="helix" evidence="54">
    <location>
        <begin position="702"/>
        <end position="704"/>
    </location>
</feature>
<feature type="helix" evidence="54">
    <location>
        <begin position="709"/>
        <end position="715"/>
    </location>
</feature>
<feature type="strand" evidence="54">
    <location>
        <begin position="717"/>
        <end position="719"/>
    </location>
</feature>
<feature type="strand" evidence="54">
    <location>
        <begin position="721"/>
        <end position="726"/>
    </location>
</feature>
<feature type="strand" evidence="54">
    <location>
        <begin position="729"/>
        <end position="735"/>
    </location>
</feature>
<feature type="helix" evidence="54">
    <location>
        <begin position="743"/>
        <end position="761"/>
    </location>
</feature>
<feature type="strand" evidence="54">
    <location>
        <begin position="765"/>
        <end position="770"/>
    </location>
</feature>
<feature type="strand" evidence="54">
    <location>
        <begin position="773"/>
        <end position="780"/>
    </location>
</feature>
<feature type="helix" evidence="54">
    <location>
        <begin position="782"/>
        <end position="798"/>
    </location>
</feature>
<feature type="helix" evidence="54">
    <location>
        <begin position="805"/>
        <end position="807"/>
    </location>
</feature>
<feature type="strand" evidence="54">
    <location>
        <begin position="811"/>
        <end position="816"/>
    </location>
</feature>
<feature type="strand" evidence="54">
    <location>
        <begin position="819"/>
        <end position="821"/>
    </location>
</feature>
<feature type="strand" evidence="54">
    <location>
        <begin position="823"/>
        <end position="828"/>
    </location>
</feature>
<feature type="strand" evidence="52">
    <location>
        <begin position="837"/>
        <end position="840"/>
    </location>
</feature>
<feature type="helix" evidence="54">
    <location>
        <begin position="841"/>
        <end position="854"/>
    </location>
</feature>
<feature type="turn" evidence="54">
    <location>
        <begin position="855"/>
        <end position="857"/>
    </location>
</feature>
<feature type="strand" evidence="54">
    <location>
        <begin position="858"/>
        <end position="860"/>
    </location>
</feature>
<feature type="helix" evidence="54">
    <location>
        <begin position="864"/>
        <end position="868"/>
    </location>
</feature>
<feature type="turn" evidence="54">
    <location>
        <begin position="869"/>
        <end position="872"/>
    </location>
</feature>
<feature type="helix" evidence="54">
    <location>
        <begin position="884"/>
        <end position="898"/>
    </location>
</feature>
<feature type="strand" evidence="50">
    <location>
        <begin position="908"/>
        <end position="910"/>
    </location>
</feature>
<feature type="strand" evidence="54">
    <location>
        <begin position="913"/>
        <end position="920"/>
    </location>
</feature>
<feature type="strand" evidence="54">
    <location>
        <begin position="923"/>
        <end position="931"/>
    </location>
</feature>
<feature type="strand" evidence="54">
    <location>
        <begin position="935"/>
        <end position="941"/>
    </location>
</feature>
<feature type="strand" evidence="54">
    <location>
        <begin position="946"/>
        <end position="949"/>
    </location>
</feature>
<feature type="helix" evidence="54">
    <location>
        <begin position="951"/>
        <end position="970"/>
    </location>
</feature>
<feature type="strand" evidence="54">
    <location>
        <begin position="975"/>
        <end position="980"/>
    </location>
</feature>
<feature type="helix" evidence="54">
    <location>
        <begin position="982"/>
        <end position="991"/>
    </location>
</feature>
<feature type="strand" evidence="54">
    <location>
        <begin position="992"/>
        <end position="995"/>
    </location>
</feature>
<feature type="strand" evidence="54">
    <location>
        <begin position="1000"/>
        <end position="1003"/>
    </location>
</feature>
<feature type="strand" evidence="50">
    <location>
        <begin position="1009"/>
        <end position="1011"/>
    </location>
</feature>
<feature type="strand" evidence="54">
    <location>
        <begin position="1017"/>
        <end position="1019"/>
    </location>
</feature>
<feature type="strand" evidence="54">
    <location>
        <begin position="1024"/>
        <end position="1033"/>
    </location>
</feature>
<feature type="turn" evidence="54">
    <location>
        <begin position="1035"/>
        <end position="1037"/>
    </location>
</feature>
<feature type="strand" evidence="54">
    <location>
        <begin position="1040"/>
        <end position="1046"/>
    </location>
</feature>
<feature type="strand" evidence="54">
    <location>
        <begin position="1051"/>
        <end position="1056"/>
    </location>
</feature>
<feature type="helix" evidence="54">
    <location>
        <begin position="1061"/>
        <end position="1074"/>
    </location>
</feature>
<feature type="strand" evidence="54">
    <location>
        <begin position="1078"/>
        <end position="1084"/>
    </location>
</feature>
<feature type="helix" evidence="54">
    <location>
        <begin position="1087"/>
        <end position="1094"/>
    </location>
</feature>
<feature type="strand" evidence="54">
    <location>
        <begin position="1098"/>
        <end position="1101"/>
    </location>
</feature>
<feature type="helix" evidence="54">
    <location>
        <begin position="1103"/>
        <end position="1114"/>
    </location>
</feature>
<feature type="strand" evidence="54">
    <location>
        <begin position="1116"/>
        <end position="1122"/>
    </location>
</feature>
<feature type="strand" evidence="59">
    <location>
        <begin position="1125"/>
        <end position="1127"/>
    </location>
</feature>
<feature type="helix" evidence="54">
    <location>
        <begin position="1132"/>
        <end position="1139"/>
    </location>
</feature>
<feature type="helix" evidence="63">
    <location>
        <begin position="1149"/>
        <end position="1152"/>
    </location>
</feature>
<feature type="helix" evidence="57">
    <location>
        <begin position="1159"/>
        <end position="1162"/>
    </location>
</feature>
<feature type="helix" evidence="63">
    <location>
        <begin position="1166"/>
        <end position="1173"/>
    </location>
</feature>
<feature type="helix" evidence="61">
    <location>
        <begin position="1177"/>
        <end position="1185"/>
    </location>
</feature>
<feature type="helix" evidence="61">
    <location>
        <begin position="1188"/>
        <end position="1190"/>
    </location>
</feature>
<feature type="helix" evidence="40">
    <location>
        <begin position="1204"/>
        <end position="1206"/>
    </location>
</feature>
<feature type="strand" evidence="41">
    <location>
        <begin position="1207"/>
        <end position="1215"/>
    </location>
</feature>
<feature type="strand" evidence="41">
    <location>
        <begin position="1218"/>
        <end position="1225"/>
    </location>
</feature>
<feature type="turn" evidence="41">
    <location>
        <begin position="1226"/>
        <end position="1228"/>
    </location>
</feature>
<feature type="strand" evidence="41">
    <location>
        <begin position="1231"/>
        <end position="1238"/>
    </location>
</feature>
<feature type="helix" evidence="41">
    <location>
        <begin position="1241"/>
        <end position="1254"/>
    </location>
</feature>
<feature type="strand" evidence="41">
    <location>
        <begin position="1259"/>
        <end position="1261"/>
    </location>
</feature>
<feature type="helix" evidence="41">
    <location>
        <begin position="1266"/>
        <end position="1268"/>
    </location>
</feature>
<feature type="helix" evidence="41">
    <location>
        <begin position="1271"/>
        <end position="1280"/>
    </location>
</feature>
<feature type="strand" evidence="42">
    <location>
        <begin position="1283"/>
        <end position="1285"/>
    </location>
</feature>
<feature type="strand" evidence="43">
    <location>
        <begin position="1290"/>
        <end position="1292"/>
    </location>
</feature>
<feature type="turn" evidence="44">
    <location>
        <begin position="1293"/>
        <end position="1296"/>
    </location>
</feature>
<feature type="helix" evidence="41">
    <location>
        <begin position="1300"/>
        <end position="1312"/>
    </location>
</feature>
<feature type="helix" evidence="41">
    <location>
        <begin position="1313"/>
        <end position="1315"/>
    </location>
</feature>
<feature type="strand" evidence="31">
    <location>
        <begin position="1316"/>
        <end position="1318"/>
    </location>
</feature>
<feature type="helix" evidence="41">
    <location>
        <begin position="1319"/>
        <end position="1332"/>
    </location>
</feature>
<feature type="helix" evidence="51">
    <location>
        <begin position="1335"/>
        <end position="1337"/>
    </location>
</feature>
<feature type="strand" evidence="51">
    <location>
        <begin position="1338"/>
        <end position="1340"/>
    </location>
</feature>
<feature type="helix" evidence="41">
    <location>
        <begin position="1343"/>
        <end position="1355"/>
    </location>
</feature>
<feature type="strand" evidence="58">
    <location>
        <begin position="1370"/>
        <end position="1374"/>
    </location>
</feature>
<feature type="strand" evidence="62">
    <location>
        <begin position="1379"/>
        <end position="1381"/>
    </location>
</feature>
<feature type="strand" evidence="58">
    <location>
        <begin position="1383"/>
        <end position="1391"/>
    </location>
</feature>
<feature type="strand" evidence="58">
    <location>
        <begin position="1393"/>
        <end position="1400"/>
    </location>
</feature>
<feature type="strand" evidence="58">
    <location>
        <begin position="1403"/>
        <end position="1408"/>
    </location>
</feature>
<feature type="helix" evidence="58">
    <location>
        <begin position="1409"/>
        <end position="1411"/>
    </location>
</feature>
<feature type="strand" evidence="58">
    <location>
        <begin position="1412"/>
        <end position="1416"/>
    </location>
</feature>
<feature type="helix" evidence="61">
    <location>
        <begin position="1420"/>
        <end position="1423"/>
    </location>
</feature>
<dbReference type="EC" id="3.4.23.16"/>
<dbReference type="EC" id="2.7.7.49"/>
<dbReference type="EC" id="2.7.7.7"/>
<dbReference type="EC" id="3.1.26.13"/>
<dbReference type="EC" id="3.1.13.2"/>
<dbReference type="EC" id="2.7.7.-" evidence="5"/>
<dbReference type="EC" id="3.1.-.-" evidence="5"/>
<dbReference type="EMBL" id="M19921">
    <property type="protein sequence ID" value="AAA44988.2"/>
    <property type="status" value="ALT_SEQ"/>
    <property type="molecule type" value="Genomic_RNA"/>
</dbReference>
<dbReference type="PDB" id="1A43">
    <property type="method" value="X-ray"/>
    <property type="resolution" value="2.60 A"/>
    <property type="chains" value="A=278-363"/>
</dbReference>
<dbReference type="PDB" id="1A8O">
    <property type="method" value="X-ray"/>
    <property type="resolution" value="1.70 A"/>
    <property type="chains" value="A=284-352"/>
</dbReference>
<dbReference type="PDB" id="1AFV">
    <property type="method" value="X-ray"/>
    <property type="resolution" value="3.70 A"/>
    <property type="chains" value="A/B=133-283"/>
</dbReference>
<dbReference type="PDB" id="1AK4">
    <property type="method" value="X-ray"/>
    <property type="resolution" value="2.36 A"/>
    <property type="chains" value="C/D=133-277"/>
</dbReference>
<dbReference type="PDB" id="1AUM">
    <property type="method" value="X-ray"/>
    <property type="resolution" value="3.00 A"/>
    <property type="chains" value="A=283-352"/>
</dbReference>
<dbReference type="PDB" id="1B92">
    <property type="method" value="X-ray"/>
    <property type="resolution" value="2.02 A"/>
    <property type="chains" value="A=1197-1359"/>
</dbReference>
<dbReference type="PDB" id="1B9D">
    <property type="method" value="X-ray"/>
    <property type="resolution" value="1.70 A"/>
    <property type="chains" value="A=1197-1359"/>
</dbReference>
<dbReference type="PDB" id="1B9F">
    <property type="method" value="X-ray"/>
    <property type="resolution" value="1.70 A"/>
    <property type="chains" value="A=1197-1359"/>
</dbReference>
<dbReference type="PDB" id="1BAJ">
    <property type="method" value="X-ray"/>
    <property type="resolution" value="2.60 A"/>
    <property type="chains" value="A=278-377"/>
</dbReference>
<dbReference type="PDB" id="1BHL">
    <property type="method" value="X-ray"/>
    <property type="resolution" value="2.20 A"/>
    <property type="chains" value="A=1204-1354"/>
</dbReference>
<dbReference type="PDB" id="1BI4">
    <property type="method" value="X-ray"/>
    <property type="resolution" value="2.50 A"/>
    <property type="chains" value="A/B/C=1197-1356"/>
</dbReference>
<dbReference type="PDB" id="1BIS">
    <property type="method" value="X-ray"/>
    <property type="resolution" value="1.95 A"/>
    <property type="chains" value="A/B=1194-1356"/>
</dbReference>
<dbReference type="PDB" id="1BIU">
    <property type="method" value="X-ray"/>
    <property type="resolution" value="2.50 A"/>
    <property type="chains" value="A/B/C=1194-1359"/>
</dbReference>
<dbReference type="PDB" id="1BIZ">
    <property type="method" value="X-ray"/>
    <property type="resolution" value="1.95 A"/>
    <property type="chains" value="A/B=1197-1359"/>
</dbReference>
<dbReference type="PDB" id="1BL3">
    <property type="method" value="X-ray"/>
    <property type="resolution" value="2.00 A"/>
    <property type="chains" value="A/B/C=1197-1356"/>
</dbReference>
<dbReference type="PDB" id="1GWP">
    <property type="method" value="NMR"/>
    <property type="chains" value="A=133-283"/>
</dbReference>
<dbReference type="PDB" id="1HIW">
    <property type="method" value="X-ray"/>
    <property type="resolution" value="2.30 A"/>
    <property type="chains" value="A/B/C/Q/R/S=1-132"/>
</dbReference>
<dbReference type="PDB" id="1HYV">
    <property type="method" value="X-ray"/>
    <property type="resolution" value="1.70 A"/>
    <property type="chains" value="A=1194-1359"/>
</dbReference>
<dbReference type="PDB" id="1HYZ">
    <property type="method" value="X-ray"/>
    <property type="resolution" value="2.30 A"/>
    <property type="chains" value="A=1194-1359"/>
</dbReference>
<dbReference type="PDB" id="1ITG">
    <property type="method" value="X-ray"/>
    <property type="resolution" value="2.30 A"/>
    <property type="chains" value="A=1194-1359"/>
</dbReference>
<dbReference type="PDB" id="1K6Y">
    <property type="method" value="X-ray"/>
    <property type="resolution" value="2.40 A"/>
    <property type="chains" value="A/B/C/D=1148-1359"/>
</dbReference>
<dbReference type="PDB" id="1M9D">
    <property type="method" value="X-ray"/>
    <property type="resolution" value="1.90 A"/>
    <property type="chains" value="C/D=133-278"/>
</dbReference>
<dbReference type="PDB" id="1QS4">
    <property type="method" value="X-ray"/>
    <property type="resolution" value="2.10 A"/>
    <property type="chains" value="A/B/C=1203-1356"/>
</dbReference>
<dbReference type="PDB" id="1UPH">
    <property type="method" value="NMR"/>
    <property type="chains" value="A=2-132"/>
</dbReference>
<dbReference type="PDB" id="1WJB">
    <property type="method" value="NMR"/>
    <property type="chains" value="A/B=1148-1202"/>
</dbReference>
<dbReference type="PDB" id="1WJD">
    <property type="method" value="NMR"/>
    <property type="chains" value="A/B=1148-1202"/>
</dbReference>
<dbReference type="PDB" id="2B4J">
    <property type="method" value="X-ray"/>
    <property type="resolution" value="2.02 A"/>
    <property type="chains" value="A/B=1197-1359"/>
</dbReference>
<dbReference type="PDB" id="2GOL">
    <property type="method" value="X-ray"/>
    <property type="resolution" value="2.20 A"/>
    <property type="chains" value="A=2-131, B/D=133-277"/>
</dbReference>
<dbReference type="PDB" id="2GON">
    <property type="method" value="X-ray"/>
    <property type="resolution" value="1.90 A"/>
    <property type="chains" value="A/B/C/D=133-278"/>
</dbReference>
<dbReference type="PDB" id="2H3F">
    <property type="method" value="NMR"/>
    <property type="chains" value="A=2-132"/>
</dbReference>
<dbReference type="PDB" id="2H3I">
    <property type="method" value="NMR"/>
    <property type="chains" value="A=2-132"/>
</dbReference>
<dbReference type="PDB" id="2H3Q">
    <property type="method" value="NMR"/>
    <property type="chains" value="A=2-132"/>
</dbReference>
<dbReference type="PDB" id="2H3V">
    <property type="method" value="NMR"/>
    <property type="chains" value="A=2-132"/>
</dbReference>
<dbReference type="PDB" id="2H3Z">
    <property type="method" value="NMR"/>
    <property type="chains" value="A=2-132"/>
</dbReference>
<dbReference type="PDB" id="2HMX">
    <property type="method" value="NMR"/>
    <property type="chains" value="A=1-132"/>
</dbReference>
<dbReference type="PDB" id="2HVP">
    <property type="method" value="X-ray"/>
    <property type="resolution" value="3.00 A"/>
    <property type="chains" value="A=489-587"/>
</dbReference>
<dbReference type="PDB" id="2ITG">
    <property type="method" value="X-ray"/>
    <property type="resolution" value="2.60 A"/>
    <property type="chains" value="A=1197-1359"/>
</dbReference>
<dbReference type="PDB" id="2JPR">
    <property type="method" value="NMR"/>
    <property type="chains" value="A=133-277"/>
</dbReference>
<dbReference type="PDB" id="2JYG">
    <property type="method" value="NMR"/>
    <property type="chains" value="A=280-363"/>
</dbReference>
<dbReference type="PDB" id="2JYL">
    <property type="method" value="NMR"/>
    <property type="chains" value="A=280-363"/>
</dbReference>
<dbReference type="PDB" id="2LF4">
    <property type="method" value="NMR"/>
    <property type="chains" value="A=133-363"/>
</dbReference>
<dbReference type="PDB" id="2LYA">
    <property type="method" value="NMR"/>
    <property type="chains" value="A=2-132"/>
</dbReference>
<dbReference type="PDB" id="2LYB">
    <property type="method" value="NMR"/>
    <property type="chains" value="A=2-132"/>
</dbReference>
<dbReference type="PDB" id="2M3Z">
    <property type="method" value="NMR"/>
    <property type="chains" value="A=378-432"/>
</dbReference>
<dbReference type="PDB" id="2M8L">
    <property type="method" value="NMR"/>
    <property type="chains" value="A/B=133-363"/>
</dbReference>
<dbReference type="PDB" id="2M8N">
    <property type="method" value="NMR"/>
    <property type="chains" value="A=133-363"/>
</dbReference>
<dbReference type="PDB" id="2M8P">
    <property type="method" value="NMR"/>
    <property type="chains" value="A=133-363"/>
</dbReference>
<dbReference type="PDB" id="2ONT">
    <property type="method" value="X-ray"/>
    <property type="resolution" value="2.40 A"/>
    <property type="chains" value="A=278-352"/>
</dbReference>
<dbReference type="PDB" id="2PWM">
    <property type="method" value="X-ray"/>
    <property type="resolution" value="1.90 A"/>
    <property type="chains" value="A/B/C/D/E/F/G/H=133-278"/>
</dbReference>
<dbReference type="PDB" id="2PWO">
    <property type="method" value="X-ray"/>
    <property type="resolution" value="1.45 A"/>
    <property type="chains" value="A/B/C/D=133-278"/>
</dbReference>
<dbReference type="PDB" id="2PXR">
    <property type="method" value="X-ray"/>
    <property type="resolution" value="1.50 A"/>
    <property type="chains" value="C=133-278"/>
</dbReference>
<dbReference type="PDB" id="2X2D">
    <property type="method" value="X-ray"/>
    <property type="resolution" value="1.95 A"/>
    <property type="chains" value="D/E=133-278"/>
</dbReference>
<dbReference type="PDB" id="2XDE">
    <property type="method" value="X-ray"/>
    <property type="resolution" value="1.40 A"/>
    <property type="chains" value="A/B=133-278"/>
</dbReference>
<dbReference type="PDB" id="2XV6">
    <property type="method" value="X-ray"/>
    <property type="resolution" value="1.89 A"/>
    <property type="chains" value="A/C=278-352"/>
</dbReference>
<dbReference type="PDB" id="2XXM">
    <property type="method" value="X-ray"/>
    <property type="resolution" value="1.65 A"/>
    <property type="chains" value="A=278-352"/>
</dbReference>
<dbReference type="PDB" id="3AV9">
    <property type="method" value="X-ray"/>
    <property type="resolution" value="1.70 A"/>
    <property type="chains" value="A/B=1197-1359"/>
</dbReference>
<dbReference type="PDB" id="3AVA">
    <property type="method" value="X-ray"/>
    <property type="resolution" value="1.70 A"/>
    <property type="chains" value="A/B=1197-1359"/>
</dbReference>
<dbReference type="PDB" id="3AVB">
    <property type="method" value="X-ray"/>
    <property type="resolution" value="1.85 A"/>
    <property type="chains" value="A/B=1197-1359"/>
</dbReference>
<dbReference type="PDB" id="3AVC">
    <property type="method" value="X-ray"/>
    <property type="resolution" value="1.77 A"/>
    <property type="chains" value="A/B=1197-1359"/>
</dbReference>
<dbReference type="PDB" id="3AVF">
    <property type="method" value="X-ray"/>
    <property type="resolution" value="1.70 A"/>
    <property type="chains" value="A/B=1197-1356"/>
</dbReference>
<dbReference type="PDB" id="3AVG">
    <property type="method" value="X-ray"/>
    <property type="resolution" value="1.70 A"/>
    <property type="chains" value="A/B=1197-1359"/>
</dbReference>
<dbReference type="PDB" id="3AVH">
    <property type="method" value="X-ray"/>
    <property type="resolution" value="1.88 A"/>
    <property type="chains" value="A/B=1197-1359"/>
</dbReference>
<dbReference type="PDB" id="3AVJ">
    <property type="method" value="X-ray"/>
    <property type="resolution" value="1.70 A"/>
    <property type="chains" value="A/B=1197-1359"/>
</dbReference>
<dbReference type="PDB" id="3AVK">
    <property type="method" value="X-ray"/>
    <property type="resolution" value="1.75 A"/>
    <property type="chains" value="A/B=1197-1359"/>
</dbReference>
<dbReference type="PDB" id="3AVL">
    <property type="method" value="X-ray"/>
    <property type="resolution" value="1.88 A"/>
    <property type="chains" value="A/B=1197-1359"/>
</dbReference>
<dbReference type="PDB" id="3AVM">
    <property type="method" value="X-ray"/>
    <property type="resolution" value="1.88 A"/>
    <property type="chains" value="A/B=1197-1359"/>
</dbReference>
<dbReference type="PDB" id="3AVN">
    <property type="method" value="X-ray"/>
    <property type="resolution" value="2.10 A"/>
    <property type="chains" value="A/B=1197-1359"/>
</dbReference>
<dbReference type="PDB" id="3DIK">
    <property type="method" value="EM"/>
    <property type="resolution" value="9.00 A"/>
    <property type="chains" value="A=133-351"/>
</dbReference>
<dbReference type="PDB" id="3DPH">
    <property type="method" value="X-ray"/>
    <property type="resolution" value="2.01 A"/>
    <property type="chains" value="A/B=278-363"/>
</dbReference>
<dbReference type="PDB" id="3DS0">
    <property type="method" value="X-ray"/>
    <property type="resolution" value="1.60 A"/>
    <property type="chains" value="A=278-363"/>
</dbReference>
<dbReference type="PDB" id="3DS1">
    <property type="method" value="X-ray"/>
    <property type="resolution" value="1.60 A"/>
    <property type="chains" value="A=278-363"/>
</dbReference>
<dbReference type="PDB" id="3DS2">
    <property type="method" value="X-ray"/>
    <property type="resolution" value="1.20 A"/>
    <property type="chains" value="A/B=278-363"/>
</dbReference>
<dbReference type="PDB" id="3DS3">
    <property type="method" value="X-ray"/>
    <property type="resolution" value="2.70 A"/>
    <property type="chains" value="A/B=278-363"/>
</dbReference>
<dbReference type="PDB" id="3DS4">
    <property type="method" value="X-ray"/>
    <property type="resolution" value="1.12 A"/>
    <property type="chains" value="A/B=278-363"/>
</dbReference>
<dbReference type="PDB" id="3DS5">
    <property type="method" value="X-ray"/>
    <property type="resolution" value="2.40 A"/>
    <property type="chains" value="A/B/C/D=278-363"/>
</dbReference>
<dbReference type="PDB" id="3DTJ">
    <property type="method" value="X-ray"/>
    <property type="resolution" value="4.00 A"/>
    <property type="chains" value="A/B/C/D=278-363"/>
</dbReference>
<dbReference type="PDB" id="3GV2">
    <property type="method" value="X-ray"/>
    <property type="resolution" value="7.00 A"/>
    <property type="chains" value="A/B/C/D/E/F=133-355"/>
</dbReference>
<dbReference type="PDB" id="3H47">
    <property type="method" value="X-ray"/>
    <property type="resolution" value="1.90 A"/>
    <property type="chains" value="A=133-363"/>
</dbReference>
<dbReference type="PDB" id="3H4E">
    <property type="method" value="X-ray"/>
    <property type="resolution" value="2.70 A"/>
    <property type="chains" value="A/B/C/D/E/F/G/H/I/J/K/L=133-363"/>
</dbReference>
<dbReference type="PDB" id="3L3U">
    <property type="method" value="X-ray"/>
    <property type="resolution" value="1.40 A"/>
    <property type="chains" value="A/B=1197-1359"/>
</dbReference>
<dbReference type="PDB" id="3L3V">
    <property type="method" value="X-ray"/>
    <property type="resolution" value="2.00 A"/>
    <property type="chains" value="A/B=1197-1359"/>
</dbReference>
<dbReference type="PDB" id="3LPT">
    <property type="method" value="X-ray"/>
    <property type="resolution" value="2.00 A"/>
    <property type="chains" value="A=1197-1359"/>
</dbReference>
<dbReference type="PDB" id="3LPU">
    <property type="method" value="X-ray"/>
    <property type="resolution" value="1.95 A"/>
    <property type="chains" value="A=1197-1359"/>
</dbReference>
<dbReference type="PDB" id="3LRY">
    <property type="method" value="X-ray"/>
    <property type="resolution" value="1.98 A"/>
    <property type="chains" value="A/B=278-363"/>
</dbReference>
<dbReference type="PDB" id="3MGE">
    <property type="method" value="X-ray"/>
    <property type="resolution" value="1.90 A"/>
    <property type="chains" value="A=133-363"/>
</dbReference>
<dbReference type="PDB" id="3NF6">
    <property type="method" value="X-ray"/>
    <property type="resolution" value="1.90 A"/>
    <property type="chains" value="A/B=1197-1359"/>
</dbReference>
<dbReference type="PDB" id="3NF7">
    <property type="method" value="X-ray"/>
    <property type="resolution" value="1.80 A"/>
    <property type="chains" value="A/B=1197-1359"/>
</dbReference>
<dbReference type="PDB" id="3NF8">
    <property type="method" value="X-ray"/>
    <property type="resolution" value="1.90 A"/>
    <property type="chains" value="A/B=1197-1359"/>
</dbReference>
<dbReference type="PDB" id="3NF9">
    <property type="method" value="X-ray"/>
    <property type="resolution" value="1.95 A"/>
    <property type="chains" value="A/B=1197-1359"/>
</dbReference>
<dbReference type="PDB" id="3NFA">
    <property type="method" value="X-ray"/>
    <property type="resolution" value="1.95 A"/>
    <property type="chains" value="A/B=1197-1359"/>
</dbReference>
<dbReference type="PDB" id="3P05">
    <property type="method" value="X-ray"/>
    <property type="resolution" value="2.50 A"/>
    <property type="chains" value="A/B/C/D/E=133-363"/>
</dbReference>
<dbReference type="PDB" id="3P0A">
    <property type="method" value="X-ray"/>
    <property type="resolution" value="5.95 A"/>
    <property type="chains" value="A/B/C/D/E/F/G/H/I/J/K/L/M/N/O/P/Q/R/S/T=133-363"/>
</dbReference>
<dbReference type="PDB" id="3S85">
    <property type="method" value="X-ray"/>
    <property type="resolution" value="2.80 A"/>
    <property type="chains" value="A/B/C/D/E/F/G/H/I/J/K/L=489-587"/>
</dbReference>
<dbReference type="PDB" id="3WNE">
    <property type="method" value="X-ray"/>
    <property type="resolution" value="1.70 A"/>
    <property type="chains" value="A/B=1203-1359"/>
</dbReference>
<dbReference type="PDB" id="3WNF">
    <property type="method" value="X-ray"/>
    <property type="resolution" value="1.45 A"/>
    <property type="chains" value="A/B=1203-1359"/>
</dbReference>
<dbReference type="PDB" id="3WNG">
    <property type="method" value="X-ray"/>
    <property type="resolution" value="1.75 A"/>
    <property type="chains" value="A/B=1203-1359"/>
</dbReference>
<dbReference type="PDB" id="3WNH">
    <property type="method" value="X-ray"/>
    <property type="resolution" value="1.50 A"/>
    <property type="chains" value="A/B=1203-1359"/>
</dbReference>
<dbReference type="PDB" id="3ZCM">
    <property type="method" value="X-ray"/>
    <property type="resolution" value="1.80 A"/>
    <property type="chains" value="A/B=1203-1359"/>
</dbReference>
<dbReference type="PDB" id="3ZSO">
    <property type="method" value="X-ray"/>
    <property type="resolution" value="1.75 A"/>
    <property type="chains" value="A/B=1203-1359"/>
</dbReference>
<dbReference type="PDB" id="3ZSQ">
    <property type="method" value="X-ray"/>
    <property type="resolution" value="1.70 A"/>
    <property type="chains" value="A/B=1203-1359"/>
</dbReference>
<dbReference type="PDB" id="3ZSR">
    <property type="method" value="X-ray"/>
    <property type="resolution" value="1.70 A"/>
    <property type="chains" value="A/B=1203-1359"/>
</dbReference>
<dbReference type="PDB" id="3ZSV">
    <property type="method" value="X-ray"/>
    <property type="resolution" value="1.75 A"/>
    <property type="chains" value="A/B=1203-1359"/>
</dbReference>
<dbReference type="PDB" id="3ZSW">
    <property type="method" value="X-ray"/>
    <property type="resolution" value="1.80 A"/>
    <property type="chains" value="A/B=1203-1359"/>
</dbReference>
<dbReference type="PDB" id="3ZSX">
    <property type="method" value="X-ray"/>
    <property type="resolution" value="1.95 A"/>
    <property type="chains" value="A/B=1203-1359"/>
</dbReference>
<dbReference type="PDB" id="3ZSY">
    <property type="method" value="X-ray"/>
    <property type="resolution" value="2.20 A"/>
    <property type="chains" value="A/B=1203-1359"/>
</dbReference>
<dbReference type="PDB" id="3ZSZ">
    <property type="method" value="X-ray"/>
    <property type="resolution" value="2.00 A"/>
    <property type="chains" value="A/B=1203-1359"/>
</dbReference>
<dbReference type="PDB" id="3ZT0">
    <property type="method" value="X-ray"/>
    <property type="resolution" value="1.95 A"/>
    <property type="chains" value="A/B=1203-1359"/>
</dbReference>
<dbReference type="PDB" id="3ZT1">
    <property type="method" value="X-ray"/>
    <property type="resolution" value="1.75 A"/>
    <property type="chains" value="A/B=1203-1359"/>
</dbReference>
<dbReference type="PDB" id="3ZT2">
    <property type="method" value="X-ray"/>
    <property type="resolution" value="1.70 A"/>
    <property type="chains" value="A/B=1203-1359"/>
</dbReference>
<dbReference type="PDB" id="3ZT3">
    <property type="method" value="X-ray"/>
    <property type="resolution" value="1.95 A"/>
    <property type="chains" value="A/B=1203-1359"/>
</dbReference>
<dbReference type="PDB" id="3ZT4">
    <property type="method" value="X-ray"/>
    <property type="resolution" value="2.20 A"/>
    <property type="chains" value="A/B=1203-1359"/>
</dbReference>
<dbReference type="PDB" id="4AH9">
    <property type="method" value="X-ray"/>
    <property type="resolution" value="1.70 A"/>
    <property type="chains" value="A/B=1197-1359"/>
</dbReference>
<dbReference type="PDB" id="4AHR">
    <property type="method" value="X-ray"/>
    <property type="resolution" value="1.90 A"/>
    <property type="chains" value="A/B=1197-1359"/>
</dbReference>
<dbReference type="PDB" id="4AHS">
    <property type="method" value="X-ray"/>
    <property type="resolution" value="1.75 A"/>
    <property type="chains" value="A/B=1197-1359"/>
</dbReference>
<dbReference type="PDB" id="4AHT">
    <property type="method" value="X-ray"/>
    <property type="resolution" value="1.80 A"/>
    <property type="chains" value="A/B=1197-1359"/>
</dbReference>
<dbReference type="PDB" id="4AHU">
    <property type="method" value="X-ray"/>
    <property type="resolution" value="1.90 A"/>
    <property type="chains" value="A/B=1197-1359"/>
</dbReference>
<dbReference type="PDB" id="4AHV">
    <property type="method" value="X-ray"/>
    <property type="resolution" value="1.80 A"/>
    <property type="chains" value="A/B=1197-1359"/>
</dbReference>
<dbReference type="PDB" id="4CE9">
    <property type="method" value="X-ray"/>
    <property type="resolution" value="2.10 A"/>
    <property type="chains" value="A/B=1197-1359"/>
</dbReference>
<dbReference type="PDB" id="4CEA">
    <property type="method" value="X-ray"/>
    <property type="resolution" value="1.80 A"/>
    <property type="chains" value="A/B=1197-1359"/>
</dbReference>
<dbReference type="PDB" id="4CEB">
    <property type="method" value="X-ray"/>
    <property type="resolution" value="1.75 A"/>
    <property type="chains" value="A/B=1197-1359"/>
</dbReference>
<dbReference type="PDB" id="4CEC">
    <property type="method" value="X-ray"/>
    <property type="resolution" value="1.75 A"/>
    <property type="chains" value="A/B=1197-1359"/>
</dbReference>
<dbReference type="PDB" id="4CED">
    <property type="method" value="X-ray"/>
    <property type="resolution" value="1.75 A"/>
    <property type="chains" value="A/B=1197-1359"/>
</dbReference>
<dbReference type="PDB" id="4CEE">
    <property type="method" value="X-ray"/>
    <property type="resolution" value="1.80 A"/>
    <property type="chains" value="A/B=1197-1359"/>
</dbReference>
<dbReference type="PDB" id="4CEF">
    <property type="method" value="X-ray"/>
    <property type="resolution" value="1.70 A"/>
    <property type="chains" value="A/B=1197-1359"/>
</dbReference>
<dbReference type="PDB" id="4CEO">
    <property type="method" value="X-ray"/>
    <property type="resolution" value="1.90 A"/>
    <property type="chains" value="A/B=1197-1359"/>
</dbReference>
<dbReference type="PDB" id="4CEQ">
    <property type="method" value="X-ray"/>
    <property type="resolution" value="1.70 A"/>
    <property type="chains" value="A/B=1197-1359"/>
</dbReference>
<dbReference type="PDB" id="4CER">
    <property type="method" value="X-ray"/>
    <property type="resolution" value="1.70 A"/>
    <property type="chains" value="A/B=1197-1359"/>
</dbReference>
<dbReference type="PDB" id="4CES">
    <property type="method" value="X-ray"/>
    <property type="resolution" value="1.85 A"/>
    <property type="chains" value="A/B=1197-1359"/>
</dbReference>
<dbReference type="PDB" id="4CEZ">
    <property type="method" value="X-ray"/>
    <property type="resolution" value="1.70 A"/>
    <property type="chains" value="A/B=1197-1359"/>
</dbReference>
<dbReference type="PDB" id="4CF0">
    <property type="method" value="X-ray"/>
    <property type="resolution" value="1.85 A"/>
    <property type="chains" value="A/B=1197-1359"/>
</dbReference>
<dbReference type="PDB" id="4CF1">
    <property type="method" value="X-ray"/>
    <property type="resolution" value="1.95 A"/>
    <property type="chains" value="A/B=1197-1359"/>
</dbReference>
<dbReference type="PDB" id="4CF2">
    <property type="method" value="X-ray"/>
    <property type="resolution" value="1.95 A"/>
    <property type="chains" value="A/B=1197-1359"/>
</dbReference>
<dbReference type="PDB" id="4CF8">
    <property type="method" value="X-ray"/>
    <property type="resolution" value="1.65 A"/>
    <property type="chains" value="A/B=1197-1359"/>
</dbReference>
<dbReference type="PDB" id="4CF9">
    <property type="method" value="X-ray"/>
    <property type="resolution" value="2.10 A"/>
    <property type="chains" value="A/B=1197-1359"/>
</dbReference>
<dbReference type="PDB" id="4CFA">
    <property type="method" value="X-ray"/>
    <property type="resolution" value="2.05 A"/>
    <property type="chains" value="A/B=1197-1359"/>
</dbReference>
<dbReference type="PDB" id="4CFB">
    <property type="method" value="X-ray"/>
    <property type="resolution" value="1.95 A"/>
    <property type="chains" value="A/B=1197-1359"/>
</dbReference>
<dbReference type="PDB" id="4CFC">
    <property type="method" value="X-ray"/>
    <property type="resolution" value="1.90 A"/>
    <property type="chains" value="A/B=1197-1359"/>
</dbReference>
<dbReference type="PDB" id="4CFD">
    <property type="method" value="X-ray"/>
    <property type="resolution" value="2.15 A"/>
    <property type="chains" value="A/B=1197-1359"/>
</dbReference>
<dbReference type="PDB" id="4CGD">
    <property type="method" value="X-ray"/>
    <property type="resolution" value="2.00 A"/>
    <property type="chains" value="A/B=1197-1359"/>
</dbReference>
<dbReference type="PDB" id="4CGF">
    <property type="method" value="X-ray"/>
    <property type="resolution" value="1.70 A"/>
    <property type="chains" value="A/B=1197-1359"/>
</dbReference>
<dbReference type="PDB" id="4CGG">
    <property type="method" value="X-ray"/>
    <property type="resolution" value="1.75 A"/>
    <property type="chains" value="A/B=1197-1359"/>
</dbReference>
<dbReference type="PDB" id="4CGH">
    <property type="method" value="X-ray"/>
    <property type="resolution" value="1.76 A"/>
    <property type="chains" value="A/B=1197-1359"/>
</dbReference>
<dbReference type="PDB" id="4CGI">
    <property type="method" value="X-ray"/>
    <property type="resolution" value="2.07 A"/>
    <property type="chains" value="A/B=1197-1359"/>
</dbReference>
<dbReference type="PDB" id="4CGJ">
    <property type="method" value="X-ray"/>
    <property type="resolution" value="2.15 A"/>
    <property type="chains" value="A/B=1197-1359"/>
</dbReference>
<dbReference type="PDB" id="4CHN">
    <property type="method" value="X-ray"/>
    <property type="resolution" value="2.00 A"/>
    <property type="chains" value="A/B=1197-1359"/>
</dbReference>
<dbReference type="PDB" id="4CHO">
    <property type="method" value="X-ray"/>
    <property type="resolution" value="1.70 A"/>
    <property type="chains" value="A/B=1197-1359"/>
</dbReference>
<dbReference type="PDB" id="4CHP">
    <property type="method" value="X-ray"/>
    <property type="resolution" value="1.90 A"/>
    <property type="chains" value="A/B=1197-1359"/>
</dbReference>
<dbReference type="PDB" id="4CHQ">
    <property type="method" value="X-ray"/>
    <property type="resolution" value="1.95 A"/>
    <property type="chains" value="A/B=1197-1359"/>
</dbReference>
<dbReference type="PDB" id="4CHY">
    <property type="method" value="X-ray"/>
    <property type="resolution" value="1.70 A"/>
    <property type="chains" value="A/B=1197-1359"/>
</dbReference>
<dbReference type="PDB" id="4CHZ">
    <property type="method" value="X-ray"/>
    <property type="resolution" value="1.80 A"/>
    <property type="chains" value="A/B=1197-1359"/>
</dbReference>
<dbReference type="PDB" id="4CIE">
    <property type="method" value="X-ray"/>
    <property type="resolution" value="1.70 A"/>
    <property type="chains" value="A/B=1197-1359"/>
</dbReference>
<dbReference type="PDB" id="4CIF">
    <property type="method" value="X-ray"/>
    <property type="resolution" value="1.80 A"/>
    <property type="chains" value="A/B=1197-1359"/>
</dbReference>
<dbReference type="PDB" id="4CIG">
    <property type="method" value="X-ray"/>
    <property type="resolution" value="1.70 A"/>
    <property type="chains" value="A/B=1197-1359"/>
</dbReference>
<dbReference type="PDB" id="4CJ3">
    <property type="method" value="X-ray"/>
    <property type="resolution" value="1.70 A"/>
    <property type="chains" value="A/B=1197-1359"/>
</dbReference>
<dbReference type="PDB" id="4CJ4">
    <property type="method" value="X-ray"/>
    <property type="resolution" value="1.80 A"/>
    <property type="chains" value="A/B=1197-1359"/>
</dbReference>
<dbReference type="PDB" id="4CJ5">
    <property type="method" value="X-ray"/>
    <property type="resolution" value="1.95 A"/>
    <property type="chains" value="A/B=1197-1359"/>
</dbReference>
<dbReference type="PDB" id="4CJE">
    <property type="method" value="X-ray"/>
    <property type="resolution" value="1.90 A"/>
    <property type="chains" value="A/B=1197-1359"/>
</dbReference>
<dbReference type="PDB" id="4CJF">
    <property type="method" value="X-ray"/>
    <property type="resolution" value="1.90 A"/>
    <property type="chains" value="A/B=1197-1359"/>
</dbReference>
<dbReference type="PDB" id="4CJK">
    <property type="method" value="X-ray"/>
    <property type="resolution" value="1.75 A"/>
    <property type="chains" value="A/B=1197-1359"/>
</dbReference>
<dbReference type="PDB" id="4CJL">
    <property type="method" value="X-ray"/>
    <property type="resolution" value="1.77 A"/>
    <property type="chains" value="A=1197-1359"/>
</dbReference>
<dbReference type="PDB" id="4CJP">
    <property type="method" value="X-ray"/>
    <property type="resolution" value="2.00 A"/>
    <property type="chains" value="A/B=1197-1359"/>
</dbReference>
<dbReference type="PDB" id="4CJQ">
    <property type="method" value="X-ray"/>
    <property type="resolution" value="1.70 A"/>
    <property type="chains" value="A/B=1197-1359"/>
</dbReference>
<dbReference type="PDB" id="4CJR">
    <property type="method" value="X-ray"/>
    <property type="resolution" value="1.80 A"/>
    <property type="chains" value="A/B=1197-1359"/>
</dbReference>
<dbReference type="PDB" id="4CJS">
    <property type="method" value="X-ray"/>
    <property type="resolution" value="1.80 A"/>
    <property type="chains" value="A/B=1197-1359"/>
</dbReference>
<dbReference type="PDB" id="4CJT">
    <property type="method" value="X-ray"/>
    <property type="resolution" value="1.71 A"/>
    <property type="chains" value="A/B=1197-1359"/>
</dbReference>
<dbReference type="PDB" id="4CJU">
    <property type="method" value="X-ray"/>
    <property type="resolution" value="1.70 A"/>
    <property type="chains" value="A/B=1197-1359"/>
</dbReference>
<dbReference type="PDB" id="4CJV">
    <property type="method" value="X-ray"/>
    <property type="resolution" value="1.95 A"/>
    <property type="chains" value="A/B=1197-1359"/>
</dbReference>
<dbReference type="PDB" id="4CJW">
    <property type="method" value="X-ray"/>
    <property type="resolution" value="1.95 A"/>
    <property type="chains" value="A/B=1197-1359"/>
</dbReference>
<dbReference type="PDB" id="4CK1">
    <property type="method" value="X-ray"/>
    <property type="resolution" value="1.75 A"/>
    <property type="chains" value="A/B=1197-1359"/>
</dbReference>
<dbReference type="PDB" id="4CK2">
    <property type="method" value="X-ray"/>
    <property type="resolution" value="1.85 A"/>
    <property type="chains" value="A/B=1197-1359"/>
</dbReference>
<dbReference type="PDB" id="4CK3">
    <property type="method" value="X-ray"/>
    <property type="resolution" value="1.79 A"/>
    <property type="chains" value="A/B=1197-1359"/>
</dbReference>
<dbReference type="PDB" id="4COC">
    <property type="method" value="X-ray"/>
    <property type="resolution" value="1.59 A"/>
    <property type="chains" value="A/B/C=278-363"/>
</dbReference>
<dbReference type="PDB" id="4COP">
    <property type="method" value="X-ray"/>
    <property type="resolution" value="1.85 A"/>
    <property type="chains" value="A/B=278-363"/>
</dbReference>
<dbReference type="PDB" id="4DGA">
    <property type="method" value="X-ray"/>
    <property type="resolution" value="1.90 A"/>
    <property type="chains" value="C/D=133-277"/>
</dbReference>
<dbReference type="PDB" id="4DGE">
    <property type="method" value="X-ray"/>
    <property type="resolution" value="2.20 A"/>
    <property type="chains" value="C/D=133-277"/>
</dbReference>
<dbReference type="PDB" id="4DMN">
    <property type="method" value="X-ray"/>
    <property type="resolution" value="2.45 A"/>
    <property type="chains" value="A=1197-1359"/>
</dbReference>
<dbReference type="PDB" id="4E1M">
    <property type="method" value="X-ray"/>
    <property type="resolution" value="1.90 A"/>
    <property type="chains" value="A=1197-1359"/>
</dbReference>
<dbReference type="PDB" id="4E1N">
    <property type="method" value="X-ray"/>
    <property type="resolution" value="2.00 A"/>
    <property type="chains" value="A=1197-1359"/>
</dbReference>
<dbReference type="PDB" id="4E91">
    <property type="method" value="X-ray"/>
    <property type="resolution" value="1.70 A"/>
    <property type="chains" value="A/B=133-278"/>
</dbReference>
<dbReference type="PDB" id="4E92">
    <property type="method" value="X-ray"/>
    <property type="resolution" value="1.80 A"/>
    <property type="chains" value="A/B=133-278"/>
</dbReference>
<dbReference type="PDB" id="4GVM">
    <property type="method" value="X-ray"/>
    <property type="resolution" value="2.16 A"/>
    <property type="chains" value="A=1197-1359"/>
</dbReference>
<dbReference type="PDB" id="4GW6">
    <property type="method" value="X-ray"/>
    <property type="resolution" value="2.65 A"/>
    <property type="chains" value="A=1197-1359"/>
</dbReference>
<dbReference type="PDB" id="4ID1">
    <property type="method" value="X-ray"/>
    <property type="resolution" value="1.87 A"/>
    <property type="chains" value="A=1197-1359"/>
</dbReference>
<dbReference type="PDB" id="4IPY">
    <property type="method" value="X-ray"/>
    <property type="resolution" value="1.64 A"/>
    <property type="chains" value="A/B/C/D=278-363"/>
</dbReference>
<dbReference type="PDB" id="4JLH">
    <property type="method" value="X-ray"/>
    <property type="resolution" value="2.09 A"/>
    <property type="chains" value="A=1197-1359"/>
</dbReference>
<dbReference type="PDB" id="4JMU">
    <property type="method" value="X-ray"/>
    <property type="resolution" value="2.00 A"/>
    <property type="chains" value="A=1-111"/>
</dbReference>
<dbReference type="PDB" id="4LH4">
    <property type="method" value="X-ray"/>
    <property type="resolution" value="1.80 A"/>
    <property type="chains" value="A=1197-1359"/>
</dbReference>
<dbReference type="PDB" id="4LH5">
    <property type="method" value="X-ray"/>
    <property type="resolution" value="2.19 A"/>
    <property type="chains" value="A=1197-1359"/>
</dbReference>
<dbReference type="PDB" id="4LQW">
    <property type="method" value="X-ray"/>
    <property type="resolution" value="1.95 A"/>
    <property type="chains" value="C/D=133-278"/>
</dbReference>
<dbReference type="PDB" id="4NX4">
    <property type="method" value="X-ray"/>
    <property type="resolution" value="1.50 A"/>
    <property type="chains" value="C=133-278"/>
</dbReference>
<dbReference type="PDB" id="4O0J">
    <property type="method" value="X-ray"/>
    <property type="resolution" value="2.05 A"/>
    <property type="chains" value="A=1197-1359"/>
</dbReference>
<dbReference type="PDB" id="4O55">
    <property type="method" value="X-ray"/>
    <property type="resolution" value="2.24 A"/>
    <property type="chains" value="A=1197-1359"/>
</dbReference>
<dbReference type="PDB" id="4O5B">
    <property type="method" value="X-ray"/>
    <property type="resolution" value="2.37 A"/>
    <property type="chains" value="A=1197-1359"/>
</dbReference>
<dbReference type="PDB" id="4OVL">
    <property type="method" value="X-ray"/>
    <property type="resolution" value="1.70 A"/>
    <property type="chains" value="A/B=1197-1359"/>
</dbReference>
<dbReference type="PDB" id="4PHV">
    <property type="method" value="X-ray"/>
    <property type="resolution" value="2.10 A"/>
    <property type="chains" value="A/B=489-587"/>
</dbReference>
<dbReference type="PDB" id="4QNB">
    <property type="method" value="X-ray"/>
    <property type="resolution" value="2.00 A"/>
    <property type="chains" value="A=133-363"/>
</dbReference>
<dbReference type="PDB" id="4WYM">
    <property type="method" value="X-ray"/>
    <property type="resolution" value="2.60 A"/>
    <property type="chains" value="A/B/C/D/E/F/G/H/I/J/K/L=133-363"/>
</dbReference>
<dbReference type="PDB" id="4Y1C">
    <property type="method" value="X-ray"/>
    <property type="resolution" value="2.30 A"/>
    <property type="chains" value="A/B=1197-1359"/>
</dbReference>
<dbReference type="PDB" id="4Y1D">
    <property type="method" value="X-ray"/>
    <property type="resolution" value="1.93 A"/>
    <property type="chains" value="A/B=1197-1359"/>
</dbReference>
<dbReference type="PDB" id="4ZHR">
    <property type="method" value="X-ray"/>
    <property type="resolution" value="2.60 A"/>
    <property type="chains" value="A=588-1147, B=588-1015"/>
</dbReference>
<dbReference type="PDB" id="5HVP">
    <property type="method" value="X-ray"/>
    <property type="resolution" value="2.00 A"/>
    <property type="chains" value="A/B=489-587"/>
</dbReference>
<dbReference type="PDB" id="5JL4">
    <property type="method" value="X-ray"/>
    <property type="resolution" value="1.76 A"/>
    <property type="chains" value="A/B=1197-1359"/>
</dbReference>
<dbReference type="PDB" id="5KGW">
    <property type="method" value="X-ray"/>
    <property type="resolution" value="2.34 A"/>
    <property type="chains" value="A=1197-1359"/>
</dbReference>
<dbReference type="PDB" id="5KGX">
    <property type="method" value="X-ray"/>
    <property type="resolution" value="2.67 A"/>
    <property type="chains" value="A=1197-1359"/>
</dbReference>
<dbReference type="PDB" id="5KRS">
    <property type="method" value="X-ray"/>
    <property type="resolution" value="1.70 A"/>
    <property type="chains" value="A=1204-1354"/>
</dbReference>
<dbReference type="PDB" id="5KRT">
    <property type="method" value="X-ray"/>
    <property type="resolution" value="1.65 A"/>
    <property type="chains" value="A=1204-1354"/>
</dbReference>
<dbReference type="PDB" id="5TEO">
    <property type="method" value="X-ray"/>
    <property type="resolution" value="2.05 A"/>
    <property type="chains" value="A/B=278-377"/>
</dbReference>
<dbReference type="PDB" id="5U1C">
    <property type="method" value="EM"/>
    <property type="resolution" value="3.90 A"/>
    <property type="chains" value="A/B/C/D=1132-1136, A/B/C/D=1148-1435"/>
</dbReference>
<dbReference type="PDB" id="5VCK">
    <property type="method" value="X-ray"/>
    <property type="resolution" value="1.80 A"/>
    <property type="chains" value="A/B=489-587"/>
</dbReference>
<dbReference type="PDB" id="5VEA">
    <property type="method" value="X-ray"/>
    <property type="resolution" value="2.00 A"/>
    <property type="chains" value="A=489-587"/>
</dbReference>
<dbReference type="PDB" id="5VJ3">
    <property type="method" value="X-ray"/>
    <property type="resolution" value="2.00 A"/>
    <property type="chains" value="A=489-587"/>
</dbReference>
<dbReference type="PDB" id="5XN0">
    <property type="method" value="X-ray"/>
    <property type="resolution" value="2.60 A"/>
    <property type="chains" value="A/C=588-1142, B/D=588-1015"/>
</dbReference>
<dbReference type="PDB" id="5XN1">
    <property type="method" value="X-ray"/>
    <property type="resolution" value="2.45 A"/>
    <property type="chains" value="A/C=588-1142, B/D=588-1015"/>
</dbReference>
<dbReference type="PDB" id="5XN2">
    <property type="method" value="X-ray"/>
    <property type="resolution" value="2.38 A"/>
    <property type="chains" value="A/C=588-1142, B/D=588-1015"/>
</dbReference>
<dbReference type="PDB" id="6ES8">
    <property type="method" value="X-ray"/>
    <property type="resolution" value="1.90 A"/>
    <property type="chains" value="A=133-351"/>
</dbReference>
<dbReference type="PDB" id="6IK9">
    <property type="method" value="X-ray"/>
    <property type="resolution" value="2.44 A"/>
    <property type="chains" value="B/D=588-1015"/>
</dbReference>
<dbReference type="PDB" id="6IKA">
    <property type="method" value="X-ray"/>
    <property type="resolution" value="2.60 A"/>
    <property type="chains" value="B/D=588-1015"/>
</dbReference>
<dbReference type="PDB" id="6JCF">
    <property type="method" value="X-ray"/>
    <property type="resolution" value="2.15 A"/>
    <property type="chains" value="A=1198-1359"/>
</dbReference>
<dbReference type="PDB" id="6JCG">
    <property type="method" value="X-ray"/>
    <property type="resolution" value="2.50 A"/>
    <property type="chains" value="A=1198-1359"/>
</dbReference>
<dbReference type="PDB" id="6KDJ">
    <property type="method" value="X-ray"/>
    <property type="resolution" value="2.51 A"/>
    <property type="chains" value="B/D=588-1015"/>
</dbReference>
<dbReference type="PDB" id="6KDK">
    <property type="method" value="X-ray"/>
    <property type="resolution" value="2.56 A"/>
    <property type="chains" value="B/D=588-1015"/>
</dbReference>
<dbReference type="PDB" id="6KDM">
    <property type="method" value="X-ray"/>
    <property type="resolution" value="2.32 A"/>
    <property type="chains" value="B/D=588-1015"/>
</dbReference>
<dbReference type="PDB" id="6KDN">
    <property type="method" value="X-ray"/>
    <property type="resolution" value="2.30 A"/>
    <property type="chains" value="B/D=588-1015"/>
</dbReference>
<dbReference type="PDB" id="6KDO">
    <property type="method" value="X-ray"/>
    <property type="resolution" value="2.57 A"/>
    <property type="chains" value="B/D=588-1015"/>
</dbReference>
<dbReference type="PDB" id="6LMI">
    <property type="method" value="X-ray"/>
    <property type="resolution" value="2.50 A"/>
    <property type="chains" value="A=1197-1359"/>
</dbReference>
<dbReference type="PDB" id="6LMQ">
    <property type="method" value="X-ray"/>
    <property type="resolution" value="2.10 A"/>
    <property type="chains" value="A=1197-1359"/>
</dbReference>
<dbReference type="PDB" id="6MCR">
    <property type="method" value="X-ray"/>
    <property type="resolution" value="1.48 A"/>
    <property type="chains" value="A=489-587"/>
</dbReference>
<dbReference type="PDB" id="6MCS">
    <property type="method" value="X-ray"/>
    <property type="resolution" value="1.52 A"/>
    <property type="chains" value="A=489-587"/>
</dbReference>
<dbReference type="PDB" id="6OOS">
    <property type="method" value="X-ray"/>
    <property type="resolution" value="1.90 A"/>
    <property type="chains" value="A/B/C/D=489-587"/>
</dbReference>
<dbReference type="PDB" id="6OOT">
    <property type="method" value="X-ray"/>
    <property type="resolution" value="1.82 A"/>
    <property type="chains" value="A/B=489-587"/>
</dbReference>
<dbReference type="PDB" id="6OOU">
    <property type="method" value="X-ray"/>
    <property type="resolution" value="2.13 A"/>
    <property type="chains" value="A/B=489-587"/>
</dbReference>
<dbReference type="PDB" id="6OPW">
    <property type="method" value="X-ray"/>
    <property type="resolution" value="2.10 A"/>
    <property type="chains" value="A/B=489-587"/>
</dbReference>
<dbReference type="PDB" id="6OPY">
    <property type="method" value="X-ray"/>
    <property type="resolution" value="2.13 A"/>
    <property type="chains" value="A/B=489-587"/>
</dbReference>
<dbReference type="PDB" id="6OPZ">
    <property type="method" value="X-ray"/>
    <property type="resolution" value="2.20 A"/>
    <property type="chains" value="A/B=489-587"/>
</dbReference>
<dbReference type="PDB" id="6OXO">
    <property type="method" value="X-ray"/>
    <property type="resolution" value="2.00 A"/>
    <property type="chains" value="A/B=489-587"/>
</dbReference>
<dbReference type="PDB" id="6OXP">
    <property type="method" value="X-ray"/>
    <property type="resolution" value="1.97 A"/>
    <property type="chains" value="A/B=489-587"/>
</dbReference>
<dbReference type="PDB" id="6OXQ">
    <property type="method" value="X-ray"/>
    <property type="resolution" value="1.89 A"/>
    <property type="chains" value="A/B=489-587"/>
</dbReference>
<dbReference type="PDB" id="6OXR">
    <property type="method" value="X-ray"/>
    <property type="resolution" value="2.04 A"/>
    <property type="chains" value="A/B=489-587"/>
</dbReference>
<dbReference type="PDB" id="6OXS">
    <property type="method" value="X-ray"/>
    <property type="resolution" value="1.99 A"/>
    <property type="chains" value="A/B=489-587"/>
</dbReference>
<dbReference type="PDB" id="6OXT">
    <property type="method" value="X-ray"/>
    <property type="resolution" value="1.86 A"/>
    <property type="chains" value="A/B=489-587"/>
</dbReference>
<dbReference type="PDB" id="6OXU">
    <property type="method" value="X-ray"/>
    <property type="resolution" value="1.86 A"/>
    <property type="chains" value="A/B=489-587"/>
</dbReference>
<dbReference type="PDB" id="6OXV">
    <property type="method" value="X-ray"/>
    <property type="resolution" value="1.99 A"/>
    <property type="chains" value="A/B=489-587"/>
</dbReference>
<dbReference type="PDB" id="6OXW">
    <property type="method" value="X-ray"/>
    <property type="resolution" value="1.98 A"/>
    <property type="chains" value="A/B=489-587"/>
</dbReference>
<dbReference type="PDB" id="6OXX">
    <property type="method" value="X-ray"/>
    <property type="resolution" value="1.96 A"/>
    <property type="chains" value="A/B=489-587"/>
</dbReference>
<dbReference type="PDB" id="6OXY">
    <property type="method" value="X-ray"/>
    <property type="resolution" value="1.96 A"/>
    <property type="chains" value="A/B=489-587"/>
</dbReference>
<dbReference type="PDB" id="6OXZ">
    <property type="method" value="X-ray"/>
    <property type="resolution" value="1.96 A"/>
    <property type="chains" value="A/B=489-587"/>
</dbReference>
<dbReference type="PDB" id="6OY0">
    <property type="method" value="X-ray"/>
    <property type="resolution" value="2.00 A"/>
    <property type="chains" value="A/B=489-587"/>
</dbReference>
<dbReference type="PDB" id="6OY1">
    <property type="method" value="X-ray"/>
    <property type="resolution" value="2.00 A"/>
    <property type="chains" value="A/B=489-587"/>
</dbReference>
<dbReference type="PDB" id="6OY2">
    <property type="method" value="X-ray"/>
    <property type="resolution" value="1.99 A"/>
    <property type="chains" value="A/B=489-587"/>
</dbReference>
<dbReference type="PDB" id="6OYD">
    <property type="method" value="X-ray"/>
    <property type="resolution" value="1.46 A"/>
    <property type="chains" value="A=489-587"/>
</dbReference>
<dbReference type="PDB" id="6OYR">
    <property type="method" value="X-ray"/>
    <property type="resolution" value="1.54 A"/>
    <property type="chains" value="A=489-587"/>
</dbReference>
<dbReference type="PDB" id="6PJB">
    <property type="method" value="X-ray"/>
    <property type="resolution" value="1.98 A"/>
    <property type="chains" value="A/B=489-587"/>
</dbReference>
<dbReference type="PDB" id="6PJC">
    <property type="method" value="X-ray"/>
    <property type="resolution" value="1.97 A"/>
    <property type="chains" value="A/B/C/D=489-587"/>
</dbReference>
<dbReference type="PDB" id="6PJD">
    <property type="method" value="X-ray"/>
    <property type="resolution" value="1.89 A"/>
    <property type="chains" value="A/B=489-587"/>
</dbReference>
<dbReference type="PDB" id="6PJE">
    <property type="method" value="X-ray"/>
    <property type="resolution" value="1.92 A"/>
    <property type="chains" value="A/B=489-587"/>
</dbReference>
<dbReference type="PDB" id="6PJF">
    <property type="method" value="X-ray"/>
    <property type="resolution" value="1.94 A"/>
    <property type="chains" value="A/B=489-587"/>
</dbReference>
<dbReference type="PDB" id="6PJG">
    <property type="method" value="X-ray"/>
    <property type="resolution" value="1.80 A"/>
    <property type="chains" value="A/B=489-587"/>
</dbReference>
<dbReference type="PDB" id="6PJH">
    <property type="method" value="X-ray"/>
    <property type="resolution" value="1.85 A"/>
    <property type="chains" value="A/B=489-587"/>
</dbReference>
<dbReference type="PDB" id="6PJI">
    <property type="method" value="X-ray"/>
    <property type="resolution" value="1.90 A"/>
    <property type="chains" value="A/B=489-587"/>
</dbReference>
<dbReference type="PDB" id="6PJK">
    <property type="method" value="X-ray"/>
    <property type="resolution" value="2.00 A"/>
    <property type="chains" value="A/B=489-587"/>
</dbReference>
<dbReference type="PDB" id="6PJL">
    <property type="method" value="X-ray"/>
    <property type="resolution" value="1.99 A"/>
    <property type="chains" value="A/B=489-587"/>
</dbReference>
<dbReference type="PDB" id="6PJM">
    <property type="method" value="X-ray"/>
    <property type="resolution" value="1.93 A"/>
    <property type="chains" value="A/B=489-587"/>
</dbReference>
<dbReference type="PDB" id="6PJN">
    <property type="method" value="X-ray"/>
    <property type="resolution" value="1.98 A"/>
    <property type="chains" value="A/B=489-587"/>
</dbReference>
<dbReference type="PDB" id="6PJO">
    <property type="method" value="X-ray"/>
    <property type="resolution" value="1.95 A"/>
    <property type="chains" value="A/B=489-587"/>
</dbReference>
<dbReference type="PDB" id="6PUT">
    <property type="method" value="EM"/>
    <property type="resolution" value="2.90 A"/>
    <property type="chains" value="A/B/C/D=1148-1435"/>
</dbReference>
<dbReference type="PDB" id="6PUW">
    <property type="method" value="EM"/>
    <property type="resolution" value="2.90 A"/>
    <property type="chains" value="A/B/C/D=1148-1435"/>
</dbReference>
<dbReference type="PDB" id="6PUY">
    <property type="method" value="EM"/>
    <property type="resolution" value="2.80 A"/>
    <property type="chains" value="A/B/C/D=1148-1435"/>
</dbReference>
<dbReference type="PDB" id="6PUZ">
    <property type="method" value="EM"/>
    <property type="resolution" value="2.80 A"/>
    <property type="chains" value="A/B/C/D=1148-1435"/>
</dbReference>
<dbReference type="PDB" id="6T6E">
    <property type="method" value="X-ray"/>
    <property type="resolution" value="1.30 A"/>
    <property type="chains" value="A=1366-1417"/>
</dbReference>
<dbReference type="PDB" id="6U8Q">
    <property type="method" value="EM"/>
    <property type="resolution" value="4.67 A"/>
    <property type="chains" value="A/B/C/D/I/J/K/L/M/N/O/P=1148-1435"/>
</dbReference>
<dbReference type="PDB" id="6UM8">
    <property type="method" value="X-ray"/>
    <property type="resolution" value="2.33 A"/>
    <property type="chains" value="A/B=1204-1359"/>
</dbReference>
<dbReference type="PDB" id="6V3K">
    <property type="method" value="EM"/>
    <property type="resolution" value="3.40 A"/>
    <property type="chains" value="A/B/C/D=1148-1435"/>
</dbReference>
<dbReference type="PDB" id="6VDK">
    <property type="method" value="EM"/>
    <property type="resolution" value="4.50 A"/>
    <property type="chains" value="A/B/C/D/I/J/M/P=1148-1435"/>
</dbReference>
<dbReference type="PDB" id="6VQS">
    <property type="method" value="X-ray"/>
    <property type="resolution" value="2.38 A"/>
    <property type="chains" value="A=1197-1359"/>
</dbReference>
<dbReference type="PDB" id="6VRG">
    <property type="method" value="X-ray"/>
    <property type="resolution" value="2.40 A"/>
    <property type="chains" value="A/B/C/D=1148-1359"/>
</dbReference>
<dbReference type="PDB" id="6VX2">
    <property type="method" value="X-ray"/>
    <property type="resolution" value="2.40 A"/>
    <property type="chains" value="A=1197-1359"/>
</dbReference>
<dbReference type="PDB" id="6W0U">
    <property type="method" value="X-ray"/>
    <property type="resolution" value="2.19 A"/>
    <property type="chains" value="A=1197-1359"/>
</dbReference>
<dbReference type="PDB" id="6W42">
    <property type="method" value="X-ray"/>
    <property type="resolution" value="2.26 A"/>
    <property type="chains" value="A=1196-1359"/>
</dbReference>
<dbReference type="PDB" id="6W6T">
    <property type="method" value="X-ray"/>
    <property type="resolution" value="1.84 A"/>
    <property type="chains" value="A/B=489-587"/>
</dbReference>
<dbReference type="PDB" id="7D83">
    <property type="method" value="X-ray"/>
    <property type="resolution" value="2.43 A"/>
    <property type="chains" value="A=1197-1359"/>
</dbReference>
<dbReference type="PDB" id="7DBM">
    <property type="method" value="X-ray"/>
    <property type="resolution" value="2.43 A"/>
    <property type="chains" value="B/D=588-1015"/>
</dbReference>
<dbReference type="PDB" id="7DBN">
    <property type="method" value="X-ray"/>
    <property type="resolution" value="2.67 A"/>
    <property type="chains" value="B/D=588-1015"/>
</dbReference>
<dbReference type="PDB" id="7KE0">
    <property type="method" value="X-ray"/>
    <property type="resolution" value="2.19 A"/>
    <property type="chains" value="A=1197-1359"/>
</dbReference>
<dbReference type="PDB" id="7L1P">
    <property type="method" value="X-ray"/>
    <property type="resolution" value="1.85 A"/>
    <property type="chains" value="A/B=1197-1359"/>
</dbReference>
<dbReference type="PDB" id="7L23">
    <property type="method" value="X-ray"/>
    <property type="resolution" value="2.26 A"/>
    <property type="chains" value="A=1204-1353"/>
</dbReference>
<dbReference type="PDB" id="7LDY">
    <property type="method" value="X-ray"/>
    <property type="resolution" value="1.98 A"/>
    <property type="chains" value="A/B=489-587"/>
</dbReference>
<dbReference type="PDB" id="7LDZ">
    <property type="method" value="X-ray"/>
    <property type="resolution" value="1.86 A"/>
    <property type="chains" value="A/B=489-587"/>
</dbReference>
<dbReference type="PDB" id="7LE0">
    <property type="method" value="X-ray"/>
    <property type="resolution" value="1.95 A"/>
    <property type="chains" value="A/B=489-587"/>
</dbReference>
<dbReference type="PDB" id="7LE1">
    <property type="method" value="X-ray"/>
    <property type="resolution" value="2.00 A"/>
    <property type="chains" value="A/B=489-587"/>
</dbReference>
<dbReference type="PDB" id="7LE2">
    <property type="method" value="X-ray"/>
    <property type="resolution" value="1.97 A"/>
    <property type="chains" value="A/B=489-587"/>
</dbReference>
<dbReference type="PDB" id="7LE3">
    <property type="method" value="X-ray"/>
    <property type="resolution" value="1.87 A"/>
    <property type="chains" value="A/B=489-587"/>
</dbReference>
<dbReference type="PDB" id="7LE4">
    <property type="method" value="X-ray"/>
    <property type="resolution" value="1.99 A"/>
    <property type="chains" value="A/B=489-587"/>
</dbReference>
<dbReference type="PDB" id="7LE5">
    <property type="method" value="X-ray"/>
    <property type="resolution" value="1.86 A"/>
    <property type="chains" value="A/B=489-587"/>
</dbReference>
<dbReference type="PDB" id="7LE6">
    <property type="method" value="X-ray"/>
    <property type="resolution" value="1.96 A"/>
    <property type="chains" value="A/B=489-587"/>
</dbReference>
<dbReference type="PDB" id="7LE7">
    <property type="method" value="X-ray"/>
    <property type="resolution" value="1.98 A"/>
    <property type="chains" value="A/B=489-587"/>
</dbReference>
<dbReference type="PDB" id="7LE8">
    <property type="method" value="X-ray"/>
    <property type="resolution" value="1.64 A"/>
    <property type="chains" value="A/B=489-587"/>
</dbReference>
<dbReference type="PDB" id="7LE9">
    <property type="method" value="X-ray"/>
    <property type="resolution" value="1.80 A"/>
    <property type="chains" value="A/B=489-587"/>
</dbReference>
<dbReference type="PDB" id="7LEA">
    <property type="method" value="X-ray"/>
    <property type="resolution" value="2.00 A"/>
    <property type="chains" value="A/B=489-587"/>
</dbReference>
<dbReference type="PDB" id="7LEB">
    <property type="method" value="X-ray"/>
    <property type="resolution" value="1.89 A"/>
    <property type="chains" value="A/B=489-587"/>
</dbReference>
<dbReference type="PDB" id="7LEC">
    <property type="method" value="X-ray"/>
    <property type="resolution" value="1.94 A"/>
    <property type="chains" value="A/B=489-587"/>
</dbReference>
<dbReference type="PDB" id="7LED">
    <property type="method" value="X-ray"/>
    <property type="resolution" value="2.00 A"/>
    <property type="chains" value="A/B=489-587"/>
</dbReference>
<dbReference type="PDB" id="7LEE">
    <property type="method" value="X-ray"/>
    <property type="resolution" value="1.79 A"/>
    <property type="chains" value="A/B=489-587"/>
</dbReference>
<dbReference type="PDB" id="7LEF">
    <property type="method" value="X-ray"/>
    <property type="resolution" value="1.93 A"/>
    <property type="chains" value="A/B=489-587"/>
</dbReference>
<dbReference type="PDB" id="7LEG">
    <property type="method" value="X-ray"/>
    <property type="resolution" value="1.96 A"/>
    <property type="chains" value="A/B=489-587"/>
</dbReference>
<dbReference type="PDB" id="7LEH">
    <property type="method" value="X-ray"/>
    <property type="resolution" value="2.00 A"/>
    <property type="chains" value="A/B=489-587"/>
</dbReference>
<dbReference type="PDB" id="7LEI">
    <property type="method" value="X-ray"/>
    <property type="resolution" value="1.94 A"/>
    <property type="chains" value="A/B=489-587"/>
</dbReference>
<dbReference type="PDB" id="7LQP">
    <property type="method" value="X-ray"/>
    <property type="resolution" value="2.07 A"/>
    <property type="chains" value="A/B=1204-1359"/>
</dbReference>
<dbReference type="PDB" id="7RQ0">
    <property type="method" value="X-ray"/>
    <property type="resolution" value="1.95 A"/>
    <property type="chains" value="A/B=1197-1359"/>
</dbReference>
<dbReference type="PDB" id="7SIA">
    <property type="method" value="X-ray"/>
    <property type="resolution" value="1.85 A"/>
    <property type="chains" value="A/B=1197-1359"/>
</dbReference>
<dbReference type="PDB" id="7T9H">
    <property type="method" value="X-ray"/>
    <property type="resolution" value="2.53 A"/>
    <property type="chains" value="A/B=1194-1359"/>
</dbReference>
<dbReference type="PDB" id="7T9O">
    <property type="method" value="X-ray"/>
    <property type="resolution" value="1.95 A"/>
    <property type="chains" value="A=1194-1356"/>
</dbReference>
<dbReference type="PDB" id="7U2U">
    <property type="method" value="X-ray"/>
    <property type="resolution" value="1.84 A"/>
    <property type="chains" value="A=1197-1356"/>
</dbReference>
<dbReference type="PDB" id="7UE1">
    <property type="method" value="X-ray"/>
    <property type="resolution" value="3.00 A"/>
    <property type="chains" value="A/B=1197-1359"/>
</dbReference>
<dbReference type="PDB" id="7UOQ">
    <property type="method" value="X-ray"/>
    <property type="resolution" value="1.89 A"/>
    <property type="chains" value="A=1197-1356"/>
</dbReference>
<dbReference type="PDB" id="7WBS">
    <property type="method" value="X-ray"/>
    <property type="resolution" value="1.85 A"/>
    <property type="chains" value="A/B=489-587"/>
</dbReference>
<dbReference type="PDB" id="7WCE">
    <property type="method" value="X-ray"/>
    <property type="resolution" value="1.85 A"/>
    <property type="chains" value="A=1197-1359"/>
</dbReference>
<dbReference type="PDB" id="7WCQ">
    <property type="method" value="X-ray"/>
    <property type="resolution" value="2.01 A"/>
    <property type="chains" value="A=489-587"/>
</dbReference>
<dbReference type="PDB" id="7YF6">
    <property type="method" value="X-ray"/>
    <property type="resolution" value="2.01 A"/>
    <property type="chains" value="A/B=489-587"/>
</dbReference>
<dbReference type="PDB" id="7ZUD">
    <property type="method" value="X-ray"/>
    <property type="resolution" value="2.93 A"/>
    <property type="chains" value="A=133-363"/>
</dbReference>
<dbReference type="PDB" id="8A1P">
    <property type="method" value="X-ray"/>
    <property type="resolution" value="1.80 A"/>
    <property type="chains" value="A/B/C/D=1188-1359"/>
</dbReference>
<dbReference type="PDB" id="8A1Q">
    <property type="method" value="X-ray"/>
    <property type="resolution" value="2.06 A"/>
    <property type="chains" value="A/B/C/D=1188-1359"/>
</dbReference>
<dbReference type="PDB" id="8BUV">
    <property type="method" value="X-ray"/>
    <property type="resolution" value="2.04 A"/>
    <property type="chains" value="A/B/C/D=1188-1359"/>
</dbReference>
<dbReference type="PDB" id="8BV2">
    <property type="method" value="X-ray"/>
    <property type="resolution" value="2.00 A"/>
    <property type="chains" value="A=1197-1359"/>
</dbReference>
<dbReference type="PDB" id="8CBR">
    <property type="method" value="X-ray"/>
    <property type="resolution" value="1.80 A"/>
    <property type="chains" value="A/B/C/D=1188-1359"/>
</dbReference>
<dbReference type="PDB" id="8CBS">
    <property type="method" value="X-ray"/>
    <property type="resolution" value="1.70 A"/>
    <property type="chains" value="A/B/C/D=1188-1359"/>
</dbReference>
<dbReference type="PDB" id="8CBT">
    <property type="method" value="X-ray"/>
    <property type="resolution" value="2.14 A"/>
    <property type="chains" value="A/B/C/D=1188-1359"/>
</dbReference>
<dbReference type="PDB" id="8CBU">
    <property type="method" value="X-ray"/>
    <property type="resolution" value="2.44 A"/>
    <property type="chains" value="A/B/C/D=1188-1359"/>
</dbReference>
<dbReference type="PDB" id="8CBV">
    <property type="method" value="X-ray"/>
    <property type="resolution" value="1.82 A"/>
    <property type="chains" value="A/B/C/D=1188-1359"/>
</dbReference>
<dbReference type="PDB" id="8CT5">
    <property type="method" value="X-ray"/>
    <property type="resolution" value="1.97 A"/>
    <property type="chains" value="A=1197-1357"/>
</dbReference>
<dbReference type="PDB" id="8CT7">
    <property type="method" value="X-ray"/>
    <property type="resolution" value="2.13 A"/>
    <property type="chains" value="A=1197-1357"/>
</dbReference>
<dbReference type="PDB" id="8D3S">
    <property type="method" value="X-ray"/>
    <property type="resolution" value="1.84 A"/>
    <property type="chains" value="A=1197-1359"/>
</dbReference>
<dbReference type="PDB" id="8F22">
    <property type="method" value="X-ray"/>
    <property type="resolution" value="2.50 A"/>
    <property type="chains" value="A/B/C/D/E/F/G/H/I/J/K/L=133-356"/>
</dbReference>
<dbReference type="PDB" id="8FN7">
    <property type="method" value="EM"/>
    <property type="resolution" value="2.80 A"/>
    <property type="chains" value="A/B/C/D/G/H/I/J=1148-1435"/>
</dbReference>
<dbReference type="PDB" id="8FND">
    <property type="method" value="EM"/>
    <property type="resolution" value="3.00 A"/>
    <property type="chains" value="A/B/C/D/G/H/I/J=1148-1435"/>
</dbReference>
<dbReference type="PDB" id="8FNG">
    <property type="method" value="EM"/>
    <property type="resolution" value="2.20 A"/>
    <property type="chains" value="A/B/C/D/G/H/I/J=1148-1435"/>
</dbReference>
<dbReference type="PDB" id="8FNH">
    <property type="method" value="EM"/>
    <property type="resolution" value="2.50 A"/>
    <property type="chains" value="A/B/C/D/G/H/I/J=1148-1435"/>
</dbReference>
<dbReference type="PDB" id="8FNJ">
    <property type="method" value="EM"/>
    <property type="resolution" value="2.40 A"/>
    <property type="chains" value="A/B/C/D/G/H/I/J=1148-1435"/>
</dbReference>
<dbReference type="PDB" id="8FNL">
    <property type="method" value="EM"/>
    <property type="resolution" value="2.80 A"/>
    <property type="chains" value="A/B/C/D/G/H/I/J=1148-1435"/>
</dbReference>
<dbReference type="PDB" id="8FNM">
    <property type="method" value="EM"/>
    <property type="resolution" value="2.80 A"/>
    <property type="chains" value="A/B/C/D/G/H/I/J=1148-1435"/>
</dbReference>
<dbReference type="PDB" id="8FNN">
    <property type="method" value="EM"/>
    <property type="resolution" value="2.70 A"/>
    <property type="chains" value="A/B/C/D/G/H/I/J=1148-1435"/>
</dbReference>
<dbReference type="PDB" id="8FNO">
    <property type="method" value="EM"/>
    <property type="resolution" value="2.50 A"/>
    <property type="chains" value="A/B/C/D/G/H/I/J=1148-1435"/>
</dbReference>
<dbReference type="PDB" id="8FNP">
    <property type="method" value="EM"/>
    <property type="resolution" value="2.20 A"/>
    <property type="chains" value="A/B/C/D/G/H/I/J=1148-1435"/>
</dbReference>
<dbReference type="PDB" id="8FNQ">
    <property type="method" value="EM"/>
    <property type="resolution" value="2.80 A"/>
    <property type="chains" value="A/B/C/D/G/H/I/J=1148-1435"/>
</dbReference>
<dbReference type="PDB" id="8S9Q">
    <property type="method" value="X-ray"/>
    <property type="resolution" value="2.26 A"/>
    <property type="chains" value="A=1197-1359"/>
</dbReference>
<dbReference type="PDB" id="8T52">
    <property type="method" value="X-ray"/>
    <property type="resolution" value="2.07 A"/>
    <property type="chains" value="A=1188-1359"/>
</dbReference>
<dbReference type="PDB" id="8T5A">
    <property type="method" value="X-ray"/>
    <property type="resolution" value="1.93 A"/>
    <property type="chains" value="A=1203-1355"/>
</dbReference>
<dbReference type="PDB" id="8TOV">
    <property type="method" value="X-ray"/>
    <property type="resolution" value="2.70 A"/>
    <property type="chains" value="A/B/C/D/E/F/G/H/I/J/K/L=133-363"/>
</dbReference>
<dbReference type="PDB" id="8TQP">
    <property type="method" value="X-ray"/>
    <property type="resolution" value="2.90 A"/>
    <property type="chains" value="A/B/C/D/E/F/G/H/I/J/K/L=133-363"/>
</dbReference>
<dbReference type="PDB" id="8V23">
    <property type="method" value="X-ray"/>
    <property type="resolution" value="2.00 A"/>
    <property type="chains" value="A=133-278"/>
</dbReference>
<dbReference type="PDB" id="8W09">
    <property type="method" value="EM"/>
    <property type="resolution" value="3.20 A"/>
    <property type="chains" value="A/B/C/D/I/K/L/M=1148-1435"/>
</dbReference>
<dbReference type="PDB" id="8W2R">
    <property type="method" value="EM"/>
    <property type="resolution" value="3.23 A"/>
    <property type="chains" value="A/B/C/D/I/K/L/M=1148-1435"/>
</dbReference>
<dbReference type="PDB" id="8W34">
    <property type="method" value="EM"/>
    <property type="resolution" value="2.83 A"/>
    <property type="chains" value="A/B/C/D/I/K/L/M=1148-1435"/>
</dbReference>
<dbReference type="PDB" id="8WF7">
    <property type="method" value="X-ray"/>
    <property type="resolution" value="1.55 A"/>
    <property type="chains" value="A=1203-1359"/>
</dbReference>
<dbReference type="PDB" id="8X1Z">
    <property type="method" value="X-ray"/>
    <property type="resolution" value="2.62 A"/>
    <property type="chains" value="B/D=588-1015"/>
</dbReference>
<dbReference type="PDB" id="8X20">
    <property type="method" value="X-ray"/>
    <property type="resolution" value="2.70 A"/>
    <property type="chains" value="B/D=588-1015"/>
</dbReference>
<dbReference type="PDB" id="8X21">
    <property type="method" value="X-ray"/>
    <property type="resolution" value="2.33 A"/>
    <property type="chains" value="B/D=588-1015"/>
</dbReference>
<dbReference type="PDB" id="8X22">
    <property type="method" value="X-ray"/>
    <property type="resolution" value="2.31 A"/>
    <property type="chains" value="B/D=588-1015"/>
</dbReference>
<dbReference type="PDB" id="8ZH4">
    <property type="method" value="X-ray"/>
    <property type="resolution" value="1.82 A"/>
    <property type="chains" value="A=1197-1359"/>
</dbReference>
<dbReference type="PDB" id="8ZHA">
    <property type="method" value="X-ray"/>
    <property type="resolution" value="1.95 A"/>
    <property type="chains" value="A=1197-1359"/>
</dbReference>
<dbReference type="PDB" id="9EK1">
    <property type="method" value="EM"/>
    <property type="resolution" value="7.30 A"/>
    <property type="chains" value="A/B/C/D/E/F/G/H/I/J/K/L/M/N/O/P/Q/R/S/T/U/V/W/X/Y/Z/a/b/c/d=2-116"/>
</dbReference>
<dbReference type="PDB" id="9EK2">
    <property type="method" value="EM"/>
    <property type="resolution" value="8.30 A"/>
    <property type="chains" value="A/B/C/D/E/F/G/H/I/J/K/L/M/N/O/P/Q/R/S/T/U/V/W/X/Y/Z/a/b/c/d=2-116"/>
</dbReference>
<dbReference type="PDB" id="9EK3">
    <property type="method" value="EM"/>
    <property type="resolution" value="8.00 A"/>
    <property type="chains" value="A/B/C/D/E/F/G/H/I/J/K/L/M/N/O/P/Q/R/S/T/U/V/W/X/Y/Z/a/b/c/d=2-116"/>
</dbReference>
<dbReference type="PDB" id="9HVP">
    <property type="method" value="X-ray"/>
    <property type="resolution" value="2.80 A"/>
    <property type="chains" value="A/B=489-587"/>
</dbReference>
<dbReference type="PDBsum" id="1A43"/>
<dbReference type="PDBsum" id="1A8O"/>
<dbReference type="PDBsum" id="1AFV"/>
<dbReference type="PDBsum" id="1AK4"/>
<dbReference type="PDBsum" id="1AUM"/>
<dbReference type="PDBsum" id="1B92"/>
<dbReference type="PDBsum" id="1B9D"/>
<dbReference type="PDBsum" id="1B9F"/>
<dbReference type="PDBsum" id="1BAJ"/>
<dbReference type="PDBsum" id="1BHL"/>
<dbReference type="PDBsum" id="1BI4"/>
<dbReference type="PDBsum" id="1BIS"/>
<dbReference type="PDBsum" id="1BIU"/>
<dbReference type="PDBsum" id="1BIZ"/>
<dbReference type="PDBsum" id="1BL3"/>
<dbReference type="PDBsum" id="1GWP"/>
<dbReference type="PDBsum" id="1HIW"/>
<dbReference type="PDBsum" id="1HYV"/>
<dbReference type="PDBsum" id="1HYZ"/>
<dbReference type="PDBsum" id="1ITG"/>
<dbReference type="PDBsum" id="1K6Y"/>
<dbReference type="PDBsum" id="1M9D"/>
<dbReference type="PDBsum" id="1QS4"/>
<dbReference type="PDBsum" id="1UPH"/>
<dbReference type="PDBsum" id="1WJB"/>
<dbReference type="PDBsum" id="1WJD"/>
<dbReference type="PDBsum" id="2B4J"/>
<dbReference type="PDBsum" id="2GOL"/>
<dbReference type="PDBsum" id="2GON"/>
<dbReference type="PDBsum" id="2H3F"/>
<dbReference type="PDBsum" id="2H3I"/>
<dbReference type="PDBsum" id="2H3Q"/>
<dbReference type="PDBsum" id="2H3V"/>
<dbReference type="PDBsum" id="2H3Z"/>
<dbReference type="PDBsum" id="2HMX"/>
<dbReference type="PDBsum" id="2HVP"/>
<dbReference type="PDBsum" id="2ITG"/>
<dbReference type="PDBsum" id="2JPR"/>
<dbReference type="PDBsum" id="2JYG"/>
<dbReference type="PDBsum" id="2JYL"/>
<dbReference type="PDBsum" id="2LF4"/>
<dbReference type="PDBsum" id="2LYA"/>
<dbReference type="PDBsum" id="2LYB"/>
<dbReference type="PDBsum" id="2M3Z"/>
<dbReference type="PDBsum" id="2M8L"/>
<dbReference type="PDBsum" id="2M8N"/>
<dbReference type="PDBsum" id="2M8P"/>
<dbReference type="PDBsum" id="2ONT"/>
<dbReference type="PDBsum" id="2PWM"/>
<dbReference type="PDBsum" id="2PWO"/>
<dbReference type="PDBsum" id="2PXR"/>
<dbReference type="PDBsum" id="2X2D"/>
<dbReference type="PDBsum" id="2XDE"/>
<dbReference type="PDBsum" id="2XV6"/>
<dbReference type="PDBsum" id="2XXM"/>
<dbReference type="PDBsum" id="3AV9"/>
<dbReference type="PDBsum" id="3AVA"/>
<dbReference type="PDBsum" id="3AVB"/>
<dbReference type="PDBsum" id="3AVC"/>
<dbReference type="PDBsum" id="3AVF"/>
<dbReference type="PDBsum" id="3AVG"/>
<dbReference type="PDBsum" id="3AVH"/>
<dbReference type="PDBsum" id="3AVJ"/>
<dbReference type="PDBsum" id="3AVK"/>
<dbReference type="PDBsum" id="3AVL"/>
<dbReference type="PDBsum" id="3AVM"/>
<dbReference type="PDBsum" id="3AVN"/>
<dbReference type="PDBsum" id="3DIK"/>
<dbReference type="PDBsum" id="3DPH"/>
<dbReference type="PDBsum" id="3DS0"/>
<dbReference type="PDBsum" id="3DS1"/>
<dbReference type="PDBsum" id="3DS2"/>
<dbReference type="PDBsum" id="3DS3"/>
<dbReference type="PDBsum" id="3DS4"/>
<dbReference type="PDBsum" id="3DS5"/>
<dbReference type="PDBsum" id="3DTJ"/>
<dbReference type="PDBsum" id="3GV2"/>
<dbReference type="PDBsum" id="3H47"/>
<dbReference type="PDBsum" id="3H4E"/>
<dbReference type="PDBsum" id="3L3U"/>
<dbReference type="PDBsum" id="3L3V"/>
<dbReference type="PDBsum" id="3LPT"/>
<dbReference type="PDBsum" id="3LPU"/>
<dbReference type="PDBsum" id="3LRY"/>
<dbReference type="PDBsum" id="3MGE"/>
<dbReference type="PDBsum" id="3NF6"/>
<dbReference type="PDBsum" id="3NF7"/>
<dbReference type="PDBsum" id="3NF8"/>
<dbReference type="PDBsum" id="3NF9"/>
<dbReference type="PDBsum" id="3NFA"/>
<dbReference type="PDBsum" id="3P05"/>
<dbReference type="PDBsum" id="3P0A"/>
<dbReference type="PDBsum" id="3S85"/>
<dbReference type="PDBsum" id="3WNE"/>
<dbReference type="PDBsum" id="3WNF"/>
<dbReference type="PDBsum" id="3WNG"/>
<dbReference type="PDBsum" id="3WNH"/>
<dbReference type="PDBsum" id="3ZCM"/>
<dbReference type="PDBsum" id="3ZSO"/>
<dbReference type="PDBsum" id="3ZSQ"/>
<dbReference type="PDBsum" id="3ZSR"/>
<dbReference type="PDBsum" id="3ZSV"/>
<dbReference type="PDBsum" id="3ZSW"/>
<dbReference type="PDBsum" id="3ZSX"/>
<dbReference type="PDBsum" id="3ZSY"/>
<dbReference type="PDBsum" id="3ZSZ"/>
<dbReference type="PDBsum" id="3ZT0"/>
<dbReference type="PDBsum" id="3ZT1"/>
<dbReference type="PDBsum" id="3ZT2"/>
<dbReference type="PDBsum" id="3ZT3"/>
<dbReference type="PDBsum" id="3ZT4"/>
<dbReference type="PDBsum" id="4AH9"/>
<dbReference type="PDBsum" id="4AHR"/>
<dbReference type="PDBsum" id="4AHS"/>
<dbReference type="PDBsum" id="4AHT"/>
<dbReference type="PDBsum" id="4AHU"/>
<dbReference type="PDBsum" id="4AHV"/>
<dbReference type="PDBsum" id="4CE9"/>
<dbReference type="PDBsum" id="4CEA"/>
<dbReference type="PDBsum" id="4CEB"/>
<dbReference type="PDBsum" id="4CEC"/>
<dbReference type="PDBsum" id="4CED"/>
<dbReference type="PDBsum" id="4CEE"/>
<dbReference type="PDBsum" id="4CEF"/>
<dbReference type="PDBsum" id="4CEO"/>
<dbReference type="PDBsum" id="4CEQ"/>
<dbReference type="PDBsum" id="4CER"/>
<dbReference type="PDBsum" id="4CES"/>
<dbReference type="PDBsum" id="4CEZ"/>
<dbReference type="PDBsum" id="4CF0"/>
<dbReference type="PDBsum" id="4CF1"/>
<dbReference type="PDBsum" id="4CF2"/>
<dbReference type="PDBsum" id="4CF8"/>
<dbReference type="PDBsum" id="4CF9"/>
<dbReference type="PDBsum" id="4CFA"/>
<dbReference type="PDBsum" id="4CFB"/>
<dbReference type="PDBsum" id="4CFC"/>
<dbReference type="PDBsum" id="4CFD"/>
<dbReference type="PDBsum" id="4CGD"/>
<dbReference type="PDBsum" id="4CGF"/>
<dbReference type="PDBsum" id="4CGG"/>
<dbReference type="PDBsum" id="4CGH"/>
<dbReference type="PDBsum" id="4CGI"/>
<dbReference type="PDBsum" id="4CGJ"/>
<dbReference type="PDBsum" id="4CHN"/>
<dbReference type="PDBsum" id="4CHO"/>
<dbReference type="PDBsum" id="4CHP"/>
<dbReference type="PDBsum" id="4CHQ"/>
<dbReference type="PDBsum" id="4CHY"/>
<dbReference type="PDBsum" id="4CHZ"/>
<dbReference type="PDBsum" id="4CIE"/>
<dbReference type="PDBsum" id="4CIF"/>
<dbReference type="PDBsum" id="4CIG"/>
<dbReference type="PDBsum" id="4CJ3"/>
<dbReference type="PDBsum" id="4CJ4"/>
<dbReference type="PDBsum" id="4CJ5"/>
<dbReference type="PDBsum" id="4CJE"/>
<dbReference type="PDBsum" id="4CJF"/>
<dbReference type="PDBsum" id="4CJK"/>
<dbReference type="PDBsum" id="4CJL"/>
<dbReference type="PDBsum" id="4CJP"/>
<dbReference type="PDBsum" id="4CJQ"/>
<dbReference type="PDBsum" id="4CJR"/>
<dbReference type="PDBsum" id="4CJS"/>
<dbReference type="PDBsum" id="4CJT"/>
<dbReference type="PDBsum" id="4CJU"/>
<dbReference type="PDBsum" id="4CJV"/>
<dbReference type="PDBsum" id="4CJW"/>
<dbReference type="PDBsum" id="4CK1"/>
<dbReference type="PDBsum" id="4CK2"/>
<dbReference type="PDBsum" id="4CK3"/>
<dbReference type="PDBsum" id="4COC"/>
<dbReference type="PDBsum" id="4COP"/>
<dbReference type="PDBsum" id="4DGA"/>
<dbReference type="PDBsum" id="4DGE"/>
<dbReference type="PDBsum" id="4DMN"/>
<dbReference type="PDBsum" id="4E1M"/>
<dbReference type="PDBsum" id="4E1N"/>
<dbReference type="PDBsum" id="4E91"/>
<dbReference type="PDBsum" id="4E92"/>
<dbReference type="PDBsum" id="4GVM"/>
<dbReference type="PDBsum" id="4GW6"/>
<dbReference type="PDBsum" id="4ID1"/>
<dbReference type="PDBsum" id="4IPY"/>
<dbReference type="PDBsum" id="4JLH"/>
<dbReference type="PDBsum" id="4JMU"/>
<dbReference type="PDBsum" id="4LH4"/>
<dbReference type="PDBsum" id="4LH5"/>
<dbReference type="PDBsum" id="4LQW"/>
<dbReference type="PDBsum" id="4NX4"/>
<dbReference type="PDBsum" id="4O0J"/>
<dbReference type="PDBsum" id="4O55"/>
<dbReference type="PDBsum" id="4O5B"/>
<dbReference type="PDBsum" id="4OVL"/>
<dbReference type="PDBsum" id="4PHV"/>
<dbReference type="PDBsum" id="4QNB"/>
<dbReference type="PDBsum" id="4WYM"/>
<dbReference type="PDBsum" id="4Y1C"/>
<dbReference type="PDBsum" id="4Y1D"/>
<dbReference type="PDBsum" id="4ZHR"/>
<dbReference type="PDBsum" id="5HVP"/>
<dbReference type="PDBsum" id="5JL4"/>
<dbReference type="PDBsum" id="5KGW"/>
<dbReference type="PDBsum" id="5KGX"/>
<dbReference type="PDBsum" id="5KRS"/>
<dbReference type="PDBsum" id="5KRT"/>
<dbReference type="PDBsum" id="5TEO"/>
<dbReference type="PDBsum" id="5U1C"/>
<dbReference type="PDBsum" id="5VCK"/>
<dbReference type="PDBsum" id="5VEA"/>
<dbReference type="PDBsum" id="5VJ3"/>
<dbReference type="PDBsum" id="5XN0"/>
<dbReference type="PDBsum" id="5XN1"/>
<dbReference type="PDBsum" id="5XN2"/>
<dbReference type="PDBsum" id="6ES8"/>
<dbReference type="PDBsum" id="6IK9"/>
<dbReference type="PDBsum" id="6IKA"/>
<dbReference type="PDBsum" id="6JCF"/>
<dbReference type="PDBsum" id="6JCG"/>
<dbReference type="PDBsum" id="6KDJ"/>
<dbReference type="PDBsum" id="6KDK"/>
<dbReference type="PDBsum" id="6KDM"/>
<dbReference type="PDBsum" id="6KDN"/>
<dbReference type="PDBsum" id="6KDO"/>
<dbReference type="PDBsum" id="6LMI"/>
<dbReference type="PDBsum" id="6LMQ"/>
<dbReference type="PDBsum" id="6MCR"/>
<dbReference type="PDBsum" id="6MCS"/>
<dbReference type="PDBsum" id="6OOS"/>
<dbReference type="PDBsum" id="6OOT"/>
<dbReference type="PDBsum" id="6OOU"/>
<dbReference type="PDBsum" id="6OPW"/>
<dbReference type="PDBsum" id="6OPY"/>
<dbReference type="PDBsum" id="6OPZ"/>
<dbReference type="PDBsum" id="6OXO"/>
<dbReference type="PDBsum" id="6OXP"/>
<dbReference type="PDBsum" id="6OXQ"/>
<dbReference type="PDBsum" id="6OXR"/>
<dbReference type="PDBsum" id="6OXS"/>
<dbReference type="PDBsum" id="6OXT"/>
<dbReference type="PDBsum" id="6OXU"/>
<dbReference type="PDBsum" id="6OXV"/>
<dbReference type="PDBsum" id="6OXW"/>
<dbReference type="PDBsum" id="6OXX"/>
<dbReference type="PDBsum" id="6OXY"/>
<dbReference type="PDBsum" id="6OXZ"/>
<dbReference type="PDBsum" id="6OY0"/>
<dbReference type="PDBsum" id="6OY1"/>
<dbReference type="PDBsum" id="6OY2"/>
<dbReference type="PDBsum" id="6OYD"/>
<dbReference type="PDBsum" id="6OYR"/>
<dbReference type="PDBsum" id="6PJB"/>
<dbReference type="PDBsum" id="6PJC"/>
<dbReference type="PDBsum" id="6PJD"/>
<dbReference type="PDBsum" id="6PJE"/>
<dbReference type="PDBsum" id="6PJF"/>
<dbReference type="PDBsum" id="6PJG"/>
<dbReference type="PDBsum" id="6PJH"/>
<dbReference type="PDBsum" id="6PJI"/>
<dbReference type="PDBsum" id="6PJK"/>
<dbReference type="PDBsum" id="6PJL"/>
<dbReference type="PDBsum" id="6PJM"/>
<dbReference type="PDBsum" id="6PJN"/>
<dbReference type="PDBsum" id="6PJO"/>
<dbReference type="PDBsum" id="6PUT"/>
<dbReference type="PDBsum" id="6PUW"/>
<dbReference type="PDBsum" id="6PUY"/>
<dbReference type="PDBsum" id="6PUZ"/>
<dbReference type="PDBsum" id="6T6E"/>
<dbReference type="PDBsum" id="6U8Q"/>
<dbReference type="PDBsum" id="6UM8"/>
<dbReference type="PDBsum" id="6V3K"/>
<dbReference type="PDBsum" id="6VDK"/>
<dbReference type="PDBsum" id="6VQS"/>
<dbReference type="PDBsum" id="6VRG"/>
<dbReference type="PDBsum" id="6VX2"/>
<dbReference type="PDBsum" id="6W0U"/>
<dbReference type="PDBsum" id="6W42"/>
<dbReference type="PDBsum" id="6W6T"/>
<dbReference type="PDBsum" id="7D83"/>
<dbReference type="PDBsum" id="7DBM"/>
<dbReference type="PDBsum" id="7DBN"/>
<dbReference type="PDBsum" id="7KE0"/>
<dbReference type="PDBsum" id="7L1P"/>
<dbReference type="PDBsum" id="7L23"/>
<dbReference type="PDBsum" id="7LDY"/>
<dbReference type="PDBsum" id="7LDZ"/>
<dbReference type="PDBsum" id="7LE0"/>
<dbReference type="PDBsum" id="7LE1"/>
<dbReference type="PDBsum" id="7LE2"/>
<dbReference type="PDBsum" id="7LE3"/>
<dbReference type="PDBsum" id="7LE4"/>
<dbReference type="PDBsum" id="7LE5"/>
<dbReference type="PDBsum" id="7LE6"/>
<dbReference type="PDBsum" id="7LE7"/>
<dbReference type="PDBsum" id="7LE8"/>
<dbReference type="PDBsum" id="7LE9"/>
<dbReference type="PDBsum" id="7LEA"/>
<dbReference type="PDBsum" id="7LEB"/>
<dbReference type="PDBsum" id="7LEC"/>
<dbReference type="PDBsum" id="7LED"/>
<dbReference type="PDBsum" id="7LEE"/>
<dbReference type="PDBsum" id="7LEF"/>
<dbReference type="PDBsum" id="7LEG"/>
<dbReference type="PDBsum" id="7LEH"/>
<dbReference type="PDBsum" id="7LEI"/>
<dbReference type="PDBsum" id="7LQP"/>
<dbReference type="PDBsum" id="7RQ0"/>
<dbReference type="PDBsum" id="7SIA"/>
<dbReference type="PDBsum" id="7T9H"/>
<dbReference type="PDBsum" id="7T9O"/>
<dbReference type="PDBsum" id="7U2U"/>
<dbReference type="PDBsum" id="7UE1"/>
<dbReference type="PDBsum" id="7UOQ"/>
<dbReference type="PDBsum" id="7WBS"/>
<dbReference type="PDBsum" id="7WCE"/>
<dbReference type="PDBsum" id="7WCQ"/>
<dbReference type="PDBsum" id="7YF6"/>
<dbReference type="PDBsum" id="7ZUD"/>
<dbReference type="PDBsum" id="8A1P"/>
<dbReference type="PDBsum" id="8A1Q"/>
<dbReference type="PDBsum" id="8BUV"/>
<dbReference type="PDBsum" id="8BV2"/>
<dbReference type="PDBsum" id="8CBR"/>
<dbReference type="PDBsum" id="8CBS"/>
<dbReference type="PDBsum" id="8CBT"/>
<dbReference type="PDBsum" id="8CBU"/>
<dbReference type="PDBsum" id="8CBV"/>
<dbReference type="PDBsum" id="8CT5"/>
<dbReference type="PDBsum" id="8CT7"/>
<dbReference type="PDBsum" id="8D3S"/>
<dbReference type="PDBsum" id="8F22"/>
<dbReference type="PDBsum" id="8FN7"/>
<dbReference type="PDBsum" id="8FND"/>
<dbReference type="PDBsum" id="8FNG"/>
<dbReference type="PDBsum" id="8FNH"/>
<dbReference type="PDBsum" id="8FNJ"/>
<dbReference type="PDBsum" id="8FNL"/>
<dbReference type="PDBsum" id="8FNM"/>
<dbReference type="PDBsum" id="8FNN"/>
<dbReference type="PDBsum" id="8FNO"/>
<dbReference type="PDBsum" id="8FNP"/>
<dbReference type="PDBsum" id="8FNQ"/>
<dbReference type="PDBsum" id="8S9Q"/>
<dbReference type="PDBsum" id="8T52"/>
<dbReference type="PDBsum" id="8T5A"/>
<dbReference type="PDBsum" id="8TOV"/>
<dbReference type="PDBsum" id="8TQP"/>
<dbReference type="PDBsum" id="8V23"/>
<dbReference type="PDBsum" id="8W09"/>
<dbReference type="PDBsum" id="8W2R"/>
<dbReference type="PDBsum" id="8W34"/>
<dbReference type="PDBsum" id="8WF7"/>
<dbReference type="PDBsum" id="8X1Z"/>
<dbReference type="PDBsum" id="8X20"/>
<dbReference type="PDBsum" id="8X21"/>
<dbReference type="PDBsum" id="8X22"/>
<dbReference type="PDBsum" id="8ZH4"/>
<dbReference type="PDBsum" id="8ZHA"/>
<dbReference type="PDBsum" id="9EK1"/>
<dbReference type="PDBsum" id="9EK2"/>
<dbReference type="PDBsum" id="9EK3"/>
<dbReference type="PDBsum" id="9HVP"/>
<dbReference type="BMRB" id="P12497"/>
<dbReference type="EMDB" id="EMD-1529"/>
<dbReference type="EMDB" id="EMD-29307"/>
<dbReference type="EMDB" id="EMD-29309"/>
<dbReference type="EMDB" id="EMD-29312"/>
<dbReference type="EMDB" id="EMD-29313"/>
<dbReference type="EMDB" id="EMD-29315"/>
<dbReference type="EMDB" id="EMD-29317"/>
<dbReference type="EMDB" id="EMD-29318"/>
<dbReference type="EMDB" id="EMD-29319"/>
<dbReference type="EMDB" id="EMD-29320"/>
<dbReference type="EMDB" id="EMD-29321"/>
<dbReference type="EMDB" id="EMD-29322"/>
<dbReference type="EMDB" id="EMD-45364"/>
<dbReference type="SASBDB" id="P12497"/>
<dbReference type="SMR" id="P12497"/>
<dbReference type="IntAct" id="P12497">
    <property type="interactions" value="5"/>
</dbReference>
<dbReference type="BindingDB" id="P12497"/>
<dbReference type="DrugBank" id="DB03118">
    <property type="generic name" value="(2Z)-1-(5-Chloro-1H-indol-3-yl)-3-hydroxy-3-(1H-tetrazol-5-yl)-2-propen-1-one"/>
</dbReference>
<dbReference type="DrugBank" id="DB02086">
    <property type="generic name" value="(3,4-Dihydroxy-Phenyl)-Triphenyl-Arsonium"/>
</dbReference>
<dbReference type="DrugBank" id="DB07575">
    <property type="generic name" value="2,4-DIAMINO-1,5-DIPHENYL-3-HYDROXYPENTANE"/>
</dbReference>
<dbReference type="DrugBank" id="DB02994">
    <property type="generic name" value="Cacodylic acid"/>
</dbReference>
<dbReference type="DrugBank" id="DB08027">
    <property type="generic name" value="CAP-1"/>
</dbReference>
<dbReference type="DrugBank" id="DB03676">
    <property type="generic name" value="Cystein-S-Yl Cacodylate"/>
</dbReference>
<dbReference type="DrugBank" id="DB08231">
    <property type="generic name" value="Myristic acid"/>
</dbReference>
<dbReference type="DrugBank" id="DB03963">
    <property type="generic name" value="S-(Dimethylarsenic)Cysteine"/>
</dbReference>
<dbReference type="MEROPS" id="A02.001"/>
<dbReference type="iPTMnet" id="P12497"/>
<dbReference type="ABCD" id="P12497">
    <property type="antibodies" value="25 sequenced antibodies"/>
</dbReference>
<dbReference type="SABIO-RK" id="P12497"/>
<dbReference type="EvolutionaryTrace" id="P12497"/>
<dbReference type="PRO" id="PR:P12497"/>
<dbReference type="GO" id="GO:0043657">
    <property type="term" value="C:host cell"/>
    <property type="evidence" value="ECO:0007669"/>
    <property type="project" value="GOC"/>
</dbReference>
<dbReference type="GO" id="GO:0042025">
    <property type="term" value="C:host cell nucleus"/>
    <property type="evidence" value="ECO:0007669"/>
    <property type="project" value="UniProtKB-SubCell"/>
</dbReference>
<dbReference type="GO" id="GO:0020002">
    <property type="term" value="C:host cell plasma membrane"/>
    <property type="evidence" value="ECO:0007669"/>
    <property type="project" value="UniProtKB-SubCell"/>
</dbReference>
<dbReference type="GO" id="GO:0072494">
    <property type="term" value="C:host multivesicular body"/>
    <property type="evidence" value="ECO:0007669"/>
    <property type="project" value="UniProtKB-SubCell"/>
</dbReference>
<dbReference type="GO" id="GO:0016020">
    <property type="term" value="C:membrane"/>
    <property type="evidence" value="ECO:0007669"/>
    <property type="project" value="UniProtKB-KW"/>
</dbReference>
<dbReference type="GO" id="GO:0019013">
    <property type="term" value="C:viral nucleocapsid"/>
    <property type="evidence" value="ECO:0007669"/>
    <property type="project" value="UniProtKB-KW"/>
</dbReference>
<dbReference type="GO" id="GO:0055036">
    <property type="term" value="C:virion membrane"/>
    <property type="evidence" value="ECO:0007669"/>
    <property type="project" value="UniProtKB-SubCell"/>
</dbReference>
<dbReference type="GO" id="GO:0004190">
    <property type="term" value="F:aspartic-type endopeptidase activity"/>
    <property type="evidence" value="ECO:0007669"/>
    <property type="project" value="UniProtKB-KW"/>
</dbReference>
<dbReference type="GO" id="GO:0003677">
    <property type="term" value="F:DNA binding"/>
    <property type="evidence" value="ECO:0007669"/>
    <property type="project" value="UniProtKB-KW"/>
</dbReference>
<dbReference type="GO" id="GO:0003887">
    <property type="term" value="F:DNA-directed DNA polymerase activity"/>
    <property type="evidence" value="ECO:0007669"/>
    <property type="project" value="UniProtKB-KW"/>
</dbReference>
<dbReference type="GO" id="GO:0004533">
    <property type="term" value="F:exoribonuclease H activity"/>
    <property type="evidence" value="ECO:0007669"/>
    <property type="project" value="UniProtKB-EC"/>
</dbReference>
<dbReference type="GO" id="GO:0008289">
    <property type="term" value="F:lipid binding"/>
    <property type="evidence" value="ECO:0007669"/>
    <property type="project" value="UniProtKB-KW"/>
</dbReference>
<dbReference type="GO" id="GO:0035613">
    <property type="term" value="F:RNA stem-loop binding"/>
    <property type="evidence" value="ECO:0007669"/>
    <property type="project" value="TreeGrafter"/>
</dbReference>
<dbReference type="GO" id="GO:0003964">
    <property type="term" value="F:RNA-directed DNA polymerase activity"/>
    <property type="evidence" value="ECO:0007669"/>
    <property type="project" value="UniProtKB-KW"/>
</dbReference>
<dbReference type="GO" id="GO:0004523">
    <property type="term" value="F:RNA-DNA hybrid ribonuclease activity"/>
    <property type="evidence" value="ECO:0007669"/>
    <property type="project" value="InterPro"/>
</dbReference>
<dbReference type="GO" id="GO:0005198">
    <property type="term" value="F:structural molecule activity"/>
    <property type="evidence" value="ECO:0007669"/>
    <property type="project" value="InterPro"/>
</dbReference>
<dbReference type="GO" id="GO:0008270">
    <property type="term" value="F:zinc ion binding"/>
    <property type="evidence" value="ECO:0007669"/>
    <property type="project" value="UniProtKB-KW"/>
</dbReference>
<dbReference type="GO" id="GO:0015074">
    <property type="term" value="P:DNA integration"/>
    <property type="evidence" value="ECO:0007669"/>
    <property type="project" value="UniProtKB-KW"/>
</dbReference>
<dbReference type="GO" id="GO:0006310">
    <property type="term" value="P:DNA recombination"/>
    <property type="evidence" value="ECO:0007669"/>
    <property type="project" value="UniProtKB-KW"/>
</dbReference>
<dbReference type="GO" id="GO:0075713">
    <property type="term" value="P:establishment of integrated proviral latency"/>
    <property type="evidence" value="ECO:0007669"/>
    <property type="project" value="UniProtKB-KW"/>
</dbReference>
<dbReference type="GO" id="GO:0006508">
    <property type="term" value="P:proteolysis"/>
    <property type="evidence" value="ECO:0007669"/>
    <property type="project" value="UniProtKB-KW"/>
</dbReference>
<dbReference type="GO" id="GO:0046718">
    <property type="term" value="P:symbiont entry into host cell"/>
    <property type="evidence" value="ECO:0007669"/>
    <property type="project" value="UniProtKB-KW"/>
</dbReference>
<dbReference type="GO" id="GO:0052151">
    <property type="term" value="P:symbiont-mediated activation of host apoptosis"/>
    <property type="evidence" value="ECO:0007669"/>
    <property type="project" value="UniProtKB-KW"/>
</dbReference>
<dbReference type="GO" id="GO:0039657">
    <property type="term" value="P:symbiont-mediated suppression of host gene expression"/>
    <property type="evidence" value="ECO:0007669"/>
    <property type="project" value="UniProtKB-KW"/>
</dbReference>
<dbReference type="GO" id="GO:0044826">
    <property type="term" value="P:viral genome integration into host DNA"/>
    <property type="evidence" value="ECO:0007669"/>
    <property type="project" value="UniProtKB-KW"/>
</dbReference>
<dbReference type="GO" id="GO:0075732">
    <property type="term" value="P:viral penetration into host nucleus"/>
    <property type="evidence" value="ECO:0007669"/>
    <property type="project" value="UniProtKB-KW"/>
</dbReference>
<dbReference type="GO" id="GO:0075523">
    <property type="term" value="P:viral translational frameshifting"/>
    <property type="evidence" value="ECO:0007669"/>
    <property type="project" value="UniProtKB-KW"/>
</dbReference>
<dbReference type="CDD" id="cd05482">
    <property type="entry name" value="HIV_retropepsin_like"/>
    <property type="match status" value="1"/>
</dbReference>
<dbReference type="CDD" id="cd01645">
    <property type="entry name" value="RT_Rtv"/>
    <property type="match status" value="1"/>
</dbReference>
<dbReference type="DisProt" id="DP00410"/>
<dbReference type="FunFam" id="1.10.1200.30:FF:000001">
    <property type="entry name" value="Gag polyprotein"/>
    <property type="match status" value="1"/>
</dbReference>
<dbReference type="FunFam" id="1.10.150.90:FF:000001">
    <property type="entry name" value="Gag polyprotein"/>
    <property type="match status" value="1"/>
</dbReference>
<dbReference type="FunFam" id="1.10.375.10:FF:000001">
    <property type="entry name" value="Gag polyprotein"/>
    <property type="match status" value="1"/>
</dbReference>
<dbReference type="FunFam" id="4.10.60.10:FF:000001">
    <property type="entry name" value="Gag polyprotein"/>
    <property type="match status" value="1"/>
</dbReference>
<dbReference type="FunFam" id="2.40.70.10:FF:000001">
    <property type="entry name" value="Gag-Pol polyprotein"/>
    <property type="match status" value="1"/>
</dbReference>
<dbReference type="FunFam" id="3.30.420.10:FF:000025">
    <property type="entry name" value="Gag-Pol polyprotein"/>
    <property type="match status" value="1"/>
</dbReference>
<dbReference type="FunFam" id="2.30.30.10:FF:000001">
    <property type="entry name" value="POL polyprotein"/>
    <property type="match status" value="1"/>
</dbReference>
<dbReference type="FunFam" id="3.30.420.10:FF:000017">
    <property type="entry name" value="POL polyprotein"/>
    <property type="match status" value="1"/>
</dbReference>
<dbReference type="FunFam" id="3.30.70.270:FF:000016">
    <property type="entry name" value="POL polyprotein"/>
    <property type="match status" value="1"/>
</dbReference>
<dbReference type="Gene3D" id="1.10.10.200">
    <property type="match status" value="1"/>
</dbReference>
<dbReference type="Gene3D" id="1.10.1200.30">
    <property type="match status" value="1"/>
</dbReference>
<dbReference type="Gene3D" id="3.30.70.270">
    <property type="match status" value="3"/>
</dbReference>
<dbReference type="Gene3D" id="2.40.70.10">
    <property type="entry name" value="Acid Proteases"/>
    <property type="match status" value="1"/>
</dbReference>
<dbReference type="Gene3D" id="3.10.10.10">
    <property type="entry name" value="HIV Type 1 Reverse Transcriptase, subunit A, domain 1"/>
    <property type="match status" value="1"/>
</dbReference>
<dbReference type="Gene3D" id="1.10.375.10">
    <property type="entry name" value="Human Immunodeficiency Virus Type 1 Capsid Protein"/>
    <property type="match status" value="1"/>
</dbReference>
<dbReference type="Gene3D" id="1.10.150.90">
    <property type="entry name" value="Immunodeficiency lentiviruses, gag gene matrix protein p17"/>
    <property type="match status" value="1"/>
</dbReference>
<dbReference type="Gene3D" id="2.30.30.10">
    <property type="entry name" value="Integrase, C-terminal domain superfamily, retroviral"/>
    <property type="match status" value="1"/>
</dbReference>
<dbReference type="Gene3D" id="3.30.420.10">
    <property type="entry name" value="Ribonuclease H-like superfamily/Ribonuclease H"/>
    <property type="match status" value="2"/>
</dbReference>
<dbReference type="Gene3D" id="1.20.5.760">
    <property type="entry name" value="Single helix bin"/>
    <property type="match status" value="1"/>
</dbReference>
<dbReference type="Gene3D" id="4.10.60.10">
    <property type="entry name" value="Zinc finger, CCHC-type"/>
    <property type="match status" value="1"/>
</dbReference>
<dbReference type="InterPro" id="IPR001969">
    <property type="entry name" value="Aspartic_peptidase_AS"/>
</dbReference>
<dbReference type="InterPro" id="IPR043502">
    <property type="entry name" value="DNA/RNA_pol_sf"/>
</dbReference>
<dbReference type="InterPro" id="IPR045345">
    <property type="entry name" value="Gag_p24_C"/>
</dbReference>
<dbReference type="InterPro" id="IPR017856">
    <property type="entry name" value="Integrase-like_N"/>
</dbReference>
<dbReference type="InterPro" id="IPR036862">
    <property type="entry name" value="Integrase_C_dom_sf_retrovir"/>
</dbReference>
<dbReference type="InterPro" id="IPR001037">
    <property type="entry name" value="Integrase_C_retrovir"/>
</dbReference>
<dbReference type="InterPro" id="IPR001584">
    <property type="entry name" value="Integrase_cat-core"/>
</dbReference>
<dbReference type="InterPro" id="IPR003308">
    <property type="entry name" value="Integrase_Zn-bd_dom_N"/>
</dbReference>
<dbReference type="InterPro" id="IPR000071">
    <property type="entry name" value="Lentvrl_matrix_N"/>
</dbReference>
<dbReference type="InterPro" id="IPR012344">
    <property type="entry name" value="Matrix_HIV/RSV_N"/>
</dbReference>
<dbReference type="InterPro" id="IPR001995">
    <property type="entry name" value="Peptidase_A2_cat"/>
</dbReference>
<dbReference type="InterPro" id="IPR021109">
    <property type="entry name" value="Peptidase_aspartic_dom_sf"/>
</dbReference>
<dbReference type="InterPro" id="IPR034170">
    <property type="entry name" value="Retropepsin-like_cat_dom"/>
</dbReference>
<dbReference type="InterPro" id="IPR018061">
    <property type="entry name" value="Retropepsins"/>
</dbReference>
<dbReference type="InterPro" id="IPR008916">
    <property type="entry name" value="Retrov_capsid_C"/>
</dbReference>
<dbReference type="InterPro" id="IPR008919">
    <property type="entry name" value="Retrov_capsid_N"/>
</dbReference>
<dbReference type="InterPro" id="IPR010999">
    <property type="entry name" value="Retrovr_matrix"/>
</dbReference>
<dbReference type="InterPro" id="IPR043128">
    <property type="entry name" value="Rev_trsase/Diguanyl_cyclase"/>
</dbReference>
<dbReference type="InterPro" id="IPR012337">
    <property type="entry name" value="RNaseH-like_sf"/>
</dbReference>
<dbReference type="InterPro" id="IPR002156">
    <property type="entry name" value="RNaseH_domain"/>
</dbReference>
<dbReference type="InterPro" id="IPR036397">
    <property type="entry name" value="RNaseH_sf"/>
</dbReference>
<dbReference type="InterPro" id="IPR000477">
    <property type="entry name" value="RT_dom"/>
</dbReference>
<dbReference type="InterPro" id="IPR010659">
    <property type="entry name" value="RVT_connect"/>
</dbReference>
<dbReference type="InterPro" id="IPR010661">
    <property type="entry name" value="RVT_thumb"/>
</dbReference>
<dbReference type="InterPro" id="IPR001878">
    <property type="entry name" value="Znf_CCHC"/>
</dbReference>
<dbReference type="InterPro" id="IPR036875">
    <property type="entry name" value="Znf_CCHC_sf"/>
</dbReference>
<dbReference type="PANTHER" id="PTHR41694">
    <property type="entry name" value="ENDOGENOUS RETROVIRUS GROUP K MEMBER POL PROTEIN"/>
    <property type="match status" value="1"/>
</dbReference>
<dbReference type="PANTHER" id="PTHR41694:SF3">
    <property type="entry name" value="RNA-DIRECTED DNA POLYMERASE-RELATED"/>
    <property type="match status" value="1"/>
</dbReference>
<dbReference type="Pfam" id="PF00540">
    <property type="entry name" value="Gag_p17"/>
    <property type="match status" value="1"/>
</dbReference>
<dbReference type="Pfam" id="PF19317">
    <property type="entry name" value="Gag_p24_C"/>
    <property type="match status" value="1"/>
</dbReference>
<dbReference type="Pfam" id="PF00552">
    <property type="entry name" value="IN_DBD_C"/>
    <property type="match status" value="1"/>
</dbReference>
<dbReference type="Pfam" id="PF02022">
    <property type="entry name" value="Integrase_Zn"/>
    <property type="match status" value="1"/>
</dbReference>
<dbReference type="Pfam" id="PF00075">
    <property type="entry name" value="RNase_H"/>
    <property type="match status" value="1"/>
</dbReference>
<dbReference type="Pfam" id="PF00665">
    <property type="entry name" value="rve"/>
    <property type="match status" value="1"/>
</dbReference>
<dbReference type="Pfam" id="PF00077">
    <property type="entry name" value="RVP"/>
    <property type="match status" value="1"/>
</dbReference>
<dbReference type="Pfam" id="PF00078">
    <property type="entry name" value="RVT_1"/>
    <property type="match status" value="1"/>
</dbReference>
<dbReference type="Pfam" id="PF06815">
    <property type="entry name" value="RVT_connect"/>
    <property type="match status" value="1"/>
</dbReference>
<dbReference type="Pfam" id="PF06817">
    <property type="entry name" value="RVT_thumb"/>
    <property type="match status" value="1"/>
</dbReference>
<dbReference type="Pfam" id="PF00098">
    <property type="entry name" value="zf-CCHC"/>
    <property type="match status" value="2"/>
</dbReference>
<dbReference type="PRINTS" id="PR00234">
    <property type="entry name" value="HIV1MATRIX"/>
</dbReference>
<dbReference type="SMART" id="SM00343">
    <property type="entry name" value="ZnF_C2HC"/>
    <property type="match status" value="2"/>
</dbReference>
<dbReference type="SUPFAM" id="SSF50630">
    <property type="entry name" value="Acid proteases"/>
    <property type="match status" value="1"/>
</dbReference>
<dbReference type="SUPFAM" id="SSF50122">
    <property type="entry name" value="DNA-binding domain of retroviral integrase"/>
    <property type="match status" value="1"/>
</dbReference>
<dbReference type="SUPFAM" id="SSF56672">
    <property type="entry name" value="DNA/RNA polymerases"/>
    <property type="match status" value="1"/>
</dbReference>
<dbReference type="SUPFAM" id="SSF46919">
    <property type="entry name" value="N-terminal Zn binding domain of HIV integrase"/>
    <property type="match status" value="1"/>
</dbReference>
<dbReference type="SUPFAM" id="SSF47836">
    <property type="entry name" value="Retroviral matrix proteins"/>
    <property type="match status" value="1"/>
</dbReference>
<dbReference type="SUPFAM" id="SSF47353">
    <property type="entry name" value="Retrovirus capsid dimerization domain-like"/>
    <property type="match status" value="1"/>
</dbReference>
<dbReference type="SUPFAM" id="SSF47943">
    <property type="entry name" value="Retrovirus capsid protein, N-terminal core domain"/>
    <property type="match status" value="1"/>
</dbReference>
<dbReference type="SUPFAM" id="SSF57756">
    <property type="entry name" value="Retrovirus zinc finger-like domains"/>
    <property type="match status" value="1"/>
</dbReference>
<dbReference type="SUPFAM" id="SSF53098">
    <property type="entry name" value="Ribonuclease H-like"/>
    <property type="match status" value="2"/>
</dbReference>
<dbReference type="PROSITE" id="PS50175">
    <property type="entry name" value="ASP_PROT_RETROV"/>
    <property type="match status" value="1"/>
</dbReference>
<dbReference type="PROSITE" id="PS00141">
    <property type="entry name" value="ASP_PROTEASE"/>
    <property type="match status" value="1"/>
</dbReference>
<dbReference type="PROSITE" id="PS50994">
    <property type="entry name" value="INTEGRASE"/>
    <property type="match status" value="1"/>
</dbReference>
<dbReference type="PROSITE" id="PS51027">
    <property type="entry name" value="INTEGRASE_DBD"/>
    <property type="match status" value="1"/>
</dbReference>
<dbReference type="PROSITE" id="PS50879">
    <property type="entry name" value="RNASE_H_1"/>
    <property type="match status" value="1"/>
</dbReference>
<dbReference type="PROSITE" id="PS50878">
    <property type="entry name" value="RT_POL"/>
    <property type="match status" value="1"/>
</dbReference>
<dbReference type="PROSITE" id="PS50158">
    <property type="entry name" value="ZF_CCHC"/>
    <property type="match status" value="2"/>
</dbReference>
<dbReference type="PROSITE" id="PS50876">
    <property type="entry name" value="ZF_INTEGRASE"/>
    <property type="match status" value="1"/>
</dbReference>
<evidence type="ECO:0000250" key="1"/>
<evidence type="ECO:0000250" key="2">
    <source>
        <dbReference type="UniProtKB" id="P03347"/>
    </source>
</evidence>
<evidence type="ECO:0000250" key="3">
    <source>
        <dbReference type="UniProtKB" id="P03366"/>
    </source>
</evidence>
<evidence type="ECO:0000250" key="4">
    <source>
        <dbReference type="UniProtKB" id="P03367"/>
    </source>
</evidence>
<evidence type="ECO:0000250" key="5">
    <source>
        <dbReference type="UniProtKB" id="P04585"/>
    </source>
</evidence>
<evidence type="ECO:0000255" key="6"/>
<evidence type="ECO:0000255" key="7">
    <source>
        <dbReference type="PROSITE-ProRule" id="PRU00047"/>
    </source>
</evidence>
<evidence type="ECO:0000255" key="8">
    <source>
        <dbReference type="PROSITE-ProRule" id="PRU00275"/>
    </source>
</evidence>
<evidence type="ECO:0000255" key="9">
    <source>
        <dbReference type="PROSITE-ProRule" id="PRU00405"/>
    </source>
</evidence>
<evidence type="ECO:0000255" key="10">
    <source>
        <dbReference type="PROSITE-ProRule" id="PRU00408"/>
    </source>
</evidence>
<evidence type="ECO:0000255" key="11">
    <source>
        <dbReference type="PROSITE-ProRule" id="PRU00450"/>
    </source>
</evidence>
<evidence type="ECO:0000255" key="12">
    <source>
        <dbReference type="PROSITE-ProRule" id="PRU00457"/>
    </source>
</evidence>
<evidence type="ECO:0000255" key="13">
    <source>
        <dbReference type="PROSITE-ProRule" id="PRU00506"/>
    </source>
</evidence>
<evidence type="ECO:0000255" key="14">
    <source>
        <dbReference type="PROSITE-ProRule" id="PRU10094"/>
    </source>
</evidence>
<evidence type="ECO:0000256" key="15">
    <source>
        <dbReference type="SAM" id="MobiDB-lite"/>
    </source>
</evidence>
<evidence type="ECO:0000269" key="16">
    <source>
    </source>
</evidence>
<evidence type="ECO:0000269" key="17">
    <source>
    </source>
</evidence>
<evidence type="ECO:0000269" key="18">
    <source>
    </source>
</evidence>
<evidence type="ECO:0000269" key="19">
    <source>
    </source>
</evidence>
<evidence type="ECO:0000269" key="20">
    <source>
    </source>
</evidence>
<evidence type="ECO:0000269" key="21">
    <source>
    </source>
</evidence>
<evidence type="ECO:0000269" key="22">
    <source>
    </source>
</evidence>
<evidence type="ECO:0000269" key="23">
    <source>
    </source>
</evidence>
<evidence type="ECO:0000269" key="24">
    <source>
    </source>
</evidence>
<evidence type="ECO:0000269" key="25">
    <source>
    </source>
</evidence>
<evidence type="ECO:0000269" key="26">
    <source>
    </source>
</evidence>
<evidence type="ECO:0000269" key="27">
    <source>
    </source>
</evidence>
<evidence type="ECO:0000269" key="28">
    <source>
    </source>
</evidence>
<evidence type="ECO:0000303" key="29">
    <source>
    </source>
</evidence>
<evidence type="ECO:0000305" key="30"/>
<evidence type="ECO:0007829" key="31">
    <source>
        <dbReference type="PDB" id="1B9D"/>
    </source>
</evidence>
<evidence type="ECO:0007829" key="32">
    <source>
        <dbReference type="PDB" id="1UPH"/>
    </source>
</evidence>
<evidence type="ECO:0007829" key="33">
    <source>
        <dbReference type="PDB" id="2H3F"/>
    </source>
</evidence>
<evidence type="ECO:0007829" key="34">
    <source>
        <dbReference type="PDB" id="2H3Q"/>
    </source>
</evidence>
<evidence type="ECO:0007829" key="35">
    <source>
        <dbReference type="PDB" id="2M3Z"/>
    </source>
</evidence>
<evidence type="ECO:0007829" key="36">
    <source>
        <dbReference type="PDB" id="2XDE"/>
    </source>
</evidence>
<evidence type="ECO:0007829" key="37">
    <source>
        <dbReference type="PDB" id="3DS0"/>
    </source>
</evidence>
<evidence type="ECO:0007829" key="38">
    <source>
        <dbReference type="PDB" id="3DS4"/>
    </source>
</evidence>
<evidence type="ECO:0007829" key="39">
    <source>
        <dbReference type="PDB" id="3DS5"/>
    </source>
</evidence>
<evidence type="ECO:0007829" key="40">
    <source>
        <dbReference type="PDB" id="3WNE"/>
    </source>
</evidence>
<evidence type="ECO:0007829" key="41">
    <source>
        <dbReference type="PDB" id="3WNF"/>
    </source>
</evidence>
<evidence type="ECO:0007829" key="42">
    <source>
        <dbReference type="PDB" id="4CF8"/>
    </source>
</evidence>
<evidence type="ECO:0007829" key="43">
    <source>
        <dbReference type="PDB" id="4CJ3"/>
    </source>
</evidence>
<evidence type="ECO:0007829" key="44">
    <source>
        <dbReference type="PDB" id="4E1M"/>
    </source>
</evidence>
<evidence type="ECO:0007829" key="45">
    <source>
        <dbReference type="PDB" id="4E92"/>
    </source>
</evidence>
<evidence type="ECO:0007829" key="46">
    <source>
        <dbReference type="PDB" id="4IPY"/>
    </source>
</evidence>
<evidence type="ECO:0007829" key="47">
    <source>
        <dbReference type="PDB" id="4JMU"/>
    </source>
</evidence>
<evidence type="ECO:0007829" key="48">
    <source>
        <dbReference type="PDB" id="4NX4"/>
    </source>
</evidence>
<evidence type="ECO:0007829" key="49">
    <source>
        <dbReference type="PDB" id="4QNB"/>
    </source>
</evidence>
<evidence type="ECO:0007829" key="50">
    <source>
        <dbReference type="PDB" id="4ZHR"/>
    </source>
</evidence>
<evidence type="ECO:0007829" key="51">
    <source>
        <dbReference type="PDB" id="5JL4"/>
    </source>
</evidence>
<evidence type="ECO:0007829" key="52">
    <source>
        <dbReference type="PDB" id="5XN2"/>
    </source>
</evidence>
<evidence type="ECO:0007829" key="53">
    <source>
        <dbReference type="PDB" id="6KDM"/>
    </source>
</evidence>
<evidence type="ECO:0007829" key="54">
    <source>
        <dbReference type="PDB" id="6KDN"/>
    </source>
</evidence>
<evidence type="ECO:0007829" key="55">
    <source>
        <dbReference type="PDB" id="6OXU"/>
    </source>
</evidence>
<evidence type="ECO:0007829" key="56">
    <source>
        <dbReference type="PDB" id="6OYD"/>
    </source>
</evidence>
<evidence type="ECO:0007829" key="57">
    <source>
        <dbReference type="PDB" id="6PUY"/>
    </source>
</evidence>
<evidence type="ECO:0007829" key="58">
    <source>
        <dbReference type="PDB" id="6T6E"/>
    </source>
</evidence>
<evidence type="ECO:0007829" key="59">
    <source>
        <dbReference type="PDB" id="7DBM"/>
    </source>
</evidence>
<evidence type="ECO:0007829" key="60">
    <source>
        <dbReference type="PDB" id="7LE8"/>
    </source>
</evidence>
<evidence type="ECO:0007829" key="61">
    <source>
        <dbReference type="PDB" id="8FNG"/>
    </source>
</evidence>
<evidence type="ECO:0007829" key="62">
    <source>
        <dbReference type="PDB" id="8FNH"/>
    </source>
</evidence>
<evidence type="ECO:0007829" key="63">
    <source>
        <dbReference type="PDB" id="8FNP"/>
    </source>
</evidence>
<evidence type="ECO:0007829" key="64">
    <source>
        <dbReference type="PDB" id="8TQP"/>
    </source>
</evidence>
<evidence type="ECO:0007829" key="65">
    <source>
        <dbReference type="PDB" id="9HVP"/>
    </source>
</evidence>
<protein>
    <recommendedName>
        <fullName>Gag-Pol polyprotein</fullName>
    </recommendedName>
    <alternativeName>
        <fullName>Pr160Gag-Pol</fullName>
    </alternativeName>
    <component>
        <recommendedName>
            <fullName>Matrix protein p17</fullName>
            <shortName>MA</shortName>
        </recommendedName>
    </component>
    <component>
        <recommendedName>
            <fullName>Capsid protein p24</fullName>
            <shortName>CA</shortName>
        </recommendedName>
    </component>
    <component>
        <recommendedName>
            <fullName evidence="29">Spacer peptide 1</fullName>
            <shortName>SP1</shortName>
        </recommendedName>
        <alternativeName>
            <fullName>p2</fullName>
        </alternativeName>
    </component>
    <component>
        <recommendedName>
            <fullName>Nucleocapsid protein p7</fullName>
            <shortName>NC</shortName>
        </recommendedName>
    </component>
    <component>
        <recommendedName>
            <fullName>Transframe peptide</fullName>
            <shortName>TF</shortName>
        </recommendedName>
    </component>
    <component>
        <recommendedName>
            <fullName>p6-pol</fullName>
            <shortName>p6*</shortName>
        </recommendedName>
    </component>
    <component>
        <recommendedName>
            <fullName>Protease</fullName>
            <ecNumber>3.4.23.16</ecNumber>
        </recommendedName>
        <alternativeName>
            <fullName>PR</fullName>
        </alternativeName>
        <alternativeName>
            <fullName>Retropepsin</fullName>
        </alternativeName>
    </component>
    <component>
        <recommendedName>
            <fullName>Reverse transcriptase/ribonuclease H</fullName>
            <ecNumber>2.7.7.49</ecNumber>
            <ecNumber>2.7.7.7</ecNumber>
            <ecNumber>3.1.26.13</ecNumber>
        </recommendedName>
        <alternativeName>
            <fullName>Exoribonuclease H</fullName>
            <ecNumber>3.1.13.2</ecNumber>
        </alternativeName>
        <alternativeName>
            <fullName>p66 RT</fullName>
        </alternativeName>
    </component>
    <component>
        <recommendedName>
            <fullName>p51 RT</fullName>
        </recommendedName>
    </component>
    <component>
        <recommendedName>
            <fullName>p15</fullName>
        </recommendedName>
    </component>
    <component>
        <recommendedName>
            <fullName>Integrase</fullName>
            <shortName>IN</shortName>
            <ecNumber evidence="5">2.7.7.-</ecNumber>
            <ecNumber evidence="5">3.1.-.-</ecNumber>
        </recommendedName>
    </component>
</protein>
<gene>
    <name type="primary">gag-pol</name>
</gene>
<proteinExistence type="evidence at protein level"/>
<organism>
    <name type="scientific">Human immunodeficiency virus type 1 group M subtype B (isolate NY5)</name>
    <name type="common">HIV-1</name>
    <dbReference type="NCBI Taxonomy" id="11698"/>
    <lineage>
        <taxon>Viruses</taxon>
        <taxon>Riboviria</taxon>
        <taxon>Pararnavirae</taxon>
        <taxon>Artverviricota</taxon>
        <taxon>Revtraviricetes</taxon>
        <taxon>Ortervirales</taxon>
        <taxon>Retroviridae</taxon>
        <taxon>Orthoretrovirinae</taxon>
        <taxon>Lentivirus</taxon>
        <taxon>Human immunodeficiency virus type 1</taxon>
    </lineage>
</organism>
<organismHost>
    <name type="scientific">Homo sapiens</name>
    <name type="common">Human</name>
    <dbReference type="NCBI Taxonomy" id="9606"/>
</organismHost>
<sequence>MGARASVLSGGELDKWEKIRLRPGGKKQYKLKHIVWASRELERFAVNPGLLETSEGCRQILGQLQPSLQTGSEELRSLYNTIAVLYCVHQRIDVKDTKEALDKIEEEQNKSKKKAQQAAADTGNNSQVSQNYPIVQNLQGQMVHQAISPRTLNAWVKVVEEKAFSPEVIPMFSALSEGATPQDLNTMLNTVGGHQAAMQMLKETINEEAAEWDRLHPVHAGPIAPGQMREPRGSDIAGTTSTLQEQIGWMTHNPPIPVGEIYKRWIILGLNKIVRMYSPTSILDIRQGPKEPFRDYVDRFYKTLRAEQASQEVKNWMTETLLVQNANPDCKTILKALGPGATLEEMMTACQGVGGPGHKARVLAEAMSQVTNPATIMIQKGNFRNQRKTVKCFNCGKEGHIAKNCRAPRKKGCWKCGKEGHQMKDCTERQANFLREDLAFPQGKAREFSSEQTRANSPTRRELQVWGRDNNSLSEAGADRQGTVSFSFPQITLWQRPLVTIKIGGQLKEALLDTGADDTVLEEMNLPGRWKPKMIGGIGGFIKVRQYDQILIEICGHKAIGTVLVGPTPVNIIGRNLLTQIGCTLNFPISPIETVPVKLKPGMDGPKVKQWPLTEEKIKALVEICTEMEKEGKISKIGPENPYNTPVFAIKKKDSTKWRKLVDFRELNKRTQDFWEVQLGIPHPAGLKQKKSVTVLDVGDAYFSVPLDKDFRKYTAFTIPSINNETPGIRYQYNVLPQGWKGSPAIFQCSMTKILEPFRKQNPDIVIYQYMDDLYVGSDLEIGQHRTKIEELRQHLLRWGFTTPDKKHQKEPPFLWMGYELHPDKWTVQPIVLPEKDSWTVNDIQKLVGKLNWASQIYAGIKVRQLCKLLRGTKALTEVVPLTEEAELELAENREILKEPVHGVYYDPSKDLIAEIQKQGQGQWTYQIYQEPFKNLKTGKYARMKGAHTNDVKQLTEAVQKIATESIVIWGKTPKFKLPIQKETWEAWWTEYWQATWIPEWEFVNTPPLVKLWYQLEKEPIIGAETFYVDGAANRETKLGKAGYVTDRGRQKVVPLTDTTNQKTELQAIHLALQDSGLEVNIVTDSQYALGIIQAQPDKSESELVSQIIEQLIKKEKVYLAWVPAHKGIGGNEQVDGLVSAGIRKVLFLDGIDKAQEEHEKYHSNWRAMASDFNLPPVVAKEIVASCDKCQLKGEAMHGQVDCSPGIWQLDCTHLEGKVILVAVHVASGYIEAEVIPAETGQETAYFLLKLAGRWPVKTVHTDNGSNFTSTTVKAACWWAGIKQEFGIPYNPQSQGVIESMNKELKKIIGQVRDQAEHLKTAVQMAVFIHNFKRKGGIGGYSAGERIVDIIATDIQTKELQKQITKIQNFRVYYRDSRDPVWKGPAKLLWKGEGAVVIQDNSDIKVVPRRKAKIIRDYGKQMAGDDCVASRQDED</sequence>